<dbReference type="EMBL" id="AF386649">
    <property type="protein sequence ID" value="AAL26987.1"/>
    <property type="molecule type" value="mRNA"/>
</dbReference>
<dbReference type="EMBL" id="Y12059">
    <property type="protein sequence ID" value="CAA72780.1"/>
    <property type="molecule type" value="mRNA"/>
</dbReference>
<dbReference type="EMBL" id="AC004798">
    <property type="protein sequence ID" value="AAC27978.1"/>
    <property type="status" value="ALT_INIT"/>
    <property type="molecule type" value="Genomic_DNA"/>
</dbReference>
<dbReference type="EMBL" id="AC003111">
    <property type="status" value="NOT_ANNOTATED_CDS"/>
    <property type="molecule type" value="Genomic_DNA"/>
</dbReference>
<dbReference type="EMBL" id="AC005776">
    <property type="status" value="NOT_ANNOTATED_CDS"/>
    <property type="molecule type" value="Genomic_DNA"/>
</dbReference>
<dbReference type="EMBL" id="CH471106">
    <property type="protein sequence ID" value="EAW84470.1"/>
    <property type="molecule type" value="Genomic_DNA"/>
</dbReference>
<dbReference type="EMBL" id="BC035266">
    <property type="protein sequence ID" value="AAH35266.1"/>
    <property type="molecule type" value="mRNA"/>
</dbReference>
<dbReference type="EMBL" id="AY166680">
    <property type="protein sequence ID" value="AAO22237.1"/>
    <property type="status" value="ALT_TERM"/>
    <property type="molecule type" value="mRNA"/>
</dbReference>
<dbReference type="CCDS" id="CCDS12328.1">
    <molecule id="O60885-1"/>
</dbReference>
<dbReference type="CCDS" id="CCDS46004.1">
    <molecule id="O60885-2"/>
</dbReference>
<dbReference type="CCDS" id="CCDS82307.1">
    <molecule id="O60885-3"/>
</dbReference>
<dbReference type="RefSeq" id="NP_001317313.1">
    <molecule id="O60885-3"/>
    <property type="nucleotide sequence ID" value="NM_001330384.2"/>
</dbReference>
<dbReference type="RefSeq" id="NP_001366220.1">
    <molecule id="O60885-1"/>
    <property type="nucleotide sequence ID" value="NM_001379291.1"/>
</dbReference>
<dbReference type="RefSeq" id="NP_001366221.1">
    <molecule id="O60885-2"/>
    <property type="nucleotide sequence ID" value="NM_001379292.1"/>
</dbReference>
<dbReference type="RefSeq" id="NP_055114.1">
    <molecule id="O60885-2"/>
    <property type="nucleotide sequence ID" value="NM_014299.3"/>
</dbReference>
<dbReference type="RefSeq" id="NP_490597.1">
    <molecule id="O60885-1"/>
    <property type="nucleotide sequence ID" value="NM_058243.3"/>
</dbReference>
<dbReference type="RefSeq" id="XP_011526156.1">
    <property type="nucleotide sequence ID" value="XM_011527854.1"/>
</dbReference>
<dbReference type="RefSeq" id="XP_011526158.1">
    <property type="nucleotide sequence ID" value="XM_011527856.2"/>
</dbReference>
<dbReference type="RefSeq" id="XP_047294496.1">
    <molecule id="O60885-1"/>
    <property type="nucleotide sequence ID" value="XM_047438540.1"/>
</dbReference>
<dbReference type="RefSeq" id="XP_047294498.1">
    <molecule id="O60885-3"/>
    <property type="nucleotide sequence ID" value="XM_047438542.1"/>
</dbReference>
<dbReference type="RefSeq" id="XP_047294499.1">
    <molecule id="O60885-2"/>
    <property type="nucleotide sequence ID" value="XM_047438543.1"/>
</dbReference>
<dbReference type="RefSeq" id="XP_047294500.1">
    <molecule id="O60885-2"/>
    <property type="nucleotide sequence ID" value="XM_047438544.1"/>
</dbReference>
<dbReference type="RefSeq" id="XP_054176374.1">
    <molecule id="O60885-1"/>
    <property type="nucleotide sequence ID" value="XM_054320399.1"/>
</dbReference>
<dbReference type="RefSeq" id="XP_054176376.1">
    <molecule id="O60885-3"/>
    <property type="nucleotide sequence ID" value="XM_054320401.1"/>
</dbReference>
<dbReference type="RefSeq" id="XP_054176377.1">
    <molecule id="O60885-2"/>
    <property type="nucleotide sequence ID" value="XM_054320402.1"/>
</dbReference>
<dbReference type="RefSeq" id="XP_054176378.1">
    <molecule id="O60885-2"/>
    <property type="nucleotide sequence ID" value="XM_054320403.1"/>
</dbReference>
<dbReference type="PDB" id="2I8N">
    <property type="method" value="NMR"/>
    <property type="chains" value="A=352-457"/>
</dbReference>
<dbReference type="PDB" id="2LSP">
    <property type="method" value="NMR"/>
    <property type="chains" value="B=333-460"/>
</dbReference>
<dbReference type="PDB" id="2MJV">
    <property type="method" value="NMR"/>
    <property type="chains" value="B=333-460"/>
</dbReference>
<dbReference type="PDB" id="2N3K">
    <property type="method" value="NMR"/>
    <property type="chains" value="A=600-678"/>
</dbReference>
<dbReference type="PDB" id="2NCZ">
    <property type="method" value="NMR"/>
    <property type="chains" value="A=601-683"/>
</dbReference>
<dbReference type="PDB" id="2ND0">
    <property type="method" value="NMR"/>
    <property type="chains" value="A=601-683"/>
</dbReference>
<dbReference type="PDB" id="2ND1">
    <property type="method" value="NMR"/>
    <property type="chains" value="A=601-683"/>
</dbReference>
<dbReference type="PDB" id="2NNU">
    <property type="method" value="X-ray"/>
    <property type="resolution" value="1.59 A"/>
    <property type="chains" value="B=1343-1362"/>
</dbReference>
<dbReference type="PDB" id="2OSS">
    <property type="method" value="X-ray"/>
    <property type="resolution" value="1.35 A"/>
    <property type="chains" value="A=44-168"/>
</dbReference>
<dbReference type="PDB" id="2OUO">
    <property type="method" value="X-ray"/>
    <property type="resolution" value="1.89 A"/>
    <property type="chains" value="A=333-460"/>
</dbReference>
<dbReference type="PDB" id="2YEL">
    <property type="method" value="X-ray"/>
    <property type="resolution" value="1.65 A"/>
    <property type="chains" value="A=44-168"/>
</dbReference>
<dbReference type="PDB" id="2YEM">
    <property type="method" value="X-ray"/>
    <property type="resolution" value="2.30 A"/>
    <property type="chains" value="A/B=333-460"/>
</dbReference>
<dbReference type="PDB" id="3MXF">
    <property type="method" value="X-ray"/>
    <property type="resolution" value="1.60 A"/>
    <property type="chains" value="A=42-168"/>
</dbReference>
<dbReference type="PDB" id="3P5O">
    <property type="method" value="X-ray"/>
    <property type="resolution" value="1.60 A"/>
    <property type="chains" value="A=44-168"/>
</dbReference>
<dbReference type="PDB" id="3SVF">
    <property type="method" value="X-ray"/>
    <property type="resolution" value="1.98 A"/>
    <property type="chains" value="A=44-168"/>
</dbReference>
<dbReference type="PDB" id="3SVG">
    <property type="method" value="X-ray"/>
    <property type="resolution" value="1.68 A"/>
    <property type="chains" value="A=44-168"/>
</dbReference>
<dbReference type="PDB" id="3U5J">
    <property type="method" value="X-ray"/>
    <property type="resolution" value="1.60 A"/>
    <property type="chains" value="A=44-168"/>
</dbReference>
<dbReference type="PDB" id="3U5K">
    <property type="method" value="X-ray"/>
    <property type="resolution" value="1.80 A"/>
    <property type="chains" value="A/B/C/D=44-168"/>
</dbReference>
<dbReference type="PDB" id="3U5L">
    <property type="method" value="X-ray"/>
    <property type="resolution" value="1.39 A"/>
    <property type="chains" value="A=44-168"/>
</dbReference>
<dbReference type="PDB" id="3UVW">
    <property type="method" value="X-ray"/>
    <property type="resolution" value="1.37 A"/>
    <property type="chains" value="A=44-168"/>
</dbReference>
<dbReference type="PDB" id="3UVX">
    <property type="method" value="X-ray"/>
    <property type="resolution" value="1.91 A"/>
    <property type="chains" value="A=44-168"/>
</dbReference>
<dbReference type="PDB" id="3UVY">
    <property type="method" value="X-ray"/>
    <property type="resolution" value="2.02 A"/>
    <property type="chains" value="A=44-168"/>
</dbReference>
<dbReference type="PDB" id="3UW9">
    <property type="method" value="X-ray"/>
    <property type="resolution" value="2.30 A"/>
    <property type="chains" value="A/B/C/D=44-168"/>
</dbReference>
<dbReference type="PDB" id="3ZYU">
    <property type="method" value="X-ray"/>
    <property type="resolution" value="1.50 A"/>
    <property type="chains" value="A/B=44-168"/>
</dbReference>
<dbReference type="PDB" id="4A9L">
    <property type="method" value="X-ray"/>
    <property type="resolution" value="1.60 A"/>
    <property type="chains" value="A=44-168"/>
</dbReference>
<dbReference type="PDB" id="4BJX">
    <property type="method" value="X-ray"/>
    <property type="resolution" value="1.59 A"/>
    <property type="chains" value="A=44-168"/>
</dbReference>
<dbReference type="PDB" id="4BW1">
    <property type="method" value="X-ray"/>
    <property type="resolution" value="1.40 A"/>
    <property type="chains" value="A=44-168"/>
</dbReference>
<dbReference type="PDB" id="4BW2">
    <property type="method" value="X-ray"/>
    <property type="resolution" value="1.92 A"/>
    <property type="chains" value="A=44-168"/>
</dbReference>
<dbReference type="PDB" id="4BW3">
    <property type="method" value="X-ray"/>
    <property type="resolution" value="1.50 A"/>
    <property type="chains" value="A=44-168"/>
</dbReference>
<dbReference type="PDB" id="4BW4">
    <property type="method" value="X-ray"/>
    <property type="resolution" value="1.67 A"/>
    <property type="chains" value="A=44-168"/>
</dbReference>
<dbReference type="PDB" id="4C66">
    <property type="method" value="X-ray"/>
    <property type="resolution" value="1.87 A"/>
    <property type="chains" value="A=44-167"/>
</dbReference>
<dbReference type="PDB" id="4C67">
    <property type="method" value="X-ray"/>
    <property type="resolution" value="1.55 A"/>
    <property type="chains" value="A=44-168"/>
</dbReference>
<dbReference type="PDB" id="4CFK">
    <property type="method" value="X-ray"/>
    <property type="resolution" value="1.55 A"/>
    <property type="chains" value="A=44-168"/>
</dbReference>
<dbReference type="PDB" id="4CFL">
    <property type="method" value="X-ray"/>
    <property type="resolution" value="1.32 A"/>
    <property type="chains" value="A=44-168"/>
</dbReference>
<dbReference type="PDB" id="4CL9">
    <property type="method" value="X-ray"/>
    <property type="resolution" value="1.40 A"/>
    <property type="chains" value="A=44-168"/>
</dbReference>
<dbReference type="PDB" id="4CLB">
    <property type="method" value="X-ray"/>
    <property type="resolution" value="1.60 A"/>
    <property type="chains" value="A=44-168"/>
</dbReference>
<dbReference type="PDB" id="4DON">
    <property type="method" value="X-ray"/>
    <property type="resolution" value="1.52 A"/>
    <property type="chains" value="A=44-166"/>
</dbReference>
<dbReference type="PDB" id="4E96">
    <property type="method" value="X-ray"/>
    <property type="resolution" value="1.92 A"/>
    <property type="chains" value="A=44-168"/>
</dbReference>
<dbReference type="PDB" id="4F3I">
    <property type="method" value="X-ray"/>
    <property type="resolution" value="1.40 A"/>
    <property type="chains" value="A=44-168"/>
</dbReference>
<dbReference type="PDB" id="4GPJ">
    <property type="method" value="X-ray"/>
    <property type="resolution" value="1.60 A"/>
    <property type="chains" value="A=44-168"/>
</dbReference>
<dbReference type="PDB" id="4HBV">
    <property type="method" value="X-ray"/>
    <property type="resolution" value="1.63 A"/>
    <property type="chains" value="A=42-168"/>
</dbReference>
<dbReference type="PDB" id="4HBW">
    <property type="method" value="X-ray"/>
    <property type="resolution" value="1.69 A"/>
    <property type="chains" value="A=42-168"/>
</dbReference>
<dbReference type="PDB" id="4HBX">
    <property type="method" value="X-ray"/>
    <property type="resolution" value="1.62 A"/>
    <property type="chains" value="A=42-168"/>
</dbReference>
<dbReference type="PDB" id="4HBY">
    <property type="method" value="X-ray"/>
    <property type="resolution" value="1.59 A"/>
    <property type="chains" value="A=44-168"/>
</dbReference>
<dbReference type="PDB" id="4HXK">
    <property type="method" value="X-ray"/>
    <property type="resolution" value="1.61 A"/>
    <property type="chains" value="A=44-167"/>
</dbReference>
<dbReference type="PDB" id="4HXL">
    <property type="method" value="X-ray"/>
    <property type="resolution" value="1.52 A"/>
    <property type="chains" value="A=44-167"/>
</dbReference>
<dbReference type="PDB" id="4HXM">
    <property type="method" value="X-ray"/>
    <property type="resolution" value="1.50 A"/>
    <property type="chains" value="A=44-166"/>
</dbReference>
<dbReference type="PDB" id="4HXN">
    <property type="method" value="X-ray"/>
    <property type="resolution" value="1.49 A"/>
    <property type="chains" value="A=44-167"/>
</dbReference>
<dbReference type="PDB" id="4HXO">
    <property type="method" value="X-ray"/>
    <property type="resolution" value="1.76 A"/>
    <property type="chains" value="A=44-167"/>
</dbReference>
<dbReference type="PDB" id="4HXP">
    <property type="method" value="X-ray"/>
    <property type="resolution" value="1.73 A"/>
    <property type="chains" value="A=44-166"/>
</dbReference>
<dbReference type="PDB" id="4HXR">
    <property type="method" value="X-ray"/>
    <property type="resolution" value="1.53 A"/>
    <property type="chains" value="A=44-167"/>
</dbReference>
<dbReference type="PDB" id="4HXS">
    <property type="method" value="X-ray"/>
    <property type="resolution" value="1.43 A"/>
    <property type="chains" value="A=44-166"/>
</dbReference>
<dbReference type="PDB" id="4IOO">
    <property type="method" value="X-ray"/>
    <property type="resolution" value="1.25 A"/>
    <property type="chains" value="A=44-168"/>
</dbReference>
<dbReference type="PDB" id="4IOQ">
    <property type="method" value="X-ray"/>
    <property type="resolution" value="1.50 A"/>
    <property type="chains" value="A=44-168"/>
</dbReference>
<dbReference type="PDB" id="4IOR">
    <property type="method" value="X-ray"/>
    <property type="resolution" value="1.40 A"/>
    <property type="chains" value="A=44-168"/>
</dbReference>
<dbReference type="PDB" id="4J0R">
    <property type="method" value="X-ray"/>
    <property type="resolution" value="1.72 A"/>
    <property type="chains" value="A=44-168"/>
</dbReference>
<dbReference type="PDB" id="4J0S">
    <property type="method" value="X-ray"/>
    <property type="resolution" value="1.84 A"/>
    <property type="chains" value="A=44-168"/>
</dbReference>
<dbReference type="PDB" id="4J3I">
    <property type="method" value="X-ray"/>
    <property type="resolution" value="1.24 A"/>
    <property type="chains" value="A=44-168"/>
</dbReference>
<dbReference type="PDB" id="4KV1">
    <property type="method" value="X-ray"/>
    <property type="resolution" value="1.50 A"/>
    <property type="chains" value="A/B=41-168"/>
</dbReference>
<dbReference type="PDB" id="4KV4">
    <property type="method" value="X-ray"/>
    <property type="resolution" value="2.00 A"/>
    <property type="chains" value="A=351-459"/>
</dbReference>
<dbReference type="PDB" id="4LR6">
    <property type="method" value="X-ray"/>
    <property type="resolution" value="1.29 A"/>
    <property type="chains" value="A=42-168"/>
</dbReference>
<dbReference type="PDB" id="4LRG">
    <property type="method" value="X-ray"/>
    <property type="resolution" value="2.21 A"/>
    <property type="chains" value="A=42-168"/>
</dbReference>
<dbReference type="PDB" id="4LYI">
    <property type="method" value="X-ray"/>
    <property type="resolution" value="1.30 A"/>
    <property type="chains" value="A=44-168"/>
</dbReference>
<dbReference type="PDB" id="4LYS">
    <property type="method" value="X-ray"/>
    <property type="resolution" value="1.83 A"/>
    <property type="chains" value="A=44-168"/>
</dbReference>
<dbReference type="PDB" id="4LYW">
    <property type="method" value="X-ray"/>
    <property type="resolution" value="1.95 A"/>
    <property type="chains" value="A=44-168"/>
</dbReference>
<dbReference type="PDB" id="4LZR">
    <property type="method" value="X-ray"/>
    <property type="resolution" value="1.85 A"/>
    <property type="chains" value="A=44-168"/>
</dbReference>
<dbReference type="PDB" id="4LZS">
    <property type="method" value="X-ray"/>
    <property type="resolution" value="2.20 A"/>
    <property type="chains" value="A=44-168"/>
</dbReference>
<dbReference type="PDB" id="4MEN">
    <property type="method" value="X-ray"/>
    <property type="resolution" value="1.81 A"/>
    <property type="chains" value="A=44-168"/>
</dbReference>
<dbReference type="PDB" id="4MEO">
    <property type="method" value="X-ray"/>
    <property type="resolution" value="1.72 A"/>
    <property type="chains" value="A=44-168"/>
</dbReference>
<dbReference type="PDB" id="4MEP">
    <property type="method" value="X-ray"/>
    <property type="resolution" value="1.85 A"/>
    <property type="chains" value="A=44-168"/>
</dbReference>
<dbReference type="PDB" id="4MEQ">
    <property type="method" value="X-ray"/>
    <property type="resolution" value="1.77 A"/>
    <property type="chains" value="A=44-168"/>
</dbReference>
<dbReference type="PDB" id="4MR3">
    <property type="method" value="X-ray"/>
    <property type="resolution" value="1.68 A"/>
    <property type="chains" value="A=44-168"/>
</dbReference>
<dbReference type="PDB" id="4MR4">
    <property type="method" value="X-ray"/>
    <property type="resolution" value="1.66 A"/>
    <property type="chains" value="A=44-168"/>
</dbReference>
<dbReference type="PDB" id="4NQM">
    <property type="method" value="X-ray"/>
    <property type="resolution" value="1.58 A"/>
    <property type="chains" value="A=44-168"/>
</dbReference>
<dbReference type="PDB" id="4NR8">
    <property type="method" value="X-ray"/>
    <property type="resolution" value="1.64 A"/>
    <property type="chains" value="A=44-168"/>
</dbReference>
<dbReference type="PDB" id="4NUC">
    <property type="method" value="X-ray"/>
    <property type="resolution" value="1.40 A"/>
    <property type="chains" value="A=44-168"/>
</dbReference>
<dbReference type="PDB" id="4NUD">
    <property type="method" value="X-ray"/>
    <property type="resolution" value="1.20 A"/>
    <property type="chains" value="A=44-168"/>
</dbReference>
<dbReference type="PDB" id="4NUE">
    <property type="method" value="X-ray"/>
    <property type="resolution" value="1.30 A"/>
    <property type="chains" value="A=44-168"/>
</dbReference>
<dbReference type="PDB" id="4O70">
    <property type="method" value="X-ray"/>
    <property type="resolution" value="1.55 A"/>
    <property type="chains" value="A/B=44-168"/>
</dbReference>
<dbReference type="PDB" id="4O71">
    <property type="method" value="X-ray"/>
    <property type="resolution" value="1.36 A"/>
    <property type="chains" value="A/B=44-168"/>
</dbReference>
<dbReference type="PDB" id="4O72">
    <property type="method" value="X-ray"/>
    <property type="resolution" value="1.40 A"/>
    <property type="chains" value="A=44-168"/>
</dbReference>
<dbReference type="PDB" id="4O74">
    <property type="method" value="X-ray"/>
    <property type="resolution" value="1.45 A"/>
    <property type="chains" value="A/B=44-168"/>
</dbReference>
<dbReference type="PDB" id="4O75">
    <property type="method" value="X-ray"/>
    <property type="resolution" value="1.55 A"/>
    <property type="chains" value="A=44-168"/>
</dbReference>
<dbReference type="PDB" id="4O76">
    <property type="method" value="X-ray"/>
    <property type="resolution" value="1.70 A"/>
    <property type="chains" value="A/B/C/D=44-168"/>
</dbReference>
<dbReference type="PDB" id="4O77">
    <property type="method" value="X-ray"/>
    <property type="resolution" value="2.00 A"/>
    <property type="chains" value="A/B=44-168"/>
</dbReference>
<dbReference type="PDB" id="4O78">
    <property type="method" value="X-ray"/>
    <property type="resolution" value="1.34 A"/>
    <property type="chains" value="A=44-168"/>
</dbReference>
<dbReference type="PDB" id="4O7A">
    <property type="method" value="X-ray"/>
    <property type="resolution" value="1.34 A"/>
    <property type="chains" value="A=44-168"/>
</dbReference>
<dbReference type="PDB" id="4O7B">
    <property type="method" value="X-ray"/>
    <property type="resolution" value="1.50 A"/>
    <property type="chains" value="A=44-168"/>
</dbReference>
<dbReference type="PDB" id="4O7C">
    <property type="method" value="X-ray"/>
    <property type="resolution" value="1.55 A"/>
    <property type="chains" value="A=44-168"/>
</dbReference>
<dbReference type="PDB" id="4O7E">
    <property type="method" value="X-ray"/>
    <property type="resolution" value="1.85 A"/>
    <property type="chains" value="A/B=44-168"/>
</dbReference>
<dbReference type="PDB" id="4O7F">
    <property type="method" value="X-ray"/>
    <property type="resolution" value="1.80 A"/>
    <property type="chains" value="A/B=44-168"/>
</dbReference>
<dbReference type="PDB" id="4OGI">
    <property type="method" value="X-ray"/>
    <property type="resolution" value="1.73 A"/>
    <property type="chains" value="A/B=44-168"/>
</dbReference>
<dbReference type="PDB" id="4OGJ">
    <property type="method" value="X-ray"/>
    <property type="resolution" value="1.65 A"/>
    <property type="chains" value="A/B=44-168"/>
</dbReference>
<dbReference type="PDB" id="4PCE">
    <property type="method" value="X-ray"/>
    <property type="resolution" value="1.29 A"/>
    <property type="chains" value="A=44-168"/>
</dbReference>
<dbReference type="PDB" id="4PCI">
    <property type="method" value="X-ray"/>
    <property type="resolution" value="1.25 A"/>
    <property type="chains" value="A=44-168"/>
</dbReference>
<dbReference type="PDB" id="4PS5">
    <property type="method" value="X-ray"/>
    <property type="resolution" value="1.40 A"/>
    <property type="chains" value="A/B=44-168"/>
</dbReference>
<dbReference type="PDB" id="4QB3">
    <property type="method" value="X-ray"/>
    <property type="resolution" value="0.94 A"/>
    <property type="chains" value="A=44-168"/>
</dbReference>
<dbReference type="PDB" id="4QR3">
    <property type="method" value="X-ray"/>
    <property type="resolution" value="1.37 A"/>
    <property type="chains" value="A=44-166"/>
</dbReference>
<dbReference type="PDB" id="4QR4">
    <property type="method" value="X-ray"/>
    <property type="resolution" value="1.28 A"/>
    <property type="chains" value="A=44-166"/>
</dbReference>
<dbReference type="PDB" id="4QR5">
    <property type="method" value="X-ray"/>
    <property type="resolution" value="1.41 A"/>
    <property type="chains" value="A=44-166"/>
</dbReference>
<dbReference type="PDB" id="4QZS">
    <property type="method" value="X-ray"/>
    <property type="resolution" value="1.45 A"/>
    <property type="chains" value="A=44-168"/>
</dbReference>
<dbReference type="PDB" id="4UIX">
    <property type="method" value="X-ray"/>
    <property type="resolution" value="1.58 A"/>
    <property type="chains" value="A/B/C=44-168"/>
</dbReference>
<dbReference type="PDB" id="4UIY">
    <property type="method" value="X-ray"/>
    <property type="resolution" value="1.30 A"/>
    <property type="chains" value="A=44-168"/>
</dbReference>
<dbReference type="PDB" id="4UIZ">
    <property type="method" value="X-ray"/>
    <property type="resolution" value="1.19 A"/>
    <property type="chains" value="A=44-168"/>
</dbReference>
<dbReference type="PDB" id="4UYD">
    <property type="method" value="X-ray"/>
    <property type="resolution" value="1.37 A"/>
    <property type="chains" value="A=44-183"/>
</dbReference>
<dbReference type="PDB" id="4WHW">
    <property type="method" value="X-ray"/>
    <property type="resolution" value="1.34 A"/>
    <property type="chains" value="A=44-168"/>
</dbReference>
<dbReference type="PDB" id="4WIV">
    <property type="method" value="X-ray"/>
    <property type="resolution" value="1.56 A"/>
    <property type="chains" value="A=44-168"/>
</dbReference>
<dbReference type="PDB" id="4X2I">
    <property type="method" value="X-ray"/>
    <property type="resolution" value="1.20 A"/>
    <property type="chains" value="A=42-166"/>
</dbReference>
<dbReference type="PDB" id="4XY9">
    <property type="method" value="X-ray"/>
    <property type="resolution" value="1.83 A"/>
    <property type="chains" value="A=42-168"/>
</dbReference>
<dbReference type="PDB" id="4XYA">
    <property type="method" value="X-ray"/>
    <property type="resolution" value="2.05 A"/>
    <property type="chains" value="A=42-168"/>
</dbReference>
<dbReference type="PDB" id="4YH3">
    <property type="method" value="X-ray"/>
    <property type="resolution" value="1.60 A"/>
    <property type="chains" value="A=44-170"/>
</dbReference>
<dbReference type="PDB" id="4YH4">
    <property type="method" value="X-ray"/>
    <property type="resolution" value="1.33 A"/>
    <property type="chains" value="A=44-170"/>
</dbReference>
<dbReference type="PDB" id="4Z1Q">
    <property type="method" value="X-ray"/>
    <property type="resolution" value="1.40 A"/>
    <property type="chains" value="A/B=42-167"/>
</dbReference>
<dbReference type="PDB" id="4Z1S">
    <property type="method" value="X-ray"/>
    <property type="resolution" value="1.06 A"/>
    <property type="chains" value="A/B=42-166"/>
</dbReference>
<dbReference type="PDB" id="4Z93">
    <property type="method" value="X-ray"/>
    <property type="resolution" value="1.27 A"/>
    <property type="chains" value="A=349-460"/>
</dbReference>
<dbReference type="PDB" id="4ZC9">
    <property type="method" value="X-ray"/>
    <property type="resolution" value="0.99 A"/>
    <property type="chains" value="A=44-168"/>
</dbReference>
<dbReference type="PDB" id="4ZW1">
    <property type="method" value="X-ray"/>
    <property type="resolution" value="1.75 A"/>
    <property type="chains" value="A=44-168"/>
</dbReference>
<dbReference type="PDB" id="5A5S">
    <property type="method" value="X-ray"/>
    <property type="resolution" value="1.36 A"/>
    <property type="chains" value="A=44-168"/>
</dbReference>
<dbReference type="PDB" id="5A85">
    <property type="method" value="X-ray"/>
    <property type="resolution" value="1.72 A"/>
    <property type="chains" value="A=44-168"/>
</dbReference>
<dbReference type="PDB" id="5ACY">
    <property type="method" value="X-ray"/>
    <property type="resolution" value="2.01 A"/>
    <property type="chains" value="A/B=44-168"/>
</dbReference>
<dbReference type="PDB" id="5AD2">
    <property type="method" value="X-ray"/>
    <property type="resolution" value="2.01 A"/>
    <property type="chains" value="A/B=44-168"/>
</dbReference>
<dbReference type="PDB" id="5AD3">
    <property type="method" value="X-ray"/>
    <property type="resolution" value="1.49 A"/>
    <property type="chains" value="A/B=44-168"/>
</dbReference>
<dbReference type="PDB" id="5BT4">
    <property type="method" value="X-ray"/>
    <property type="resolution" value="1.50 A"/>
    <property type="chains" value="A/B/C=44-168"/>
</dbReference>
<dbReference type="PDB" id="5CFW">
    <property type="method" value="X-ray"/>
    <property type="resolution" value="1.15 A"/>
    <property type="chains" value="A=44-168"/>
</dbReference>
<dbReference type="PDB" id="5COI">
    <property type="method" value="X-ray"/>
    <property type="resolution" value="1.62 A"/>
    <property type="chains" value="A=44-168"/>
</dbReference>
<dbReference type="PDB" id="5CP5">
    <property type="method" value="X-ray"/>
    <property type="resolution" value="1.79 A"/>
    <property type="chains" value="A=44-168"/>
</dbReference>
<dbReference type="PDB" id="5CPE">
    <property type="method" value="X-ray"/>
    <property type="resolution" value="1.62 A"/>
    <property type="chains" value="A=44-168"/>
</dbReference>
<dbReference type="PDB" id="5CQT">
    <property type="method" value="X-ray"/>
    <property type="resolution" value="1.60 A"/>
    <property type="chains" value="A=44-168"/>
</dbReference>
<dbReference type="PDB" id="5CRM">
    <property type="method" value="X-ray"/>
    <property type="resolution" value="1.99 A"/>
    <property type="chains" value="A=44-168"/>
</dbReference>
<dbReference type="PDB" id="5CRZ">
    <property type="method" value="X-ray"/>
    <property type="resolution" value="2.12 A"/>
    <property type="chains" value="A=44-168"/>
</dbReference>
<dbReference type="PDB" id="5CS8">
    <property type="method" value="X-ray"/>
    <property type="resolution" value="1.62 A"/>
    <property type="chains" value="A=44-168"/>
</dbReference>
<dbReference type="PDB" id="5CTL">
    <property type="method" value="X-ray"/>
    <property type="resolution" value="2.51 A"/>
    <property type="chains" value="A=44-168"/>
</dbReference>
<dbReference type="PDB" id="5CY9">
    <property type="method" value="X-ray"/>
    <property type="resolution" value="1.55 A"/>
    <property type="chains" value="A=44-168"/>
</dbReference>
<dbReference type="PDB" id="5D0C">
    <property type="method" value="X-ray"/>
    <property type="resolution" value="1.49 A"/>
    <property type="chains" value="A=44-168"/>
</dbReference>
<dbReference type="PDB" id="5D24">
    <property type="method" value="X-ray"/>
    <property type="resolution" value="1.65 A"/>
    <property type="chains" value="A=43-168"/>
</dbReference>
<dbReference type="PDB" id="5D25">
    <property type="method" value="X-ray"/>
    <property type="resolution" value="1.70 A"/>
    <property type="chains" value="A=43-168"/>
</dbReference>
<dbReference type="PDB" id="5D26">
    <property type="method" value="X-ray"/>
    <property type="resolution" value="1.82 A"/>
    <property type="chains" value="A=42-168"/>
</dbReference>
<dbReference type="PDB" id="5D3H">
    <property type="method" value="X-ray"/>
    <property type="resolution" value="1.70 A"/>
    <property type="chains" value="A=44-168"/>
</dbReference>
<dbReference type="PDB" id="5D3J">
    <property type="method" value="X-ray"/>
    <property type="resolution" value="1.70 A"/>
    <property type="chains" value="A=43-168"/>
</dbReference>
<dbReference type="PDB" id="5D3L">
    <property type="method" value="X-ray"/>
    <property type="resolution" value="1.50 A"/>
    <property type="chains" value="A=42-168"/>
</dbReference>
<dbReference type="PDB" id="5D3N">
    <property type="method" value="X-ray"/>
    <property type="resolution" value="2.15 A"/>
    <property type="chains" value="A=43-168"/>
</dbReference>
<dbReference type="PDB" id="5D3P">
    <property type="method" value="X-ray"/>
    <property type="resolution" value="1.95 A"/>
    <property type="chains" value="A=42-168"/>
</dbReference>
<dbReference type="PDB" id="5D3R">
    <property type="method" value="X-ray"/>
    <property type="resolution" value="2.20 A"/>
    <property type="chains" value="A=42-168"/>
</dbReference>
<dbReference type="PDB" id="5D3S">
    <property type="method" value="X-ray"/>
    <property type="resolution" value="1.75 A"/>
    <property type="chains" value="A=44-168"/>
</dbReference>
<dbReference type="PDB" id="5D3T">
    <property type="method" value="X-ray"/>
    <property type="resolution" value="1.93 A"/>
    <property type="chains" value="A=42-168"/>
</dbReference>
<dbReference type="PDB" id="5DLX">
    <property type="method" value="X-ray"/>
    <property type="resolution" value="1.90 A"/>
    <property type="chains" value="A=44-168"/>
</dbReference>
<dbReference type="PDB" id="5DLZ">
    <property type="method" value="X-ray"/>
    <property type="resolution" value="1.70 A"/>
    <property type="chains" value="A=44-168"/>
</dbReference>
<dbReference type="PDB" id="5DW2">
    <property type="method" value="X-ray"/>
    <property type="resolution" value="1.12 A"/>
    <property type="chains" value="A=44-170"/>
</dbReference>
<dbReference type="PDB" id="5DX4">
    <property type="method" value="X-ray"/>
    <property type="resolution" value="2.30 A"/>
    <property type="chains" value="A=44-168"/>
</dbReference>
<dbReference type="PDB" id="5E0R">
    <property type="method" value="X-ray"/>
    <property type="resolution" value="1.35 A"/>
    <property type="chains" value="A=44-168"/>
</dbReference>
<dbReference type="PDB" id="5EGU">
    <property type="method" value="X-ray"/>
    <property type="resolution" value="2.21 A"/>
    <property type="chains" value="A/B/C/D=44-168"/>
</dbReference>
<dbReference type="PDB" id="5EI4">
    <property type="method" value="X-ray"/>
    <property type="resolution" value="1.05 A"/>
    <property type="chains" value="A=44-168"/>
</dbReference>
<dbReference type="PDB" id="5EIS">
    <property type="method" value="X-ray"/>
    <property type="resolution" value="1.60 A"/>
    <property type="chains" value="A=44-168"/>
</dbReference>
<dbReference type="PDB" id="5F5Z">
    <property type="method" value="X-ray"/>
    <property type="resolution" value="1.76 A"/>
    <property type="chains" value="A=44-168"/>
</dbReference>
<dbReference type="PDB" id="5F60">
    <property type="method" value="X-ray"/>
    <property type="resolution" value="1.35 A"/>
    <property type="chains" value="A=44-168"/>
</dbReference>
<dbReference type="PDB" id="5F61">
    <property type="method" value="X-ray"/>
    <property type="resolution" value="1.45 A"/>
    <property type="chains" value="A/B=44-168"/>
</dbReference>
<dbReference type="PDB" id="5F62">
    <property type="method" value="X-ray"/>
    <property type="resolution" value="1.35 A"/>
    <property type="chains" value="A=44-168"/>
</dbReference>
<dbReference type="PDB" id="5F63">
    <property type="method" value="X-ray"/>
    <property type="resolution" value="1.45 A"/>
    <property type="chains" value="A=44-168"/>
</dbReference>
<dbReference type="PDB" id="5FBX">
    <property type="method" value="X-ray"/>
    <property type="resolution" value="1.85 A"/>
    <property type="chains" value="A=44-168"/>
</dbReference>
<dbReference type="PDB" id="5H21">
    <property type="method" value="X-ray"/>
    <property type="resolution" value="1.59 A"/>
    <property type="chains" value="A=44-167"/>
</dbReference>
<dbReference type="PDB" id="5HCL">
    <property type="method" value="X-ray"/>
    <property type="resolution" value="1.50 A"/>
    <property type="chains" value="A=44-168"/>
</dbReference>
<dbReference type="PDB" id="5HLS">
    <property type="method" value="X-ray"/>
    <property type="resolution" value="2.18 A"/>
    <property type="chains" value="A=42-168"/>
</dbReference>
<dbReference type="PDB" id="5HM0">
    <property type="method" value="X-ray"/>
    <property type="resolution" value="1.40 A"/>
    <property type="chains" value="A=42-168"/>
</dbReference>
<dbReference type="PDB" id="5HQ5">
    <property type="method" value="X-ray"/>
    <property type="resolution" value="1.60 A"/>
    <property type="chains" value="A=44-168"/>
</dbReference>
<dbReference type="PDB" id="5HQ6">
    <property type="method" value="X-ray"/>
    <property type="resolution" value="1.95 A"/>
    <property type="chains" value="A=44-166"/>
</dbReference>
<dbReference type="PDB" id="5HQ7">
    <property type="method" value="X-ray"/>
    <property type="resolution" value="1.90 A"/>
    <property type="chains" value="A=44-167"/>
</dbReference>
<dbReference type="PDB" id="5I80">
    <property type="method" value="X-ray"/>
    <property type="resolution" value="1.45 A"/>
    <property type="chains" value="A=42-167"/>
</dbReference>
<dbReference type="PDB" id="5I88">
    <property type="method" value="X-ray"/>
    <property type="resolution" value="1.40 A"/>
    <property type="chains" value="A=42-167"/>
</dbReference>
<dbReference type="PDB" id="5IGK">
    <property type="method" value="X-ray"/>
    <property type="resolution" value="1.70 A"/>
    <property type="chains" value="A=44-168"/>
</dbReference>
<dbReference type="PDB" id="5JWM">
    <property type="method" value="X-ray"/>
    <property type="resolution" value="1.71 A"/>
    <property type="chains" value="A/B=333-460"/>
</dbReference>
<dbReference type="PDB" id="5KDH">
    <property type="method" value="X-ray"/>
    <property type="resolution" value="1.50 A"/>
    <property type="chains" value="A=44-168"/>
</dbReference>
<dbReference type="PDB" id="5KHM">
    <property type="method" value="X-ray"/>
    <property type="resolution" value="1.48 A"/>
    <property type="chains" value="A/B=44-168"/>
</dbReference>
<dbReference type="PDB" id="5KJ0">
    <property type="method" value="X-ray"/>
    <property type="resolution" value="1.51 A"/>
    <property type="chains" value="A=44-168"/>
</dbReference>
<dbReference type="PDB" id="5KU3">
    <property type="method" value="X-ray"/>
    <property type="resolution" value="1.14 A"/>
    <property type="chains" value="A=42-167"/>
</dbReference>
<dbReference type="PDB" id="5LJ1">
    <property type="method" value="X-ray"/>
    <property type="resolution" value="1.90 A"/>
    <property type="chains" value="A=42-168"/>
</dbReference>
<dbReference type="PDB" id="5LJ2">
    <property type="method" value="X-ray"/>
    <property type="resolution" value="1.19 A"/>
    <property type="chains" value="A=42-168"/>
</dbReference>
<dbReference type="PDB" id="5LRQ">
    <property type="method" value="X-ray"/>
    <property type="resolution" value="1.70 A"/>
    <property type="chains" value="A=42-163"/>
</dbReference>
<dbReference type="PDB" id="5LUU">
    <property type="method" value="X-ray"/>
    <property type="resolution" value="1.61 A"/>
    <property type="chains" value="A=44-168"/>
</dbReference>
<dbReference type="PDB" id="5M39">
    <property type="method" value="X-ray"/>
    <property type="resolution" value="1.38 A"/>
    <property type="chains" value="A/B=42-168"/>
</dbReference>
<dbReference type="PDB" id="5M3A">
    <property type="method" value="X-ray"/>
    <property type="resolution" value="1.65 A"/>
    <property type="chains" value="A=44-168"/>
</dbReference>
<dbReference type="PDB" id="5MKZ">
    <property type="method" value="X-ray"/>
    <property type="resolution" value="1.62 A"/>
    <property type="chains" value="A=44-168"/>
</dbReference>
<dbReference type="PDB" id="5MLI">
    <property type="method" value="X-ray"/>
    <property type="resolution" value="1.63 A"/>
    <property type="chains" value="A=42-168"/>
</dbReference>
<dbReference type="PDB" id="5N2M">
    <property type="method" value="X-ray"/>
    <property type="resolution" value="1.54 A"/>
    <property type="chains" value="A=44-168"/>
</dbReference>
<dbReference type="PDB" id="5NNC">
    <property type="method" value="X-ray"/>
    <property type="resolution" value="2.22 A"/>
    <property type="chains" value="A/B=44-168"/>
</dbReference>
<dbReference type="PDB" id="5NND">
    <property type="method" value="X-ray"/>
    <property type="resolution" value="1.82 A"/>
    <property type="chains" value="A/B=44-168"/>
</dbReference>
<dbReference type="PDB" id="5NNE">
    <property type="method" value="X-ray"/>
    <property type="resolution" value="1.15 A"/>
    <property type="chains" value="A=44-168"/>
</dbReference>
<dbReference type="PDB" id="5NNF">
    <property type="method" value="X-ray"/>
    <property type="resolution" value="1.15 A"/>
    <property type="chains" value="A=44-168"/>
</dbReference>
<dbReference type="PDB" id="5NNG">
    <property type="method" value="X-ray"/>
    <property type="resolution" value="1.20 A"/>
    <property type="chains" value="A=44-168"/>
</dbReference>
<dbReference type="PDB" id="5O97">
    <property type="method" value="X-ray"/>
    <property type="resolution" value="1.30 A"/>
    <property type="chains" value="A=44-168"/>
</dbReference>
<dbReference type="PDB" id="5OVB">
    <property type="method" value="X-ray"/>
    <property type="resolution" value="1.95 A"/>
    <property type="chains" value="A/B=44-168"/>
</dbReference>
<dbReference type="PDB" id="5OWM">
    <property type="method" value="X-ray"/>
    <property type="resolution" value="1.50 A"/>
    <property type="chains" value="A=44-168"/>
</dbReference>
<dbReference type="PDB" id="5OWW">
    <property type="method" value="X-ray"/>
    <property type="resolution" value="1.50 A"/>
    <property type="chains" value="A/B/C/D=44-168"/>
</dbReference>
<dbReference type="PDB" id="5S9P">
    <property type="method" value="X-ray"/>
    <property type="resolution" value="2.10 A"/>
    <property type="chains" value="A/B/D/E=44-168"/>
</dbReference>
<dbReference type="PDB" id="5S9Q">
    <property type="method" value="X-ray"/>
    <property type="resolution" value="1.85 A"/>
    <property type="chains" value="A/B/D/E=44-168"/>
</dbReference>
<dbReference type="PDB" id="5S9R">
    <property type="method" value="X-ray"/>
    <property type="resolution" value="1.85 A"/>
    <property type="chains" value="A=44-168"/>
</dbReference>
<dbReference type="PDB" id="5T35">
    <property type="method" value="X-ray"/>
    <property type="resolution" value="2.70 A"/>
    <property type="chains" value="A/E=333-460"/>
</dbReference>
<dbReference type="PDB" id="5TI2">
    <property type="method" value="X-ray"/>
    <property type="resolution" value="1.65 A"/>
    <property type="chains" value="A=44-168"/>
</dbReference>
<dbReference type="PDB" id="5TI3">
    <property type="method" value="X-ray"/>
    <property type="resolution" value="1.70 A"/>
    <property type="chains" value="A=44-168"/>
</dbReference>
<dbReference type="PDB" id="5TI4">
    <property type="method" value="X-ray"/>
    <property type="resolution" value="1.62 A"/>
    <property type="chains" value="A=44-168"/>
</dbReference>
<dbReference type="PDB" id="5TI5">
    <property type="method" value="X-ray"/>
    <property type="resolution" value="1.83 A"/>
    <property type="chains" value="A=44-168"/>
</dbReference>
<dbReference type="PDB" id="5TI6">
    <property type="method" value="X-ray"/>
    <property type="resolution" value="1.70 A"/>
    <property type="chains" value="A=44-168"/>
</dbReference>
<dbReference type="PDB" id="5TI7">
    <property type="method" value="X-ray"/>
    <property type="resolution" value="1.65 A"/>
    <property type="chains" value="A=44-168"/>
</dbReference>
<dbReference type="PDB" id="5U28">
    <property type="method" value="X-ray"/>
    <property type="resolution" value="1.80 A"/>
    <property type="chains" value="A=44-180"/>
</dbReference>
<dbReference type="PDB" id="5U2C">
    <property type="method" value="X-ray"/>
    <property type="resolution" value="3.30 A"/>
    <property type="chains" value="A/B=342-460"/>
</dbReference>
<dbReference type="PDB" id="5U2E">
    <property type="method" value="X-ray"/>
    <property type="resolution" value="1.99 A"/>
    <property type="chains" value="A/B=42-180"/>
</dbReference>
<dbReference type="PDB" id="5U2F">
    <property type="method" value="X-ray"/>
    <property type="resolution" value="2.52 A"/>
    <property type="chains" value="A/B=42-180"/>
</dbReference>
<dbReference type="PDB" id="5UEO">
    <property type="method" value="X-ray"/>
    <property type="resolution" value="1.85 A"/>
    <property type="chains" value="A/B=352-457"/>
</dbReference>
<dbReference type="PDB" id="5UEP">
    <property type="method" value="X-ray"/>
    <property type="resolution" value="1.77 A"/>
    <property type="chains" value="A=352-457"/>
</dbReference>
<dbReference type="PDB" id="5UEQ">
    <property type="method" value="X-ray"/>
    <property type="resolution" value="1.70 A"/>
    <property type="chains" value="A=352-457"/>
</dbReference>
<dbReference type="PDB" id="5UER">
    <property type="method" value="X-ray"/>
    <property type="resolution" value="1.87 A"/>
    <property type="chains" value="A=352-457"/>
</dbReference>
<dbReference type="PDB" id="5UES">
    <property type="method" value="X-ray"/>
    <property type="resolution" value="1.62 A"/>
    <property type="chains" value="A=352-457"/>
</dbReference>
<dbReference type="PDB" id="5UET">
    <property type="method" value="X-ray"/>
    <property type="resolution" value="2.29 A"/>
    <property type="chains" value="A=352-457"/>
</dbReference>
<dbReference type="PDB" id="5UEU">
    <property type="method" value="X-ray"/>
    <property type="resolution" value="2.26 A"/>
    <property type="chains" value="A/B=352-457"/>
</dbReference>
<dbReference type="PDB" id="5UEV">
    <property type="method" value="X-ray"/>
    <property type="resolution" value="1.94 A"/>
    <property type="chains" value="A=352-457"/>
</dbReference>
<dbReference type="PDB" id="5UEX">
    <property type="method" value="X-ray"/>
    <property type="resolution" value="2.29 A"/>
    <property type="chains" value="A=352-457"/>
</dbReference>
<dbReference type="PDB" id="5UEY">
    <property type="method" value="X-ray"/>
    <property type="resolution" value="2.41 A"/>
    <property type="chains" value="A=352-457"/>
</dbReference>
<dbReference type="PDB" id="5UEZ">
    <property type="method" value="X-ray"/>
    <property type="resolution" value="1.51 A"/>
    <property type="chains" value="A=352-457"/>
</dbReference>
<dbReference type="PDB" id="5UF0">
    <property type="method" value="X-ray"/>
    <property type="resolution" value="1.35 A"/>
    <property type="chains" value="A=352-457"/>
</dbReference>
<dbReference type="PDB" id="5ULA">
    <property type="method" value="X-ray"/>
    <property type="resolution" value="1.50 A"/>
    <property type="chains" value="A/B=44-168"/>
</dbReference>
<dbReference type="PDB" id="5UOO">
    <property type="method" value="X-ray"/>
    <property type="resolution" value="1.69 A"/>
    <property type="chains" value="A=333-460"/>
</dbReference>
<dbReference type="PDB" id="5UVS">
    <property type="method" value="X-ray"/>
    <property type="resolution" value="2.15 A"/>
    <property type="chains" value="A=352-457"/>
</dbReference>
<dbReference type="PDB" id="5UVT">
    <property type="method" value="X-ray"/>
    <property type="resolution" value="1.67 A"/>
    <property type="chains" value="A=352-457"/>
</dbReference>
<dbReference type="PDB" id="5UVU">
    <property type="method" value="X-ray"/>
    <property type="resolution" value="1.66 A"/>
    <property type="chains" value="A=352-457"/>
</dbReference>
<dbReference type="PDB" id="5UVV">
    <property type="method" value="X-ray"/>
    <property type="resolution" value="1.99 A"/>
    <property type="chains" value="A/B=352-457"/>
</dbReference>
<dbReference type="PDB" id="5UVW">
    <property type="method" value="X-ray"/>
    <property type="resolution" value="2.14 A"/>
    <property type="chains" value="A/B/C=57-165"/>
</dbReference>
<dbReference type="PDB" id="5UVX">
    <property type="method" value="X-ray"/>
    <property type="resolution" value="1.53 A"/>
    <property type="chains" value="A/B=352-457"/>
</dbReference>
<dbReference type="PDB" id="5UVY">
    <property type="method" value="X-ray"/>
    <property type="resolution" value="2.25 A"/>
    <property type="chains" value="A=352-457"/>
</dbReference>
<dbReference type="PDB" id="5UVZ">
    <property type="method" value="X-ray"/>
    <property type="resolution" value="1.63 A"/>
    <property type="chains" value="A=352-457"/>
</dbReference>
<dbReference type="PDB" id="5V67">
    <property type="method" value="X-ray"/>
    <property type="resolution" value="1.78 A"/>
    <property type="chains" value="A=44-168"/>
</dbReference>
<dbReference type="PDB" id="5VBO">
    <property type="method" value="X-ray"/>
    <property type="resolution" value="1.30 A"/>
    <property type="chains" value="A=44-168"/>
</dbReference>
<dbReference type="PDB" id="5VBP">
    <property type="method" value="X-ray"/>
    <property type="resolution" value="1.83 A"/>
    <property type="chains" value="A/B=44-168"/>
</dbReference>
<dbReference type="PDB" id="5VOM">
    <property type="method" value="X-ray"/>
    <property type="resolution" value="1.67 A"/>
    <property type="chains" value="A/B=44-168"/>
</dbReference>
<dbReference type="PDB" id="5VZS">
    <property type="method" value="X-ray"/>
    <property type="resolution" value="1.71 A"/>
    <property type="chains" value="A/B=42-168"/>
</dbReference>
<dbReference type="PDB" id="5W55">
    <property type="method" value="X-ray"/>
    <property type="resolution" value="1.35 A"/>
    <property type="chains" value="A=42-168"/>
</dbReference>
<dbReference type="PDB" id="5WA5">
    <property type="method" value="X-ray"/>
    <property type="resolution" value="1.17 A"/>
    <property type="chains" value="A=42-168"/>
</dbReference>
<dbReference type="PDB" id="5WMA">
    <property type="method" value="X-ray"/>
    <property type="resolution" value="1.40 A"/>
    <property type="chains" value="A=44-168"/>
</dbReference>
<dbReference type="PDB" id="5WMD">
    <property type="method" value="X-ray"/>
    <property type="resolution" value="1.27 A"/>
    <property type="chains" value="A=44-168"/>
</dbReference>
<dbReference type="PDB" id="5WMG">
    <property type="method" value="X-ray"/>
    <property type="resolution" value="1.19 A"/>
    <property type="chains" value="A=44-168"/>
</dbReference>
<dbReference type="PDB" id="5WUU">
    <property type="method" value="X-ray"/>
    <property type="resolution" value="1.72 A"/>
    <property type="chains" value="A=44-167"/>
</dbReference>
<dbReference type="PDB" id="5XHY">
    <property type="method" value="X-ray"/>
    <property type="resolution" value="1.98 A"/>
    <property type="chains" value="A=44-166"/>
</dbReference>
<dbReference type="PDB" id="5XI2">
    <property type="method" value="X-ray"/>
    <property type="resolution" value="1.91 A"/>
    <property type="chains" value="A=44-166"/>
</dbReference>
<dbReference type="PDB" id="5XI3">
    <property type="method" value="X-ray"/>
    <property type="resolution" value="1.67 A"/>
    <property type="chains" value="A=44-166"/>
</dbReference>
<dbReference type="PDB" id="5XI4">
    <property type="method" value="X-ray"/>
    <property type="resolution" value="1.49 A"/>
    <property type="chains" value="A=44-166"/>
</dbReference>
<dbReference type="PDB" id="5Y1Y">
    <property type="method" value="X-ray"/>
    <property type="resolution" value="1.91 A"/>
    <property type="chains" value="A=44-167"/>
</dbReference>
<dbReference type="PDB" id="5Y8C">
    <property type="method" value="X-ray"/>
    <property type="resolution" value="1.42 A"/>
    <property type="chains" value="A=44-166"/>
</dbReference>
<dbReference type="PDB" id="5Y8W">
    <property type="method" value="X-ray"/>
    <property type="resolution" value="1.76 A"/>
    <property type="chains" value="A=44-168"/>
</dbReference>
<dbReference type="PDB" id="5Y8Y">
    <property type="method" value="X-ray"/>
    <property type="resolution" value="1.87 A"/>
    <property type="chains" value="A=44-168"/>
</dbReference>
<dbReference type="PDB" id="5Y8Z">
    <property type="method" value="X-ray"/>
    <property type="resolution" value="1.84 A"/>
    <property type="chains" value="A=44-168"/>
</dbReference>
<dbReference type="PDB" id="5Y93">
    <property type="method" value="X-ray"/>
    <property type="resolution" value="1.62 A"/>
    <property type="chains" value="A=44-168"/>
</dbReference>
<dbReference type="PDB" id="5Y94">
    <property type="method" value="X-ray"/>
    <property type="resolution" value="2.00 A"/>
    <property type="chains" value="A=44-168"/>
</dbReference>
<dbReference type="PDB" id="5YOU">
    <property type="method" value="X-ray"/>
    <property type="resolution" value="1.50 A"/>
    <property type="chains" value="A=42-168"/>
</dbReference>
<dbReference type="PDB" id="5YOV">
    <property type="method" value="X-ray"/>
    <property type="resolution" value="1.45 A"/>
    <property type="chains" value="A=42-168"/>
</dbReference>
<dbReference type="PDB" id="5YQX">
    <property type="method" value="X-ray"/>
    <property type="resolution" value="1.82 A"/>
    <property type="chains" value="A=44-167"/>
</dbReference>
<dbReference type="PDB" id="5Z1R">
    <property type="method" value="X-ray"/>
    <property type="resolution" value="1.62 A"/>
    <property type="chains" value="A=44-168"/>
</dbReference>
<dbReference type="PDB" id="5Z1S">
    <property type="method" value="X-ray"/>
    <property type="resolution" value="1.42 A"/>
    <property type="chains" value="A=44-168"/>
</dbReference>
<dbReference type="PDB" id="5Z1T">
    <property type="method" value="X-ray"/>
    <property type="resolution" value="1.42 A"/>
    <property type="chains" value="A=44-168"/>
</dbReference>
<dbReference type="PDB" id="5Z5T">
    <property type="method" value="X-ray"/>
    <property type="resolution" value="1.99 A"/>
    <property type="chains" value="A=44-167"/>
</dbReference>
<dbReference type="PDB" id="5Z5U">
    <property type="method" value="X-ray"/>
    <property type="resolution" value="1.63 A"/>
    <property type="chains" value="A=44-167"/>
</dbReference>
<dbReference type="PDB" id="5Z5V">
    <property type="method" value="X-ray"/>
    <property type="resolution" value="1.66 A"/>
    <property type="chains" value="A=44-167"/>
</dbReference>
<dbReference type="PDB" id="5Z8G">
    <property type="method" value="X-ray"/>
    <property type="resolution" value="1.70 A"/>
    <property type="chains" value="A=44-168"/>
</dbReference>
<dbReference type="PDB" id="5Z8R">
    <property type="method" value="X-ray"/>
    <property type="resolution" value="2.00 A"/>
    <property type="chains" value="A=44-168"/>
</dbReference>
<dbReference type="PDB" id="5Z8Z">
    <property type="method" value="X-ray"/>
    <property type="resolution" value="1.80 A"/>
    <property type="chains" value="A=44-168"/>
</dbReference>
<dbReference type="PDB" id="5Z90">
    <property type="method" value="X-ray"/>
    <property type="resolution" value="1.80 A"/>
    <property type="chains" value="A=44-168"/>
</dbReference>
<dbReference type="PDB" id="5Z9C">
    <property type="method" value="NMR"/>
    <property type="chains" value="A=53-168"/>
</dbReference>
<dbReference type="PDB" id="5Z9K">
    <property type="method" value="X-ray"/>
    <property type="resolution" value="1.89 A"/>
    <property type="chains" value="A=44-168"/>
</dbReference>
<dbReference type="PDB" id="6AFR">
    <property type="method" value="X-ray"/>
    <property type="resolution" value="2.00 A"/>
    <property type="chains" value="A=44-168"/>
</dbReference>
<dbReference type="PDB" id="6AJV">
    <property type="method" value="X-ray"/>
    <property type="resolution" value="1.45 A"/>
    <property type="chains" value="A=42-168"/>
</dbReference>
<dbReference type="PDB" id="6AJW">
    <property type="method" value="X-ray"/>
    <property type="resolution" value="1.40 A"/>
    <property type="chains" value="A=42-168"/>
</dbReference>
<dbReference type="PDB" id="6AJX">
    <property type="method" value="X-ray"/>
    <property type="resolution" value="1.89 A"/>
    <property type="chains" value="A=42-168"/>
</dbReference>
<dbReference type="PDB" id="6AJY">
    <property type="method" value="X-ray"/>
    <property type="resolution" value="1.60 A"/>
    <property type="chains" value="A=42-168"/>
</dbReference>
<dbReference type="PDB" id="6AJZ">
    <property type="method" value="Other"/>
    <property type="resolution" value="1.30 A"/>
    <property type="chains" value="A=42-168"/>
</dbReference>
<dbReference type="PDB" id="6BN7">
    <property type="method" value="X-ray"/>
    <property type="resolution" value="3.50 A"/>
    <property type="chains" value="C=42-168"/>
</dbReference>
<dbReference type="PDB" id="6BN8">
    <property type="method" value="X-ray"/>
    <property type="resolution" value="3.99 A"/>
    <property type="chains" value="C=42-168"/>
</dbReference>
<dbReference type="PDB" id="6BN9">
    <property type="method" value="X-ray"/>
    <property type="resolution" value="4.38 A"/>
    <property type="chains" value="C=42-168"/>
</dbReference>
<dbReference type="PDB" id="6BNB">
    <property type="method" value="X-ray"/>
    <property type="resolution" value="6.34 A"/>
    <property type="chains" value="C=42-168"/>
</dbReference>
<dbReference type="PDB" id="6BNH">
    <property type="method" value="NMR"/>
    <property type="chains" value="A=601-683"/>
</dbReference>
<dbReference type="PDB" id="6BOY">
    <property type="method" value="X-ray"/>
    <property type="resolution" value="3.33 A"/>
    <property type="chains" value="C=42-168"/>
</dbReference>
<dbReference type="PDB" id="6C7Q">
    <property type="method" value="X-ray"/>
    <property type="resolution" value="1.51 A"/>
    <property type="chains" value="A=333-460"/>
</dbReference>
<dbReference type="PDB" id="6C7R">
    <property type="method" value="X-ray"/>
    <property type="resolution" value="1.50 A"/>
    <property type="chains" value="A=44-165"/>
</dbReference>
<dbReference type="PDB" id="6CD4">
    <property type="method" value="X-ray"/>
    <property type="resolution" value="1.23 A"/>
    <property type="chains" value="A=42-168"/>
</dbReference>
<dbReference type="PDB" id="6CD5">
    <property type="method" value="X-ray"/>
    <property type="resolution" value="1.58 A"/>
    <property type="chains" value="A=44-168"/>
</dbReference>
<dbReference type="PDB" id="6CIS">
    <property type="method" value="X-ray"/>
    <property type="resolution" value="1.51 A"/>
    <property type="chains" value="A=44-166"/>
</dbReference>
<dbReference type="PDB" id="6CIY">
    <property type="method" value="X-ray"/>
    <property type="resolution" value="1.68 A"/>
    <property type="chains" value="A=44-168"/>
</dbReference>
<dbReference type="PDB" id="6CJ1">
    <property type="method" value="X-ray"/>
    <property type="resolution" value="1.53 A"/>
    <property type="chains" value="A=44-166"/>
</dbReference>
<dbReference type="PDB" id="6CJ2">
    <property type="method" value="X-ray"/>
    <property type="resolution" value="1.47 A"/>
    <property type="chains" value="A=42-166"/>
</dbReference>
<dbReference type="PDB" id="6CKR">
    <property type="method" value="X-ray"/>
    <property type="resolution" value="1.62 A"/>
    <property type="chains" value="A/B=44-168"/>
</dbReference>
<dbReference type="PDB" id="6CKS">
    <property type="method" value="X-ray"/>
    <property type="resolution" value="1.72 A"/>
    <property type="chains" value="A=44-168"/>
</dbReference>
<dbReference type="PDB" id="6CZU">
    <property type="method" value="X-ray"/>
    <property type="resolution" value="1.47 A"/>
    <property type="chains" value="A=42-170"/>
</dbReference>
<dbReference type="PDB" id="6CZV">
    <property type="method" value="X-ray"/>
    <property type="resolution" value="1.88 A"/>
    <property type="chains" value="A=42-170"/>
</dbReference>
<dbReference type="PDB" id="6DJC">
    <property type="method" value="X-ray"/>
    <property type="resolution" value="1.46 A"/>
    <property type="chains" value="A/B=44-173"/>
</dbReference>
<dbReference type="PDB" id="6DL2">
    <property type="method" value="X-ray"/>
    <property type="resolution" value="1.47 A"/>
    <property type="chains" value="A=44-168"/>
</dbReference>
<dbReference type="PDB" id="6DMJ">
    <property type="method" value="X-ray"/>
    <property type="resolution" value="1.15 A"/>
    <property type="chains" value="A=44-168"/>
</dbReference>
<dbReference type="PDB" id="6DML">
    <property type="method" value="X-ray"/>
    <property type="resolution" value="1.50 A"/>
    <property type="chains" value="A=44-168"/>
</dbReference>
<dbReference type="PDB" id="6DNE">
    <property type="method" value="X-ray"/>
    <property type="resolution" value="2.96 A"/>
    <property type="chains" value="A/B=44-477"/>
</dbReference>
<dbReference type="PDB" id="6DUV">
    <property type="method" value="X-ray"/>
    <property type="resolution" value="1.80 A"/>
    <property type="chains" value="A/B=347-458"/>
</dbReference>
<dbReference type="PDB" id="6E4A">
    <property type="method" value="X-ray"/>
    <property type="resolution" value="1.26 A"/>
    <property type="chains" value="A/B=44-170"/>
</dbReference>
<dbReference type="PDB" id="6FFD">
    <property type="method" value="X-ray"/>
    <property type="resolution" value="1.83 A"/>
    <property type="chains" value="A=347-463"/>
</dbReference>
<dbReference type="PDB" id="6FNX">
    <property type="method" value="X-ray"/>
    <property type="resolution" value="1.19 A"/>
    <property type="chains" value="A=44-168"/>
</dbReference>
<dbReference type="PDB" id="6FO5">
    <property type="method" value="X-ray"/>
    <property type="resolution" value="0.95 A"/>
    <property type="chains" value="A=44-168"/>
</dbReference>
<dbReference type="PDB" id="6FSY">
    <property type="method" value="X-ray"/>
    <property type="resolution" value="1.34 A"/>
    <property type="chains" value="A=42-168"/>
</dbReference>
<dbReference type="PDB" id="6FT3">
    <property type="method" value="X-ray"/>
    <property type="resolution" value="1.28 A"/>
    <property type="chains" value="A=42-168"/>
</dbReference>
<dbReference type="PDB" id="6FT4">
    <property type="method" value="X-ray"/>
    <property type="resolution" value="1.34 A"/>
    <property type="chains" value="A=42-168"/>
</dbReference>
<dbReference type="PDB" id="6G0D">
    <property type="method" value="X-ray"/>
    <property type="resolution" value="1.31 A"/>
    <property type="chains" value="A=42-168"/>
</dbReference>
<dbReference type="PDB" id="6G0E">
    <property type="method" value="X-ray"/>
    <property type="resolution" value="1.61 A"/>
    <property type="chains" value="A=42-168"/>
</dbReference>
<dbReference type="PDB" id="6G0F">
    <property type="method" value="X-ray"/>
    <property type="resolution" value="1.62 A"/>
    <property type="chains" value="A=42-168"/>
</dbReference>
<dbReference type="PDB" id="6G0G">
    <property type="method" value="X-ray"/>
    <property type="resolution" value="1.48 A"/>
    <property type="chains" value="A=42-168"/>
</dbReference>
<dbReference type="PDB" id="6G0H">
    <property type="method" value="X-ray"/>
    <property type="resolution" value="1.91 A"/>
    <property type="chains" value="A=42-168"/>
</dbReference>
<dbReference type="PDB" id="6G0O">
    <property type="method" value="X-ray"/>
    <property type="resolution" value="1.40 A"/>
    <property type="chains" value="A=42-168"/>
</dbReference>
<dbReference type="PDB" id="6G0P">
    <property type="method" value="X-ray"/>
    <property type="resolution" value="1.30 A"/>
    <property type="chains" value="A=42-168"/>
</dbReference>
<dbReference type="PDB" id="6G0Q">
    <property type="method" value="X-ray"/>
    <property type="resolution" value="1.40 A"/>
    <property type="chains" value="A=42-168"/>
</dbReference>
<dbReference type="PDB" id="6G0R">
    <property type="method" value="X-ray"/>
    <property type="resolution" value="1.25 A"/>
    <property type="chains" value="A=42-168"/>
</dbReference>
<dbReference type="PDB" id="6G0S">
    <property type="method" value="X-ray"/>
    <property type="resolution" value="1.48 A"/>
    <property type="chains" value="A/B=42-168"/>
</dbReference>
<dbReference type="PDB" id="6HDQ">
    <property type="method" value="X-ray"/>
    <property type="resolution" value="1.70 A"/>
    <property type="chains" value="A=44-168"/>
</dbReference>
<dbReference type="PDB" id="6HOV">
    <property type="method" value="X-ray"/>
    <property type="resolution" value="1.85 A"/>
    <property type="chains" value="A=44-168"/>
</dbReference>
<dbReference type="PDB" id="6I7X">
    <property type="method" value="X-ray"/>
    <property type="resolution" value="1.20 A"/>
    <property type="chains" value="A=44-168"/>
</dbReference>
<dbReference type="PDB" id="6I7Y">
    <property type="method" value="X-ray"/>
    <property type="resolution" value="1.00 A"/>
    <property type="chains" value="A=44-168"/>
</dbReference>
<dbReference type="PDB" id="6IN1">
    <property type="method" value="X-ray"/>
    <property type="resolution" value="1.50 A"/>
    <property type="chains" value="A=42-168"/>
</dbReference>
<dbReference type="PDB" id="6JI3">
    <property type="method" value="X-ray"/>
    <property type="resolution" value="2.20 A"/>
    <property type="chains" value="A=44-166"/>
</dbReference>
<dbReference type="PDB" id="6JI4">
    <property type="method" value="X-ray"/>
    <property type="resolution" value="1.60 A"/>
    <property type="chains" value="A=44-166"/>
</dbReference>
<dbReference type="PDB" id="6JI5">
    <property type="method" value="X-ray"/>
    <property type="resolution" value="2.00 A"/>
    <property type="chains" value="A=44-166"/>
</dbReference>
<dbReference type="PDB" id="6JJ3">
    <property type="method" value="X-ray"/>
    <property type="resolution" value="1.72 A"/>
    <property type="chains" value="A=44-167"/>
</dbReference>
<dbReference type="PDB" id="6JJ5">
    <property type="method" value="X-ray"/>
    <property type="resolution" value="1.20 A"/>
    <property type="chains" value="A=44-167"/>
</dbReference>
<dbReference type="PDB" id="6JJ6">
    <property type="method" value="X-ray"/>
    <property type="resolution" value="1.40 A"/>
    <property type="chains" value="A=44-167"/>
</dbReference>
<dbReference type="PDB" id="6JJB">
    <property type="method" value="X-ray"/>
    <property type="resolution" value="1.51 A"/>
    <property type="chains" value="A=44-167"/>
</dbReference>
<dbReference type="PDB" id="6KEC">
    <property type="method" value="X-ray"/>
    <property type="resolution" value="1.35 A"/>
    <property type="chains" value="A=44-168"/>
</dbReference>
<dbReference type="PDB" id="6KED">
    <property type="method" value="X-ray"/>
    <property type="resolution" value="2.55 A"/>
    <property type="chains" value="A=44-168"/>
</dbReference>
<dbReference type="PDB" id="6KEE">
    <property type="method" value="X-ray"/>
    <property type="resolution" value="2.12 A"/>
    <property type="chains" value="A=44-168"/>
</dbReference>
<dbReference type="PDB" id="6KEF">
    <property type="method" value="X-ray"/>
    <property type="resolution" value="2.44 A"/>
    <property type="chains" value="A=44-168"/>
</dbReference>
<dbReference type="PDB" id="6KEG">
    <property type="method" value="X-ray"/>
    <property type="resolution" value="2.23 A"/>
    <property type="chains" value="A=44-168"/>
</dbReference>
<dbReference type="PDB" id="6KEH">
    <property type="method" value="X-ray"/>
    <property type="resolution" value="1.55 A"/>
    <property type="chains" value="A=44-168"/>
</dbReference>
<dbReference type="PDB" id="6KEI">
    <property type="method" value="X-ray"/>
    <property type="resolution" value="1.45 A"/>
    <property type="chains" value="A=44-168"/>
</dbReference>
<dbReference type="PDB" id="6KEJ">
    <property type="method" value="X-ray"/>
    <property type="resolution" value="1.85 A"/>
    <property type="chains" value="A=44-168"/>
</dbReference>
<dbReference type="PDB" id="6KEK">
    <property type="method" value="X-ray"/>
    <property type="resolution" value="1.55 A"/>
    <property type="chains" value="A=44-168"/>
</dbReference>
<dbReference type="PDB" id="6KO2">
    <property type="method" value="X-ray"/>
    <property type="resolution" value="1.50 A"/>
    <property type="chains" value="A=351-457"/>
</dbReference>
<dbReference type="PDB" id="6LG4">
    <property type="method" value="X-ray"/>
    <property type="resolution" value="1.85 A"/>
    <property type="chains" value="A=44-167"/>
</dbReference>
<dbReference type="PDB" id="6LG5">
    <property type="method" value="X-ray"/>
    <property type="resolution" value="1.83 A"/>
    <property type="chains" value="A=44-167"/>
</dbReference>
<dbReference type="PDB" id="6LG6">
    <property type="method" value="X-ray"/>
    <property type="resolution" value="1.98 A"/>
    <property type="chains" value="A=44-167"/>
</dbReference>
<dbReference type="PDB" id="6LG7">
    <property type="method" value="X-ray"/>
    <property type="resolution" value="1.83 A"/>
    <property type="chains" value="A=44-167"/>
</dbReference>
<dbReference type="PDB" id="6LG8">
    <property type="method" value="X-ray"/>
    <property type="resolution" value="1.58 A"/>
    <property type="chains" value="A=44-167"/>
</dbReference>
<dbReference type="PDB" id="6LG9">
    <property type="method" value="X-ray"/>
    <property type="resolution" value="1.81 A"/>
    <property type="chains" value="A=44-167"/>
</dbReference>
<dbReference type="PDB" id="6LIH">
    <property type="method" value="X-ray"/>
    <property type="resolution" value="1.62 A"/>
    <property type="chains" value="A=44-166"/>
</dbReference>
<dbReference type="PDB" id="6LIM">
    <property type="method" value="X-ray"/>
    <property type="resolution" value="1.76 A"/>
    <property type="chains" value="A=44-166"/>
</dbReference>
<dbReference type="PDB" id="6MAU">
    <property type="method" value="X-ray"/>
    <property type="resolution" value="2.11 A"/>
    <property type="chains" value="A=44-170"/>
</dbReference>
<dbReference type="PDB" id="6MH1">
    <property type="method" value="X-ray"/>
    <property type="resolution" value="1.60 A"/>
    <property type="chains" value="A/B=44-168"/>
</dbReference>
<dbReference type="PDB" id="6MH7">
    <property type="method" value="X-ray"/>
    <property type="resolution" value="1.74 A"/>
    <property type="chains" value="A/B=44-168"/>
</dbReference>
<dbReference type="PDB" id="6MNL">
    <property type="method" value="NMR"/>
    <property type="chains" value="B=333-460"/>
</dbReference>
<dbReference type="PDB" id="6P05">
    <property type="method" value="X-ray"/>
    <property type="resolution" value="1.54 A"/>
    <property type="chains" value="A=44-168"/>
</dbReference>
<dbReference type="PDB" id="6PRT">
    <property type="method" value="X-ray"/>
    <property type="resolution" value="1.30 A"/>
    <property type="chains" value="A=43-168"/>
</dbReference>
<dbReference type="PDB" id="6PS9">
    <property type="method" value="X-ray"/>
    <property type="resolution" value="1.21 A"/>
    <property type="chains" value="A=44-168"/>
</dbReference>
<dbReference type="PDB" id="6PSB">
    <property type="method" value="X-ray"/>
    <property type="resolution" value="1.59 A"/>
    <property type="chains" value="A=44-168"/>
</dbReference>
<dbReference type="PDB" id="6Q3Y">
    <property type="method" value="X-ray"/>
    <property type="resolution" value="1.20 A"/>
    <property type="chains" value="A/B=42-168"/>
</dbReference>
<dbReference type="PDB" id="6Q3Z">
    <property type="method" value="X-ray"/>
    <property type="resolution" value="2.00 A"/>
    <property type="chains" value="A/B=44-168"/>
</dbReference>
<dbReference type="PDB" id="6RWJ">
    <property type="method" value="X-ray"/>
    <property type="resolution" value="1.40 A"/>
    <property type="chains" value="A=44-168"/>
</dbReference>
<dbReference type="PDB" id="6S25">
    <property type="method" value="X-ray"/>
    <property type="resolution" value="1.10 A"/>
    <property type="chains" value="A=44-168"/>
</dbReference>
<dbReference type="PDB" id="6S4B">
    <property type="method" value="X-ray"/>
    <property type="resolution" value="1.60 A"/>
    <property type="chains" value="A=44-168"/>
</dbReference>
<dbReference type="PDB" id="6S6K">
    <property type="method" value="X-ray"/>
    <property type="resolution" value="1.40 A"/>
    <property type="chains" value="A=44-168"/>
</dbReference>
<dbReference type="PDB" id="6SA2">
    <property type="method" value="X-ray"/>
    <property type="resolution" value="1.50 A"/>
    <property type="chains" value="A=44-168"/>
</dbReference>
<dbReference type="PDB" id="6SA3">
    <property type="method" value="X-ray"/>
    <property type="resolution" value="1.80 A"/>
    <property type="chains" value="A=44-168"/>
</dbReference>
<dbReference type="PDB" id="6SAH">
    <property type="method" value="X-ray"/>
    <property type="resolution" value="1.50 A"/>
    <property type="chains" value="A=44-168"/>
</dbReference>
<dbReference type="PDB" id="6SAJ">
    <property type="method" value="X-ray"/>
    <property type="resolution" value="1.50 A"/>
    <property type="chains" value="A=44-168"/>
</dbReference>
<dbReference type="PDB" id="6SB8">
    <property type="method" value="X-ray"/>
    <property type="resolution" value="1.50 A"/>
    <property type="chains" value="A=44-168"/>
</dbReference>
<dbReference type="PDB" id="6SE4">
    <property type="method" value="X-ray"/>
    <property type="resolution" value="1.38 A"/>
    <property type="chains" value="A=44-168"/>
</dbReference>
<dbReference type="PDB" id="6SIS">
    <property type="method" value="X-ray"/>
    <property type="resolution" value="3.50 A"/>
    <property type="chains" value="A/E=333-460"/>
</dbReference>
<dbReference type="PDB" id="6SWN">
    <property type="method" value="X-ray"/>
    <property type="resolution" value="1.28 A"/>
    <property type="chains" value="AAA=44-168"/>
</dbReference>
<dbReference type="PDB" id="6SWQ">
    <property type="method" value="X-ray"/>
    <property type="resolution" value="1.60 A"/>
    <property type="chains" value="AAA=44-168"/>
</dbReference>
<dbReference type="PDB" id="6TPX">
    <property type="method" value="X-ray"/>
    <property type="resolution" value="1.48 A"/>
    <property type="chains" value="AAA=44-168"/>
</dbReference>
<dbReference type="PDB" id="6TPY">
    <property type="method" value="X-ray"/>
    <property type="resolution" value="1.80 A"/>
    <property type="chains" value="AAA=44-168"/>
</dbReference>
<dbReference type="PDB" id="6TPZ">
    <property type="method" value="X-ray"/>
    <property type="resolution" value="1.30 A"/>
    <property type="chains" value="AAA=44-168"/>
</dbReference>
<dbReference type="PDB" id="6U0D">
    <property type="method" value="X-ray"/>
    <property type="resolution" value="1.43 A"/>
    <property type="chains" value="A=44-168"/>
</dbReference>
<dbReference type="PDB" id="6U6K">
    <property type="method" value="X-ray"/>
    <property type="resolution" value="1.70 A"/>
    <property type="chains" value="A=42-168"/>
</dbReference>
<dbReference type="PDB" id="6U6L">
    <property type="method" value="X-ray"/>
    <property type="resolution" value="2.60 A"/>
    <property type="chains" value="A=347-464"/>
</dbReference>
<dbReference type="PDB" id="6U72">
    <property type="method" value="X-ray"/>
    <property type="resolution" value="2.30 A"/>
    <property type="chains" value="A/B=42-168"/>
</dbReference>
<dbReference type="PDB" id="6U74">
    <property type="method" value="X-ray"/>
    <property type="resolution" value="1.85 A"/>
    <property type="chains" value="A/B/C/D=42-168"/>
</dbReference>
<dbReference type="PDB" id="6U8G">
    <property type="method" value="X-ray"/>
    <property type="resolution" value="2.60 A"/>
    <property type="chains" value="A/B/C/D=42-168"/>
</dbReference>
<dbReference type="PDB" id="6U8I">
    <property type="method" value="X-ray"/>
    <property type="resolution" value="2.50 A"/>
    <property type="chains" value="A=347-464"/>
</dbReference>
<dbReference type="PDB" id="6U8M">
    <property type="method" value="X-ray"/>
    <property type="resolution" value="1.95 A"/>
    <property type="chains" value="A/B=42-168"/>
</dbReference>
<dbReference type="PDB" id="6ULS">
    <property type="method" value="X-ray"/>
    <property type="resolution" value="1.50 A"/>
    <property type="chains" value="A=42-168"/>
</dbReference>
<dbReference type="PDB" id="6ULV">
    <property type="method" value="X-ray"/>
    <property type="resolution" value="2.20 A"/>
    <property type="chains" value="A/B/C/D=42-168"/>
</dbReference>
<dbReference type="PDB" id="6UVJ">
    <property type="method" value="X-ray"/>
    <property type="resolution" value="1.38 A"/>
    <property type="chains" value="A=44-168"/>
</dbReference>
<dbReference type="PDB" id="6UVM">
    <property type="method" value="X-ray"/>
    <property type="resolution" value="1.51 A"/>
    <property type="chains" value="A=44-168"/>
</dbReference>
<dbReference type="PDB" id="6UWU">
    <property type="method" value="X-ray"/>
    <property type="resolution" value="2.00 A"/>
    <property type="chains" value="A=44-168"/>
</dbReference>
<dbReference type="PDB" id="6UWX">
    <property type="method" value="X-ray"/>
    <property type="resolution" value="1.31 A"/>
    <property type="chains" value="A=44-168"/>
</dbReference>
<dbReference type="PDB" id="6V0U">
    <property type="method" value="X-ray"/>
    <property type="resolution" value="1.40 A"/>
    <property type="chains" value="A=44-168"/>
</dbReference>
<dbReference type="PDB" id="6V1K">
    <property type="method" value="X-ray"/>
    <property type="resolution" value="1.75 A"/>
    <property type="chains" value="A=44-168"/>
</dbReference>
<dbReference type="PDB" id="6V1L">
    <property type="method" value="X-ray"/>
    <property type="resolution" value="2.10 A"/>
    <property type="chains" value="A=44-168"/>
</dbReference>
<dbReference type="PDB" id="6V1U">
    <property type="method" value="X-ray"/>
    <property type="resolution" value="1.73 A"/>
    <property type="chains" value="A=44-168"/>
</dbReference>
<dbReference type="PDB" id="6VIW">
    <property type="method" value="X-ray"/>
    <property type="resolution" value="2.43 A"/>
    <property type="chains" value="A/B/C=57-168"/>
</dbReference>
<dbReference type="PDB" id="6VIX">
    <property type="method" value="X-ray"/>
    <property type="resolution" value="2.12 A"/>
    <property type="chains" value="A/B/C/D=352-457"/>
</dbReference>
<dbReference type="PDB" id="6VIZ">
    <property type="method" value="X-ray"/>
    <property type="resolution" value="2.39 A"/>
    <property type="chains" value="A/B/C=57-168"/>
</dbReference>
<dbReference type="PDB" id="6VUB">
    <property type="method" value="X-ray"/>
    <property type="resolution" value="1.50 A"/>
    <property type="chains" value="A=44-168"/>
</dbReference>
<dbReference type="PDB" id="6VUC">
    <property type="method" value="X-ray"/>
    <property type="resolution" value="1.55 A"/>
    <property type="chains" value="A=44-168"/>
</dbReference>
<dbReference type="PDB" id="6VUF">
    <property type="method" value="X-ray"/>
    <property type="resolution" value="1.59 A"/>
    <property type="chains" value="A/B=44-168"/>
</dbReference>
<dbReference type="PDB" id="6VUJ">
    <property type="method" value="X-ray"/>
    <property type="resolution" value="1.48 A"/>
    <property type="chains" value="A=44-168"/>
</dbReference>
<dbReference type="PDB" id="6WGX">
    <property type="method" value="X-ray"/>
    <property type="resolution" value="1.53 A"/>
    <property type="chains" value="A/B=44-168"/>
</dbReference>
<dbReference type="PDB" id="6WVX">
    <property type="method" value="X-ray"/>
    <property type="resolution" value="1.55 A"/>
    <property type="chains" value="A/B=44-168"/>
</dbReference>
<dbReference type="PDB" id="6WW8">
    <property type="method" value="X-ray"/>
    <property type="resolution" value="2.30 A"/>
    <property type="chains" value="A=43-180"/>
</dbReference>
<dbReference type="PDB" id="6X7B">
    <property type="method" value="X-ray"/>
    <property type="resolution" value="1.95 A"/>
    <property type="chains" value="A/B=44-176"/>
</dbReference>
<dbReference type="PDB" id="6X7C">
    <property type="method" value="X-ray"/>
    <property type="resolution" value="2.70 A"/>
    <property type="chains" value="A=44-176"/>
</dbReference>
<dbReference type="PDB" id="6X7D">
    <property type="method" value="X-ray"/>
    <property type="resolution" value="2.50 A"/>
    <property type="chains" value="A/B=44-176"/>
</dbReference>
<dbReference type="PDB" id="6XUZ">
    <property type="method" value="X-ray"/>
    <property type="resolution" value="1.07 A"/>
    <property type="chains" value="A=44-168"/>
</dbReference>
<dbReference type="PDB" id="6XV3">
    <property type="method" value="X-ray"/>
    <property type="resolution" value="1.47 A"/>
    <property type="chains" value="A/B/C/D=44-168"/>
</dbReference>
<dbReference type="PDB" id="6XV7">
    <property type="method" value="X-ray"/>
    <property type="resolution" value="1.67 A"/>
    <property type="chains" value="A=44-168"/>
</dbReference>
<dbReference type="PDB" id="6XVC">
    <property type="method" value="X-ray"/>
    <property type="resolution" value="1.10 A"/>
    <property type="chains" value="B=44-168"/>
</dbReference>
<dbReference type="PDB" id="6YIN">
    <property type="method" value="X-ray"/>
    <property type="resolution" value="1.53 A"/>
    <property type="chains" value="A=44-168"/>
</dbReference>
<dbReference type="PDB" id="6YQN">
    <property type="method" value="X-ray"/>
    <property type="resolution" value="1.05 A"/>
    <property type="chains" value="A=44-168"/>
</dbReference>
<dbReference type="PDB" id="6YQO">
    <property type="method" value="X-ray"/>
    <property type="resolution" value="1.07 A"/>
    <property type="chains" value="A=44-168"/>
</dbReference>
<dbReference type="PDB" id="6YQP">
    <property type="method" value="X-ray"/>
    <property type="resolution" value="1.25 A"/>
    <property type="chains" value="A=44-168"/>
</dbReference>
<dbReference type="PDB" id="6YQZ">
    <property type="method" value="X-ray"/>
    <property type="resolution" value="1.39 A"/>
    <property type="chains" value="A=44-168"/>
</dbReference>
<dbReference type="PDB" id="6Z7G">
    <property type="method" value="X-ray"/>
    <property type="resolution" value="1.59 A"/>
    <property type="chains" value="AAA=44-168"/>
</dbReference>
<dbReference type="PDB" id="6Z7L">
    <property type="method" value="X-ray"/>
    <property type="resolution" value="1.62 A"/>
    <property type="chains" value="AAA=44-168"/>
</dbReference>
<dbReference type="PDB" id="6Z7M">
    <property type="method" value="X-ray"/>
    <property type="resolution" value="1.26 A"/>
    <property type="chains" value="AAA=44-168"/>
</dbReference>
<dbReference type="PDB" id="6ZB3">
    <property type="method" value="X-ray"/>
    <property type="resolution" value="1.42 A"/>
    <property type="chains" value="AAA=44-168"/>
</dbReference>
<dbReference type="PDB" id="6ZCI">
    <property type="method" value="X-ray"/>
    <property type="resolution" value="1.98 A"/>
    <property type="chains" value="A=44-168"/>
</dbReference>
<dbReference type="PDB" id="6ZED">
    <property type="method" value="X-ray"/>
    <property type="resolution" value="1.08 A"/>
    <property type="chains" value="AAA=44-168"/>
</dbReference>
<dbReference type="PDB" id="6ZEL">
    <property type="method" value="X-ray"/>
    <property type="resolution" value="1.12 A"/>
    <property type="chains" value="AAA=44-168"/>
</dbReference>
<dbReference type="PDB" id="6ZF9">
    <property type="method" value="X-ray"/>
    <property type="resolution" value="1.20 A"/>
    <property type="chains" value="AAA=44-168"/>
</dbReference>
<dbReference type="PDB" id="7A9U">
    <property type="method" value="X-ray"/>
    <property type="resolution" value="1.44 A"/>
    <property type="chains" value="AAA=44-168"/>
</dbReference>
<dbReference type="PDB" id="7AJN">
    <property type="method" value="X-ray"/>
    <property type="resolution" value="1.48 A"/>
    <property type="chains" value="A=44-168"/>
</dbReference>
<dbReference type="PDB" id="7AQT">
    <property type="method" value="NMR"/>
    <property type="chains" value="A=351-459"/>
</dbReference>
<dbReference type="PDB" id="7AXR">
    <property type="method" value="X-ray"/>
    <property type="resolution" value="1.50 A"/>
    <property type="chains" value="A=44-168"/>
</dbReference>
<dbReference type="PDB" id="7B1T">
    <property type="method" value="X-ray"/>
    <property type="resolution" value="1.92 A"/>
    <property type="chains" value="A=44-168"/>
</dbReference>
<dbReference type="PDB" id="7C2Z">
    <property type="method" value="X-ray"/>
    <property type="resolution" value="1.30 A"/>
    <property type="chains" value="A=44-168"/>
</dbReference>
<dbReference type="PDB" id="7C6P">
    <property type="method" value="X-ray"/>
    <property type="resolution" value="1.73 A"/>
    <property type="chains" value="A=352-457"/>
</dbReference>
<dbReference type="PDB" id="7DHS">
    <property type="method" value="X-ray"/>
    <property type="resolution" value="1.76 A"/>
    <property type="chains" value="A/B=44-168"/>
</dbReference>
<dbReference type="PDB" id="7EHW">
    <property type="method" value="X-ray"/>
    <property type="resolution" value="1.65 A"/>
    <property type="chains" value="A=44-167"/>
</dbReference>
<dbReference type="PDB" id="7EHY">
    <property type="method" value="X-ray"/>
    <property type="resolution" value="1.51 A"/>
    <property type="chains" value="A=44-167"/>
</dbReference>
<dbReference type="PDB" id="7EIG">
    <property type="method" value="X-ray"/>
    <property type="resolution" value="1.30 A"/>
    <property type="chains" value="A=44-167"/>
</dbReference>
<dbReference type="PDB" id="7EIK">
    <property type="method" value="X-ray"/>
    <property type="resolution" value="1.70 A"/>
    <property type="chains" value="A=44-167"/>
</dbReference>
<dbReference type="PDB" id="7EIL">
    <property type="method" value="X-ray"/>
    <property type="resolution" value="1.70 A"/>
    <property type="chains" value="A=44-167"/>
</dbReference>
<dbReference type="PDB" id="7FH2">
    <property type="method" value="X-ray"/>
    <property type="resolution" value="2.49 A"/>
    <property type="chains" value="A/B/C/D=42-168"/>
</dbReference>
<dbReference type="PDB" id="7JKW">
    <property type="method" value="X-ray"/>
    <property type="resolution" value="1.20 A"/>
    <property type="chains" value="A=44-168"/>
</dbReference>
<dbReference type="PDB" id="7JKX">
    <property type="method" value="X-ray"/>
    <property type="resolution" value="1.20 A"/>
    <property type="chains" value="A=44-168"/>
</dbReference>
<dbReference type="PDB" id="7JKY">
    <property type="method" value="X-ray"/>
    <property type="resolution" value="1.16 A"/>
    <property type="chains" value="A=44-168"/>
</dbReference>
<dbReference type="PDB" id="7JKZ">
    <property type="method" value="X-ray"/>
    <property type="resolution" value="2.49 A"/>
    <property type="chains" value="A=333-460"/>
</dbReference>
<dbReference type="PDB" id="7K6G">
    <property type="method" value="X-ray"/>
    <property type="resolution" value="1.70 A"/>
    <property type="chains" value="A/B=44-168"/>
</dbReference>
<dbReference type="PDB" id="7K6H">
    <property type="method" value="X-ray"/>
    <property type="resolution" value="1.50 A"/>
    <property type="chains" value="A=44-168"/>
</dbReference>
<dbReference type="PDB" id="7KHH">
    <property type="method" value="X-ray"/>
    <property type="resolution" value="2.28 A"/>
    <property type="chains" value="D=44-168"/>
</dbReference>
<dbReference type="PDB" id="7KHL">
    <property type="method" value="X-ray"/>
    <property type="resolution" value="1.29 A"/>
    <property type="chains" value="A/B=44-168"/>
</dbReference>
<dbReference type="PDB" id="7KO0">
    <property type="method" value="X-ray"/>
    <property type="resolution" value="1.90 A"/>
    <property type="chains" value="A=349-460"/>
</dbReference>
<dbReference type="PDB" id="7L9M">
    <property type="method" value="X-ray"/>
    <property type="resolution" value="1.45 A"/>
    <property type="chains" value="A/B=44-168"/>
</dbReference>
<dbReference type="PDB" id="7LA9">
    <property type="method" value="X-ray"/>
    <property type="resolution" value="2.20 A"/>
    <property type="chains" value="A/B/C/D/E/F=44-168"/>
</dbReference>
<dbReference type="PDB" id="7LH8">
    <property type="method" value="X-ray"/>
    <property type="resolution" value="1.75 A"/>
    <property type="chains" value="A=44-168"/>
</dbReference>
<dbReference type="PDB" id="7M16">
    <property type="method" value="X-ray"/>
    <property type="resolution" value="1.42 A"/>
    <property type="chains" value="A=44-168"/>
</dbReference>
<dbReference type="PDB" id="7MCE">
    <property type="method" value="X-ray"/>
    <property type="resolution" value="1.76 A"/>
    <property type="chains" value="A=44-168"/>
</dbReference>
<dbReference type="PDB" id="7MCF">
    <property type="method" value="X-ray"/>
    <property type="resolution" value="2.19 A"/>
    <property type="chains" value="A/B=44-168"/>
</dbReference>
<dbReference type="PDB" id="7MLQ">
    <property type="method" value="X-ray"/>
    <property type="resolution" value="1.32 A"/>
    <property type="chains" value="A=44-168"/>
</dbReference>
<dbReference type="PDB" id="7MLR">
    <property type="method" value="X-ray"/>
    <property type="resolution" value="1.20 A"/>
    <property type="chains" value="A=44-168"/>
</dbReference>
<dbReference type="PDB" id="7MLS">
    <property type="method" value="X-ray"/>
    <property type="resolution" value="1.26 A"/>
    <property type="chains" value="A=44-168"/>
</dbReference>
<dbReference type="PDB" id="7MR5">
    <property type="method" value="X-ray"/>
    <property type="resolution" value="1.82 A"/>
    <property type="chains" value="A/B=44-168"/>
</dbReference>
<dbReference type="PDB" id="7MR6">
    <property type="method" value="X-ray"/>
    <property type="resolution" value="1.85 A"/>
    <property type="chains" value="A/B=44-168"/>
</dbReference>
<dbReference type="PDB" id="7MR7">
    <property type="method" value="X-ray"/>
    <property type="resolution" value="1.40 A"/>
    <property type="chains" value="A/B=44-168"/>
</dbReference>
<dbReference type="PDB" id="7MR8">
    <property type="method" value="X-ray"/>
    <property type="resolution" value="1.20 A"/>
    <property type="chains" value="A=44-168"/>
</dbReference>
<dbReference type="PDB" id="7MR9">
    <property type="method" value="X-ray"/>
    <property type="resolution" value="1.19 A"/>
    <property type="chains" value="A=44-168"/>
</dbReference>
<dbReference type="PDB" id="7MRA">
    <property type="method" value="X-ray"/>
    <property type="resolution" value="1.16 A"/>
    <property type="chains" value="A=44-168"/>
</dbReference>
<dbReference type="PDB" id="7MRB">
    <property type="method" value="X-ray"/>
    <property type="resolution" value="1.20 A"/>
    <property type="chains" value="A=44-168"/>
</dbReference>
<dbReference type="PDB" id="7O18">
    <property type="method" value="X-ray"/>
    <property type="resolution" value="1.70 A"/>
    <property type="chains" value="AAA=44-168"/>
</dbReference>
<dbReference type="PDB" id="7OEO">
    <property type="method" value="X-ray"/>
    <property type="resolution" value="1.51 A"/>
    <property type="chains" value="AAA=347-463"/>
</dbReference>
<dbReference type="PDB" id="7P6V">
    <property type="method" value="X-ray"/>
    <property type="resolution" value="1.17 A"/>
    <property type="chains" value="AAA=44-168"/>
</dbReference>
<dbReference type="PDB" id="7P6W">
    <property type="method" value="X-ray"/>
    <property type="resolution" value="1.31 A"/>
    <property type="chains" value="AAA=44-168"/>
</dbReference>
<dbReference type="PDB" id="7P6Y">
    <property type="method" value="X-ray"/>
    <property type="resolution" value="1.88 A"/>
    <property type="chains" value="AAA/BBB=44-168"/>
</dbReference>
<dbReference type="PDB" id="7Q3F">
    <property type="method" value="X-ray"/>
    <property type="resolution" value="1.21 A"/>
    <property type="chains" value="A=44-168"/>
</dbReference>
<dbReference type="PDB" id="7QDL">
    <property type="method" value="X-ray"/>
    <property type="resolution" value="1.67 A"/>
    <property type="chains" value="AAA=44-168"/>
</dbReference>
<dbReference type="PDB" id="7R5B">
    <property type="method" value="X-ray"/>
    <property type="resolution" value="1.77 A"/>
    <property type="chains" value="A=44-168"/>
</dbReference>
<dbReference type="PDB" id="7R9C">
    <property type="method" value="X-ray"/>
    <property type="resolution" value="1.50 A"/>
    <property type="chains" value="A=44-168"/>
</dbReference>
<dbReference type="PDB" id="7REK">
    <property type="method" value="X-ray"/>
    <property type="resolution" value="1.20 A"/>
    <property type="chains" value="A/B=44-168"/>
</dbReference>
<dbReference type="PDB" id="7REL">
    <property type="method" value="X-ray"/>
    <property type="resolution" value="1.55 A"/>
    <property type="chains" value="A=44-168"/>
</dbReference>
<dbReference type="PDB" id="7REM">
    <property type="method" value="X-ray"/>
    <property type="resolution" value="1.80 A"/>
    <property type="chains" value="A=44-168"/>
</dbReference>
<dbReference type="PDB" id="7RJO">
    <property type="method" value="X-ray"/>
    <property type="resolution" value="1.38 A"/>
    <property type="chains" value="A=44-168"/>
</dbReference>
<dbReference type="PDB" id="7RJP">
    <property type="method" value="X-ray"/>
    <property type="resolution" value="1.25 A"/>
    <property type="chains" value="A=44-168"/>
</dbReference>
<dbReference type="PDB" id="7RJQ">
    <property type="method" value="X-ray"/>
    <property type="resolution" value="1.72 A"/>
    <property type="chains" value="A=44-168"/>
</dbReference>
<dbReference type="PDB" id="7RJR">
    <property type="method" value="X-ray"/>
    <property type="resolution" value="1.45 A"/>
    <property type="chains" value="A=44-168"/>
</dbReference>
<dbReference type="PDB" id="7RMD">
    <property type="method" value="X-ray"/>
    <property type="resolution" value="1.18 A"/>
    <property type="chains" value="A=44-168"/>
</dbReference>
<dbReference type="PDB" id="7RN2">
    <property type="method" value="X-ray"/>
    <property type="resolution" value="1.05 A"/>
    <property type="chains" value="A=44-168"/>
</dbReference>
<dbReference type="PDB" id="7RUH">
    <property type="method" value="X-ray"/>
    <property type="resolution" value="1.70 A"/>
    <property type="chains" value="A=333-460"/>
</dbReference>
<dbReference type="PDB" id="7RUI">
    <property type="method" value="X-ray"/>
    <property type="resolution" value="1.35 A"/>
    <property type="chains" value="A=44-168"/>
</dbReference>
<dbReference type="PDB" id="7RXR">
    <property type="method" value="X-ray"/>
    <property type="resolution" value="1.41 A"/>
    <property type="chains" value="A/B=44-168"/>
</dbReference>
<dbReference type="PDB" id="7RXS">
    <property type="method" value="X-ray"/>
    <property type="resolution" value="1.43 A"/>
    <property type="chains" value="A=44-168"/>
</dbReference>
<dbReference type="PDB" id="7RXT">
    <property type="method" value="X-ray"/>
    <property type="resolution" value="1.68 A"/>
    <property type="chains" value="A=44-168"/>
</dbReference>
<dbReference type="PDB" id="7T3F">
    <property type="method" value="X-ray"/>
    <property type="resolution" value="1.28 A"/>
    <property type="chains" value="A=44-167"/>
</dbReference>
<dbReference type="PDB" id="7TUQ">
    <property type="method" value="X-ray"/>
    <property type="resolution" value="2.68 A"/>
    <property type="chains" value="A/B=42-180"/>
</dbReference>
<dbReference type="PDB" id="7TV0">
    <property type="method" value="X-ray"/>
    <property type="resolution" value="2.60 A"/>
    <property type="chains" value="A/B/C/D=42-180"/>
</dbReference>
<dbReference type="PDB" id="7UGF">
    <property type="method" value="X-ray"/>
    <property type="resolution" value="1.45 A"/>
    <property type="chains" value="A=44-168"/>
</dbReference>
<dbReference type="PDB" id="7USJ">
    <property type="method" value="X-ray"/>
    <property type="resolution" value="2.08 A"/>
    <property type="chains" value="A/B=352-457"/>
</dbReference>
<dbReference type="PDB" id="7USK">
    <property type="method" value="X-ray"/>
    <property type="resolution" value="1.22 A"/>
    <property type="chains" value="A=352-457"/>
</dbReference>
<dbReference type="PDB" id="7UTY">
    <property type="method" value="X-ray"/>
    <property type="resolution" value="1.55 A"/>
    <property type="chains" value="A=44-168"/>
</dbReference>
<dbReference type="PDB" id="7UZN">
    <property type="method" value="X-ray"/>
    <property type="resolution" value="1.69 A"/>
    <property type="chains" value="A=44-168"/>
</dbReference>
<dbReference type="PDB" id="7V1U">
    <property type="method" value="X-ray"/>
    <property type="resolution" value="1.82 A"/>
    <property type="chains" value="A=44-168"/>
</dbReference>
<dbReference type="PDB" id="7V2J">
    <property type="method" value="X-ray"/>
    <property type="resolution" value="2.24 A"/>
    <property type="chains" value="A=44-168"/>
</dbReference>
<dbReference type="PDB" id="7W3D">
    <property type="method" value="X-ray"/>
    <property type="resolution" value="1.98 A"/>
    <property type="chains" value="A=44-168"/>
</dbReference>
<dbReference type="PDB" id="7WJS">
    <property type="method" value="X-ray"/>
    <property type="resolution" value="2.73 A"/>
    <property type="chains" value="A/B/C=44-168"/>
</dbReference>
<dbReference type="PDB" id="7WKY">
    <property type="method" value="X-ray"/>
    <property type="resolution" value="2.83 A"/>
    <property type="chains" value="A/B/C=44-168"/>
</dbReference>
<dbReference type="PDB" id="7WL4">
    <property type="method" value="X-ray"/>
    <property type="resolution" value="1.82 A"/>
    <property type="chains" value="A/B/C/D=44-168"/>
</dbReference>
<dbReference type="PDB" id="7WWZ">
    <property type="method" value="X-ray"/>
    <property type="resolution" value="1.16 A"/>
    <property type="chains" value="A=43-168"/>
</dbReference>
<dbReference type="PDB" id="7X6T">
    <property type="method" value="X-ray"/>
    <property type="resolution" value="1.44 A"/>
    <property type="chains" value="A=42-165"/>
</dbReference>
<dbReference type="PDB" id="7YL2">
    <property type="method" value="X-ray"/>
    <property type="resolution" value="1.62 A"/>
    <property type="chains" value="A=44-168"/>
</dbReference>
<dbReference type="PDB" id="7YMG">
    <property type="method" value="X-ray"/>
    <property type="resolution" value="1.40 A"/>
    <property type="chains" value="A/B=44-168"/>
</dbReference>
<dbReference type="PDB" id="7YQ9">
    <property type="method" value="X-ray"/>
    <property type="resolution" value="1.50 A"/>
    <property type="chains" value="A/B=44-168"/>
</dbReference>
<dbReference type="PDB" id="7Z9W">
    <property type="method" value="X-ray"/>
    <property type="resolution" value="0.99 A"/>
    <property type="chains" value="AAA=44-168"/>
</dbReference>
<dbReference type="PDB" id="7Z9Y">
    <property type="method" value="X-ray"/>
    <property type="resolution" value="1.04 A"/>
    <property type="chains" value="AAA=44-168"/>
</dbReference>
<dbReference type="PDB" id="7ZA6">
    <property type="method" value="X-ray"/>
    <property type="resolution" value="1.12 A"/>
    <property type="chains" value="AAA=44-168"/>
</dbReference>
<dbReference type="PDB" id="7ZA7">
    <property type="method" value="X-ray"/>
    <property type="resolution" value="1.06 A"/>
    <property type="chains" value="AAA=44-168"/>
</dbReference>
<dbReference type="PDB" id="7ZA8">
    <property type="method" value="X-ray"/>
    <property type="resolution" value="1.04 A"/>
    <property type="chains" value="AAA=44-168"/>
</dbReference>
<dbReference type="PDB" id="7ZA9">
    <property type="method" value="X-ray"/>
    <property type="resolution" value="1.05 A"/>
    <property type="chains" value="AAA=44-168"/>
</dbReference>
<dbReference type="PDB" id="7ZAA">
    <property type="method" value="X-ray"/>
    <property type="resolution" value="1.15 A"/>
    <property type="chains" value="AAA=44-168"/>
</dbReference>
<dbReference type="PDB" id="7ZAD">
    <property type="method" value="X-ray"/>
    <property type="resolution" value="1.07 A"/>
    <property type="chains" value="AAA=44-168"/>
</dbReference>
<dbReference type="PDB" id="7ZAE">
    <property type="method" value="X-ray"/>
    <property type="resolution" value="1.10 A"/>
    <property type="chains" value="AAA=44-168"/>
</dbReference>
<dbReference type="PDB" id="7ZAJ">
    <property type="method" value="X-ray"/>
    <property type="resolution" value="1.00 A"/>
    <property type="chains" value="AAA=44-168"/>
</dbReference>
<dbReference type="PDB" id="7ZAQ">
    <property type="method" value="X-ray"/>
    <property type="resolution" value="1.11 A"/>
    <property type="chains" value="A=44-168"/>
</dbReference>
<dbReference type="PDB" id="7ZAR">
    <property type="method" value="X-ray"/>
    <property type="resolution" value="1.14 A"/>
    <property type="chains" value="AAA=44-168"/>
</dbReference>
<dbReference type="PDB" id="7ZAT">
    <property type="method" value="X-ray"/>
    <property type="resolution" value="1.15 A"/>
    <property type="chains" value="AAA=44-168"/>
</dbReference>
<dbReference type="PDB" id="7ZE6">
    <property type="method" value="X-ray"/>
    <property type="resolution" value="1.04 A"/>
    <property type="chains" value="A=44-168"/>
</dbReference>
<dbReference type="PDB" id="7ZE7">
    <property type="method" value="X-ray"/>
    <property type="resolution" value="1.23 A"/>
    <property type="chains" value="AAA=44-168"/>
</dbReference>
<dbReference type="PDB" id="7ZEF">
    <property type="method" value="X-ray"/>
    <property type="resolution" value="1.12 A"/>
    <property type="chains" value="A=44-168"/>
</dbReference>
<dbReference type="PDB" id="7ZEN">
    <property type="method" value="X-ray"/>
    <property type="resolution" value="1.14 A"/>
    <property type="chains" value="AAA=44-168"/>
</dbReference>
<dbReference type="PDB" id="7ZFN">
    <property type="method" value="X-ray"/>
    <property type="resolution" value="1.12 A"/>
    <property type="chains" value="AAA=44-168"/>
</dbReference>
<dbReference type="PDB" id="7ZFO">
    <property type="method" value="X-ray"/>
    <property type="resolution" value="1.09 A"/>
    <property type="chains" value="AAA=44-168"/>
</dbReference>
<dbReference type="PDB" id="7ZFS">
    <property type="method" value="X-ray"/>
    <property type="resolution" value="1.25 A"/>
    <property type="chains" value="AAA=44-168"/>
</dbReference>
<dbReference type="PDB" id="7ZFT">
    <property type="method" value="X-ray"/>
    <property type="resolution" value="1.28 A"/>
    <property type="chains" value="AAA=44-168"/>
</dbReference>
<dbReference type="PDB" id="7ZFU">
    <property type="method" value="X-ray"/>
    <property type="resolution" value="1.29 A"/>
    <property type="chains" value="AAA=44-168"/>
</dbReference>
<dbReference type="PDB" id="7ZFV">
    <property type="method" value="X-ray"/>
    <property type="resolution" value="1.37 A"/>
    <property type="chains" value="A=44-168"/>
</dbReference>
<dbReference type="PDB" id="7ZFY">
    <property type="method" value="X-ray"/>
    <property type="resolution" value="1.15 A"/>
    <property type="chains" value="AAA=44-168"/>
</dbReference>
<dbReference type="PDB" id="7ZFZ">
    <property type="method" value="X-ray"/>
    <property type="resolution" value="1.08 A"/>
    <property type="chains" value="AAA=44-168"/>
</dbReference>
<dbReference type="PDB" id="7ZG1">
    <property type="method" value="X-ray"/>
    <property type="resolution" value="1.16 A"/>
    <property type="chains" value="AAA=44-168"/>
</dbReference>
<dbReference type="PDB" id="7ZG2">
    <property type="method" value="X-ray"/>
    <property type="resolution" value="1.18 A"/>
    <property type="chains" value="AAA=44-168"/>
</dbReference>
<dbReference type="PDB" id="7ZNT">
    <property type="method" value="X-ray"/>
    <property type="resolution" value="3.00 A"/>
    <property type="chains" value="G/H=333-460"/>
</dbReference>
<dbReference type="PDB" id="8B5B">
    <property type="method" value="X-ray"/>
    <property type="resolution" value="1.92 A"/>
    <property type="chains" value="A/B/C=44-168"/>
</dbReference>
<dbReference type="PDB" id="8B5C">
    <property type="method" value="X-ray"/>
    <property type="resolution" value="1.58 A"/>
    <property type="chains" value="A=44-168"/>
</dbReference>
<dbReference type="PDB" id="8B96">
    <property type="method" value="X-ray"/>
    <property type="resolution" value="1.34 A"/>
    <property type="chains" value="A=44-168"/>
</dbReference>
<dbReference type="PDB" id="8B98">
    <property type="method" value="X-ray"/>
    <property type="resolution" value="1.50 A"/>
    <property type="chains" value="A=44-168"/>
</dbReference>
<dbReference type="PDB" id="8BDS">
    <property type="method" value="X-ray"/>
    <property type="resolution" value="1.72 A"/>
    <property type="chains" value="D=44-168"/>
</dbReference>
<dbReference type="PDB" id="8BDT">
    <property type="method" value="X-ray"/>
    <property type="resolution" value="2.70 A"/>
    <property type="chains" value="A/E=333-460"/>
</dbReference>
<dbReference type="PDB" id="8BDX">
    <property type="method" value="X-ray"/>
    <property type="resolution" value="2.93 A"/>
    <property type="chains" value="A/E=333-460"/>
</dbReference>
<dbReference type="PDB" id="8BEB">
    <property type="method" value="X-ray"/>
    <property type="resolution" value="3.18 A"/>
    <property type="chains" value="D=44-168"/>
</dbReference>
<dbReference type="PDB" id="8C11">
    <property type="method" value="X-ray"/>
    <property type="resolution" value="1.80 A"/>
    <property type="chains" value="A=44-168"/>
</dbReference>
<dbReference type="PDB" id="8CKF">
    <property type="method" value="X-ray"/>
    <property type="resolution" value="1.88 A"/>
    <property type="chains" value="A=44-168"/>
</dbReference>
<dbReference type="PDB" id="8CV4">
    <property type="method" value="X-ray"/>
    <property type="resolution" value="1.93 A"/>
    <property type="chains" value="A/B=347-464"/>
</dbReference>
<dbReference type="PDB" id="8CV6">
    <property type="method" value="X-ray"/>
    <property type="resolution" value="1.70 A"/>
    <property type="chains" value="A=347-464"/>
</dbReference>
<dbReference type="PDB" id="8DYR">
    <property type="method" value="X-ray"/>
    <property type="resolution" value="1.47 A"/>
    <property type="chains" value="B=44-168"/>
</dbReference>
<dbReference type="PDB" id="8E17">
    <property type="method" value="X-ray"/>
    <property type="resolution" value="1.47 A"/>
    <property type="chains" value="B=44-168"/>
</dbReference>
<dbReference type="PDB" id="8E3W">
    <property type="method" value="X-ray"/>
    <property type="resolution" value="1.47 A"/>
    <property type="chains" value="B=44-168"/>
</dbReference>
<dbReference type="PDB" id="8EAD">
    <property type="method" value="X-ray"/>
    <property type="resolution" value="1.65 A"/>
    <property type="chains" value="A=44-168"/>
</dbReference>
<dbReference type="PDB" id="8EWV">
    <property type="method" value="X-ray"/>
    <property type="resolution" value="3.40 A"/>
    <property type="chains" value="D/H/L/P/T/X=44-168"/>
</dbReference>
<dbReference type="PDB" id="8FVK">
    <property type="method" value="X-ray"/>
    <property type="resolution" value="1.53 A"/>
    <property type="chains" value="A/B=44-168"/>
</dbReference>
<dbReference type="PDB" id="8G46">
    <property type="method" value="EM"/>
    <property type="resolution" value="2.20 A"/>
    <property type="chains" value="C=333-460"/>
</dbReference>
<dbReference type="PDB" id="8GPZ">
    <property type="method" value="X-ray"/>
    <property type="resolution" value="1.53 A"/>
    <property type="chains" value="A=44-166"/>
</dbReference>
<dbReference type="PDB" id="8GQ0">
    <property type="method" value="X-ray"/>
    <property type="resolution" value="1.44 A"/>
    <property type="chains" value="A=44-166"/>
</dbReference>
<dbReference type="PDB" id="8IBQ">
    <property type="method" value="X-ray"/>
    <property type="resolution" value="1.45 A"/>
    <property type="chains" value="A=44-165"/>
</dbReference>
<dbReference type="PDB" id="8IDH">
    <property type="method" value="X-ray"/>
    <property type="resolution" value="1.57 A"/>
    <property type="chains" value="A=349-460"/>
</dbReference>
<dbReference type="PDB" id="8K14">
    <property type="method" value="X-ray"/>
    <property type="resolution" value="1.28 A"/>
    <property type="chains" value="A=44-168"/>
</dbReference>
<dbReference type="PDB" id="8OV6">
    <property type="method" value="EM"/>
    <property type="resolution" value="3.77 A"/>
    <property type="chains" value="C=42-459"/>
</dbReference>
<dbReference type="PDB" id="8P9F">
    <property type="method" value="X-ray"/>
    <property type="resolution" value="1.30 A"/>
    <property type="chains" value="A=44-168"/>
</dbReference>
<dbReference type="PDB" id="8P9G">
    <property type="method" value="X-ray"/>
    <property type="resolution" value="1.10 A"/>
    <property type="chains" value="A=44-168"/>
</dbReference>
<dbReference type="PDB" id="8P9H">
    <property type="method" value="X-ray"/>
    <property type="resolution" value="1.19 A"/>
    <property type="chains" value="A=44-168"/>
</dbReference>
<dbReference type="PDB" id="8P9I">
    <property type="method" value="X-ray"/>
    <property type="resolution" value="1.23 A"/>
    <property type="chains" value="A/B=44-168"/>
</dbReference>
<dbReference type="PDB" id="8P9J">
    <property type="method" value="X-ray"/>
    <property type="resolution" value="1.42 A"/>
    <property type="chains" value="A=44-168"/>
</dbReference>
<dbReference type="PDB" id="8P9K">
    <property type="method" value="X-ray"/>
    <property type="resolution" value="1.25 A"/>
    <property type="chains" value="A=44-168"/>
</dbReference>
<dbReference type="PDB" id="8P9L">
    <property type="method" value="X-ray"/>
    <property type="resolution" value="1.29 A"/>
    <property type="chains" value="A=44-168"/>
</dbReference>
<dbReference type="PDB" id="8PIQ">
    <property type="method" value="X-ray"/>
    <property type="resolution" value="1.12 A"/>
    <property type="chains" value="A=44-168"/>
</dbReference>
<dbReference type="PDB" id="8PXA">
    <property type="method" value="X-ray"/>
    <property type="resolution" value="1.30 A"/>
    <property type="chains" value="AAA=44-168"/>
</dbReference>
<dbReference type="PDB" id="8PXM">
    <property type="method" value="X-ray"/>
    <property type="resolution" value="2.38 A"/>
    <property type="chains" value="A/B=44-168"/>
</dbReference>
<dbReference type="PDB" id="8PXN">
    <property type="method" value="X-ray"/>
    <property type="resolution" value="1.95 A"/>
    <property type="chains" value="A/B/C/D=44-168"/>
</dbReference>
<dbReference type="PDB" id="8Q34">
    <property type="method" value="X-ray"/>
    <property type="resolution" value="1.48 A"/>
    <property type="chains" value="A/B/C/D=44-171"/>
</dbReference>
<dbReference type="PDB" id="8QAL">
    <property type="method" value="X-ray"/>
    <property type="resolution" value="1.30 A"/>
    <property type="chains" value="A=44-168"/>
</dbReference>
<dbReference type="PDB" id="8QAN">
    <property type="method" value="X-ray"/>
    <property type="resolution" value="1.25 A"/>
    <property type="chains" value="A=44-168"/>
</dbReference>
<dbReference type="PDB" id="8QAP">
    <property type="method" value="X-ray"/>
    <property type="resolution" value="1.40 A"/>
    <property type="chains" value="A=44-168"/>
</dbReference>
<dbReference type="PDB" id="8QAR">
    <property type="method" value="X-ray"/>
    <property type="resolution" value="1.50 A"/>
    <property type="chains" value="A=44-168"/>
</dbReference>
<dbReference type="PDB" id="8R5H">
    <property type="method" value="EM"/>
    <property type="resolution" value="3.44 A"/>
    <property type="chains" value="F=346-460"/>
</dbReference>
<dbReference type="PDB" id="8RQ9">
    <property type="method" value="X-ray"/>
    <property type="resolution" value="2.91 A"/>
    <property type="chains" value="B/D=333-460"/>
</dbReference>
<dbReference type="PDB" id="8RWZ">
    <property type="method" value="EM"/>
    <property type="resolution" value="4.00 A"/>
    <property type="chains" value="A=333-460"/>
</dbReference>
<dbReference type="PDB" id="8RX0">
    <property type="method" value="EM"/>
    <property type="resolution" value="3.70 A"/>
    <property type="chains" value="A=349-459"/>
</dbReference>
<dbReference type="PDB" id="8V9F">
    <property type="method" value="X-ray"/>
    <property type="resolution" value="1.22 A"/>
    <property type="chains" value="A=44-168"/>
</dbReference>
<dbReference type="PDB" id="8WIU">
    <property type="method" value="X-ray"/>
    <property type="resolution" value="1.40 A"/>
    <property type="chains" value="A=42-165"/>
</dbReference>
<dbReference type="PDB" id="8WQO">
    <property type="method" value="X-ray"/>
    <property type="resolution" value="1.13 A"/>
    <property type="chains" value="A=42-165"/>
</dbReference>
<dbReference type="PDB" id="8WXY">
    <property type="method" value="X-ray"/>
    <property type="resolution" value="2.87 A"/>
    <property type="chains" value="A/B/C=44-168"/>
</dbReference>
<dbReference type="PDB" id="8WY3">
    <property type="method" value="X-ray"/>
    <property type="resolution" value="2.78 A"/>
    <property type="chains" value="A/B/C=44-168"/>
</dbReference>
<dbReference type="PDB" id="8WY7">
    <property type="method" value="X-ray"/>
    <property type="resolution" value="2.83 A"/>
    <property type="chains" value="A/B/C=44-168"/>
</dbReference>
<dbReference type="PDB" id="8WYP">
    <property type="method" value="X-ray"/>
    <property type="resolution" value="1.24 A"/>
    <property type="chains" value="A=44-167"/>
</dbReference>
<dbReference type="PDB" id="8YMB">
    <property type="method" value="X-ray"/>
    <property type="resolution" value="2.95 A"/>
    <property type="chains" value="A/F=333-460"/>
</dbReference>
<dbReference type="PDB" id="8YME">
    <property type="method" value="X-ray"/>
    <property type="resolution" value="1.18 A"/>
    <property type="chains" value="A=44-168"/>
</dbReference>
<dbReference type="PDB" id="8YMF">
    <property type="method" value="X-ray"/>
    <property type="resolution" value="1.01 A"/>
    <property type="chains" value="A=44-168"/>
</dbReference>
<dbReference type="PDB" id="8YMG">
    <property type="method" value="X-ray"/>
    <property type="resolution" value="1.01 A"/>
    <property type="chains" value="A=44-168"/>
</dbReference>
<dbReference type="PDB" id="8YMH">
    <property type="method" value="X-ray"/>
    <property type="resolution" value="1.04 A"/>
    <property type="chains" value="A=44-168"/>
</dbReference>
<dbReference type="PDB" id="8YMI">
    <property type="method" value="X-ray"/>
    <property type="resolution" value="1.01 A"/>
    <property type="chains" value="A=44-168"/>
</dbReference>
<dbReference type="PDB" id="8ZM8">
    <property type="method" value="X-ray"/>
    <property type="resolution" value="3.00 A"/>
    <property type="chains" value="A/B/C=44-168"/>
</dbReference>
<dbReference type="PDB" id="8ZMB">
    <property type="method" value="X-ray"/>
    <property type="resolution" value="2.79 A"/>
    <property type="chains" value="A/B/C=44-168"/>
</dbReference>
<dbReference type="PDB" id="8ZMQ">
    <property type="method" value="X-ray"/>
    <property type="resolution" value="2.20 A"/>
    <property type="chains" value="A/B/C/D/E/F/G/H/I/J/K/L/M/N/O/P/Q/R/S/T=333-460"/>
</dbReference>
<dbReference type="PDB" id="9F1J">
    <property type="method" value="X-ray"/>
    <property type="resolution" value="1.13 A"/>
    <property type="chains" value="A=43-168"/>
</dbReference>
<dbReference type="PDB" id="9F1K">
    <property type="method" value="X-ray"/>
    <property type="resolution" value="1.61 A"/>
    <property type="chains" value="A=44-168"/>
</dbReference>
<dbReference type="PDB" id="9F1L">
    <property type="method" value="X-ray"/>
    <property type="resolution" value="1.30 A"/>
    <property type="chains" value="A=44-168"/>
</dbReference>
<dbReference type="PDB" id="9F1M">
    <property type="method" value="X-ray"/>
    <property type="resolution" value="1.90 A"/>
    <property type="chains" value="A/B/C/D=44-168"/>
</dbReference>
<dbReference type="PDB" id="9F1N">
    <property type="method" value="X-ray"/>
    <property type="resolution" value="1.71 A"/>
    <property type="chains" value="A/B/C/D=44-168"/>
</dbReference>
<dbReference type="PDB" id="9FBY">
    <property type="method" value="X-ray"/>
    <property type="resolution" value="1.85 A"/>
    <property type="chains" value="A=44-168"/>
</dbReference>
<dbReference type="PDB" id="9FWX">
    <property type="method" value="X-ray"/>
    <property type="resolution" value="1.25 A"/>
    <property type="chains" value="A=44-168"/>
</dbReference>
<dbReference type="PDB" id="9FXP">
    <property type="method" value="X-ray"/>
    <property type="resolution" value="1.88 A"/>
    <property type="chains" value="A=44-168"/>
</dbReference>
<dbReference type="PDBsum" id="2I8N"/>
<dbReference type="PDBsum" id="2LSP"/>
<dbReference type="PDBsum" id="2MJV"/>
<dbReference type="PDBsum" id="2N3K"/>
<dbReference type="PDBsum" id="2NCZ"/>
<dbReference type="PDBsum" id="2ND0"/>
<dbReference type="PDBsum" id="2ND1"/>
<dbReference type="PDBsum" id="2NNU"/>
<dbReference type="PDBsum" id="2OSS"/>
<dbReference type="PDBsum" id="2OUO"/>
<dbReference type="PDBsum" id="2YEL"/>
<dbReference type="PDBsum" id="2YEM"/>
<dbReference type="PDBsum" id="3MXF"/>
<dbReference type="PDBsum" id="3P5O"/>
<dbReference type="PDBsum" id="3SVF"/>
<dbReference type="PDBsum" id="3SVG"/>
<dbReference type="PDBsum" id="3U5J"/>
<dbReference type="PDBsum" id="3U5K"/>
<dbReference type="PDBsum" id="3U5L"/>
<dbReference type="PDBsum" id="3UVW"/>
<dbReference type="PDBsum" id="3UVX"/>
<dbReference type="PDBsum" id="3UVY"/>
<dbReference type="PDBsum" id="3UW9"/>
<dbReference type="PDBsum" id="3ZYU"/>
<dbReference type="PDBsum" id="4A9L"/>
<dbReference type="PDBsum" id="4BJX"/>
<dbReference type="PDBsum" id="4BW1"/>
<dbReference type="PDBsum" id="4BW2"/>
<dbReference type="PDBsum" id="4BW3"/>
<dbReference type="PDBsum" id="4BW4"/>
<dbReference type="PDBsum" id="4C66"/>
<dbReference type="PDBsum" id="4C67"/>
<dbReference type="PDBsum" id="4CFK"/>
<dbReference type="PDBsum" id="4CFL"/>
<dbReference type="PDBsum" id="4CL9"/>
<dbReference type="PDBsum" id="4CLB"/>
<dbReference type="PDBsum" id="4DON"/>
<dbReference type="PDBsum" id="4E96"/>
<dbReference type="PDBsum" id="4F3I"/>
<dbReference type="PDBsum" id="4GPJ"/>
<dbReference type="PDBsum" id="4HBV"/>
<dbReference type="PDBsum" id="4HBW"/>
<dbReference type="PDBsum" id="4HBX"/>
<dbReference type="PDBsum" id="4HBY"/>
<dbReference type="PDBsum" id="4HXK"/>
<dbReference type="PDBsum" id="4HXL"/>
<dbReference type="PDBsum" id="4HXM"/>
<dbReference type="PDBsum" id="4HXN"/>
<dbReference type="PDBsum" id="4HXO"/>
<dbReference type="PDBsum" id="4HXP"/>
<dbReference type="PDBsum" id="4HXR"/>
<dbReference type="PDBsum" id="4HXS"/>
<dbReference type="PDBsum" id="4IOO"/>
<dbReference type="PDBsum" id="4IOQ"/>
<dbReference type="PDBsum" id="4IOR"/>
<dbReference type="PDBsum" id="4J0R"/>
<dbReference type="PDBsum" id="4J0S"/>
<dbReference type="PDBsum" id="4J3I"/>
<dbReference type="PDBsum" id="4KV1"/>
<dbReference type="PDBsum" id="4KV4"/>
<dbReference type="PDBsum" id="4LR6"/>
<dbReference type="PDBsum" id="4LRG"/>
<dbReference type="PDBsum" id="4LYI"/>
<dbReference type="PDBsum" id="4LYS"/>
<dbReference type="PDBsum" id="4LYW"/>
<dbReference type="PDBsum" id="4LZR"/>
<dbReference type="PDBsum" id="4LZS"/>
<dbReference type="PDBsum" id="4MEN"/>
<dbReference type="PDBsum" id="4MEO"/>
<dbReference type="PDBsum" id="4MEP"/>
<dbReference type="PDBsum" id="4MEQ"/>
<dbReference type="PDBsum" id="4MR3"/>
<dbReference type="PDBsum" id="4MR4"/>
<dbReference type="PDBsum" id="4NQM"/>
<dbReference type="PDBsum" id="4NR8"/>
<dbReference type="PDBsum" id="4NUC"/>
<dbReference type="PDBsum" id="4NUD"/>
<dbReference type="PDBsum" id="4NUE"/>
<dbReference type="PDBsum" id="4O70"/>
<dbReference type="PDBsum" id="4O71"/>
<dbReference type="PDBsum" id="4O72"/>
<dbReference type="PDBsum" id="4O74"/>
<dbReference type="PDBsum" id="4O75"/>
<dbReference type="PDBsum" id="4O76"/>
<dbReference type="PDBsum" id="4O77"/>
<dbReference type="PDBsum" id="4O78"/>
<dbReference type="PDBsum" id="4O7A"/>
<dbReference type="PDBsum" id="4O7B"/>
<dbReference type="PDBsum" id="4O7C"/>
<dbReference type="PDBsum" id="4O7E"/>
<dbReference type="PDBsum" id="4O7F"/>
<dbReference type="PDBsum" id="4OGI"/>
<dbReference type="PDBsum" id="4OGJ"/>
<dbReference type="PDBsum" id="4PCE"/>
<dbReference type="PDBsum" id="4PCI"/>
<dbReference type="PDBsum" id="4PS5"/>
<dbReference type="PDBsum" id="4QB3"/>
<dbReference type="PDBsum" id="4QR3"/>
<dbReference type="PDBsum" id="4QR4"/>
<dbReference type="PDBsum" id="4QR5"/>
<dbReference type="PDBsum" id="4QZS"/>
<dbReference type="PDBsum" id="4UIX"/>
<dbReference type="PDBsum" id="4UIY"/>
<dbReference type="PDBsum" id="4UIZ"/>
<dbReference type="PDBsum" id="4UYD"/>
<dbReference type="PDBsum" id="4WHW"/>
<dbReference type="PDBsum" id="4WIV"/>
<dbReference type="PDBsum" id="4X2I"/>
<dbReference type="PDBsum" id="4XY9"/>
<dbReference type="PDBsum" id="4XYA"/>
<dbReference type="PDBsum" id="4YH3"/>
<dbReference type="PDBsum" id="4YH4"/>
<dbReference type="PDBsum" id="4Z1Q"/>
<dbReference type="PDBsum" id="4Z1S"/>
<dbReference type="PDBsum" id="4Z93"/>
<dbReference type="PDBsum" id="4ZC9"/>
<dbReference type="PDBsum" id="4ZW1"/>
<dbReference type="PDBsum" id="5A5S"/>
<dbReference type="PDBsum" id="5A85"/>
<dbReference type="PDBsum" id="5ACY"/>
<dbReference type="PDBsum" id="5AD2"/>
<dbReference type="PDBsum" id="5AD3"/>
<dbReference type="PDBsum" id="5BT4"/>
<dbReference type="PDBsum" id="5CFW"/>
<dbReference type="PDBsum" id="5COI"/>
<dbReference type="PDBsum" id="5CP5"/>
<dbReference type="PDBsum" id="5CPE"/>
<dbReference type="PDBsum" id="5CQT"/>
<dbReference type="PDBsum" id="5CRM"/>
<dbReference type="PDBsum" id="5CRZ"/>
<dbReference type="PDBsum" id="5CS8"/>
<dbReference type="PDBsum" id="5CTL"/>
<dbReference type="PDBsum" id="5CY9"/>
<dbReference type="PDBsum" id="5D0C"/>
<dbReference type="PDBsum" id="5D24"/>
<dbReference type="PDBsum" id="5D25"/>
<dbReference type="PDBsum" id="5D26"/>
<dbReference type="PDBsum" id="5D3H"/>
<dbReference type="PDBsum" id="5D3J"/>
<dbReference type="PDBsum" id="5D3L"/>
<dbReference type="PDBsum" id="5D3N"/>
<dbReference type="PDBsum" id="5D3P"/>
<dbReference type="PDBsum" id="5D3R"/>
<dbReference type="PDBsum" id="5D3S"/>
<dbReference type="PDBsum" id="5D3T"/>
<dbReference type="PDBsum" id="5DLX"/>
<dbReference type="PDBsum" id="5DLZ"/>
<dbReference type="PDBsum" id="5DW2"/>
<dbReference type="PDBsum" id="5DX4"/>
<dbReference type="PDBsum" id="5E0R"/>
<dbReference type="PDBsum" id="5EGU"/>
<dbReference type="PDBsum" id="5EI4"/>
<dbReference type="PDBsum" id="5EIS"/>
<dbReference type="PDBsum" id="5F5Z"/>
<dbReference type="PDBsum" id="5F60"/>
<dbReference type="PDBsum" id="5F61"/>
<dbReference type="PDBsum" id="5F62"/>
<dbReference type="PDBsum" id="5F63"/>
<dbReference type="PDBsum" id="5FBX"/>
<dbReference type="PDBsum" id="5H21"/>
<dbReference type="PDBsum" id="5HCL"/>
<dbReference type="PDBsum" id="5HLS"/>
<dbReference type="PDBsum" id="5HM0"/>
<dbReference type="PDBsum" id="5HQ5"/>
<dbReference type="PDBsum" id="5HQ6"/>
<dbReference type="PDBsum" id="5HQ7"/>
<dbReference type="PDBsum" id="5I80"/>
<dbReference type="PDBsum" id="5I88"/>
<dbReference type="PDBsum" id="5IGK"/>
<dbReference type="PDBsum" id="5JWM"/>
<dbReference type="PDBsum" id="5KDH"/>
<dbReference type="PDBsum" id="5KHM"/>
<dbReference type="PDBsum" id="5KJ0"/>
<dbReference type="PDBsum" id="5KU3"/>
<dbReference type="PDBsum" id="5LJ1"/>
<dbReference type="PDBsum" id="5LJ2"/>
<dbReference type="PDBsum" id="5LRQ"/>
<dbReference type="PDBsum" id="5LUU"/>
<dbReference type="PDBsum" id="5M39"/>
<dbReference type="PDBsum" id="5M3A"/>
<dbReference type="PDBsum" id="5MKZ"/>
<dbReference type="PDBsum" id="5MLI"/>
<dbReference type="PDBsum" id="5N2M"/>
<dbReference type="PDBsum" id="5NNC"/>
<dbReference type="PDBsum" id="5NND"/>
<dbReference type="PDBsum" id="5NNE"/>
<dbReference type="PDBsum" id="5NNF"/>
<dbReference type="PDBsum" id="5NNG"/>
<dbReference type="PDBsum" id="5O97"/>
<dbReference type="PDBsum" id="5OVB"/>
<dbReference type="PDBsum" id="5OWM"/>
<dbReference type="PDBsum" id="5OWW"/>
<dbReference type="PDBsum" id="5S9P"/>
<dbReference type="PDBsum" id="5S9Q"/>
<dbReference type="PDBsum" id="5S9R"/>
<dbReference type="PDBsum" id="5T35"/>
<dbReference type="PDBsum" id="5TI2"/>
<dbReference type="PDBsum" id="5TI3"/>
<dbReference type="PDBsum" id="5TI4"/>
<dbReference type="PDBsum" id="5TI5"/>
<dbReference type="PDBsum" id="5TI6"/>
<dbReference type="PDBsum" id="5TI7"/>
<dbReference type="PDBsum" id="5U28"/>
<dbReference type="PDBsum" id="5U2C"/>
<dbReference type="PDBsum" id="5U2E"/>
<dbReference type="PDBsum" id="5U2F"/>
<dbReference type="PDBsum" id="5UEO"/>
<dbReference type="PDBsum" id="5UEP"/>
<dbReference type="PDBsum" id="5UEQ"/>
<dbReference type="PDBsum" id="5UER"/>
<dbReference type="PDBsum" id="5UES"/>
<dbReference type="PDBsum" id="5UET"/>
<dbReference type="PDBsum" id="5UEU"/>
<dbReference type="PDBsum" id="5UEV"/>
<dbReference type="PDBsum" id="5UEX"/>
<dbReference type="PDBsum" id="5UEY"/>
<dbReference type="PDBsum" id="5UEZ"/>
<dbReference type="PDBsum" id="5UF0"/>
<dbReference type="PDBsum" id="5ULA"/>
<dbReference type="PDBsum" id="5UOO"/>
<dbReference type="PDBsum" id="5UVS"/>
<dbReference type="PDBsum" id="5UVT"/>
<dbReference type="PDBsum" id="5UVU"/>
<dbReference type="PDBsum" id="5UVV"/>
<dbReference type="PDBsum" id="5UVW"/>
<dbReference type="PDBsum" id="5UVX"/>
<dbReference type="PDBsum" id="5UVY"/>
<dbReference type="PDBsum" id="5UVZ"/>
<dbReference type="PDBsum" id="5V67"/>
<dbReference type="PDBsum" id="5VBO"/>
<dbReference type="PDBsum" id="5VBP"/>
<dbReference type="PDBsum" id="5VOM"/>
<dbReference type="PDBsum" id="5VZS"/>
<dbReference type="PDBsum" id="5W55"/>
<dbReference type="PDBsum" id="5WA5"/>
<dbReference type="PDBsum" id="5WMA"/>
<dbReference type="PDBsum" id="5WMD"/>
<dbReference type="PDBsum" id="5WMG"/>
<dbReference type="PDBsum" id="5WUU"/>
<dbReference type="PDBsum" id="5XHY"/>
<dbReference type="PDBsum" id="5XI2"/>
<dbReference type="PDBsum" id="5XI3"/>
<dbReference type="PDBsum" id="5XI4"/>
<dbReference type="PDBsum" id="5Y1Y"/>
<dbReference type="PDBsum" id="5Y8C"/>
<dbReference type="PDBsum" id="5Y8W"/>
<dbReference type="PDBsum" id="5Y8Y"/>
<dbReference type="PDBsum" id="5Y8Z"/>
<dbReference type="PDBsum" id="5Y93"/>
<dbReference type="PDBsum" id="5Y94"/>
<dbReference type="PDBsum" id="5YOU"/>
<dbReference type="PDBsum" id="5YOV"/>
<dbReference type="PDBsum" id="5YQX"/>
<dbReference type="PDBsum" id="5Z1R"/>
<dbReference type="PDBsum" id="5Z1S"/>
<dbReference type="PDBsum" id="5Z1T"/>
<dbReference type="PDBsum" id="5Z5T"/>
<dbReference type="PDBsum" id="5Z5U"/>
<dbReference type="PDBsum" id="5Z5V"/>
<dbReference type="PDBsum" id="5Z8G"/>
<dbReference type="PDBsum" id="5Z8R"/>
<dbReference type="PDBsum" id="5Z8Z"/>
<dbReference type="PDBsum" id="5Z90"/>
<dbReference type="PDBsum" id="5Z9C"/>
<dbReference type="PDBsum" id="5Z9K"/>
<dbReference type="PDBsum" id="6AFR"/>
<dbReference type="PDBsum" id="6AJV"/>
<dbReference type="PDBsum" id="6AJW"/>
<dbReference type="PDBsum" id="6AJX"/>
<dbReference type="PDBsum" id="6AJY"/>
<dbReference type="PDBsum" id="6AJZ"/>
<dbReference type="PDBsum" id="6BN7"/>
<dbReference type="PDBsum" id="6BN8"/>
<dbReference type="PDBsum" id="6BN9"/>
<dbReference type="PDBsum" id="6BNB"/>
<dbReference type="PDBsum" id="6BNH"/>
<dbReference type="PDBsum" id="6BOY"/>
<dbReference type="PDBsum" id="6C7Q"/>
<dbReference type="PDBsum" id="6C7R"/>
<dbReference type="PDBsum" id="6CD4"/>
<dbReference type="PDBsum" id="6CD5"/>
<dbReference type="PDBsum" id="6CIS"/>
<dbReference type="PDBsum" id="6CIY"/>
<dbReference type="PDBsum" id="6CJ1"/>
<dbReference type="PDBsum" id="6CJ2"/>
<dbReference type="PDBsum" id="6CKR"/>
<dbReference type="PDBsum" id="6CKS"/>
<dbReference type="PDBsum" id="6CZU"/>
<dbReference type="PDBsum" id="6CZV"/>
<dbReference type="PDBsum" id="6DJC"/>
<dbReference type="PDBsum" id="6DL2"/>
<dbReference type="PDBsum" id="6DMJ"/>
<dbReference type="PDBsum" id="6DML"/>
<dbReference type="PDBsum" id="6DNE"/>
<dbReference type="PDBsum" id="6DUV"/>
<dbReference type="PDBsum" id="6E4A"/>
<dbReference type="PDBsum" id="6FFD"/>
<dbReference type="PDBsum" id="6FNX"/>
<dbReference type="PDBsum" id="6FO5"/>
<dbReference type="PDBsum" id="6FSY"/>
<dbReference type="PDBsum" id="6FT3"/>
<dbReference type="PDBsum" id="6FT4"/>
<dbReference type="PDBsum" id="6G0D"/>
<dbReference type="PDBsum" id="6G0E"/>
<dbReference type="PDBsum" id="6G0F"/>
<dbReference type="PDBsum" id="6G0G"/>
<dbReference type="PDBsum" id="6G0H"/>
<dbReference type="PDBsum" id="6G0O"/>
<dbReference type="PDBsum" id="6G0P"/>
<dbReference type="PDBsum" id="6G0Q"/>
<dbReference type="PDBsum" id="6G0R"/>
<dbReference type="PDBsum" id="6G0S"/>
<dbReference type="PDBsum" id="6HDQ"/>
<dbReference type="PDBsum" id="6HOV"/>
<dbReference type="PDBsum" id="6I7X"/>
<dbReference type="PDBsum" id="6I7Y"/>
<dbReference type="PDBsum" id="6IN1"/>
<dbReference type="PDBsum" id="6JI3"/>
<dbReference type="PDBsum" id="6JI4"/>
<dbReference type="PDBsum" id="6JI5"/>
<dbReference type="PDBsum" id="6JJ3"/>
<dbReference type="PDBsum" id="6JJ5"/>
<dbReference type="PDBsum" id="6JJ6"/>
<dbReference type="PDBsum" id="6JJB"/>
<dbReference type="PDBsum" id="6KEC"/>
<dbReference type="PDBsum" id="6KED"/>
<dbReference type="PDBsum" id="6KEE"/>
<dbReference type="PDBsum" id="6KEF"/>
<dbReference type="PDBsum" id="6KEG"/>
<dbReference type="PDBsum" id="6KEH"/>
<dbReference type="PDBsum" id="6KEI"/>
<dbReference type="PDBsum" id="6KEJ"/>
<dbReference type="PDBsum" id="6KEK"/>
<dbReference type="PDBsum" id="6KO2"/>
<dbReference type="PDBsum" id="6LG4"/>
<dbReference type="PDBsum" id="6LG5"/>
<dbReference type="PDBsum" id="6LG6"/>
<dbReference type="PDBsum" id="6LG7"/>
<dbReference type="PDBsum" id="6LG8"/>
<dbReference type="PDBsum" id="6LG9"/>
<dbReference type="PDBsum" id="6LIH"/>
<dbReference type="PDBsum" id="6LIM"/>
<dbReference type="PDBsum" id="6MAU"/>
<dbReference type="PDBsum" id="6MH1"/>
<dbReference type="PDBsum" id="6MH7"/>
<dbReference type="PDBsum" id="6MNL"/>
<dbReference type="PDBsum" id="6P05"/>
<dbReference type="PDBsum" id="6PRT"/>
<dbReference type="PDBsum" id="6PS9"/>
<dbReference type="PDBsum" id="6PSB"/>
<dbReference type="PDBsum" id="6Q3Y"/>
<dbReference type="PDBsum" id="6Q3Z"/>
<dbReference type="PDBsum" id="6RWJ"/>
<dbReference type="PDBsum" id="6S25"/>
<dbReference type="PDBsum" id="6S4B"/>
<dbReference type="PDBsum" id="6S6K"/>
<dbReference type="PDBsum" id="6SA2"/>
<dbReference type="PDBsum" id="6SA3"/>
<dbReference type="PDBsum" id="6SAH"/>
<dbReference type="PDBsum" id="6SAJ"/>
<dbReference type="PDBsum" id="6SB8"/>
<dbReference type="PDBsum" id="6SE4"/>
<dbReference type="PDBsum" id="6SIS"/>
<dbReference type="PDBsum" id="6SWN"/>
<dbReference type="PDBsum" id="6SWQ"/>
<dbReference type="PDBsum" id="6TPX"/>
<dbReference type="PDBsum" id="6TPY"/>
<dbReference type="PDBsum" id="6TPZ"/>
<dbReference type="PDBsum" id="6U0D"/>
<dbReference type="PDBsum" id="6U6K"/>
<dbReference type="PDBsum" id="6U6L"/>
<dbReference type="PDBsum" id="6U72"/>
<dbReference type="PDBsum" id="6U74"/>
<dbReference type="PDBsum" id="6U8G"/>
<dbReference type="PDBsum" id="6U8I"/>
<dbReference type="PDBsum" id="6U8M"/>
<dbReference type="PDBsum" id="6ULS"/>
<dbReference type="PDBsum" id="6ULV"/>
<dbReference type="PDBsum" id="6UVJ"/>
<dbReference type="PDBsum" id="6UVM"/>
<dbReference type="PDBsum" id="6UWU"/>
<dbReference type="PDBsum" id="6UWX"/>
<dbReference type="PDBsum" id="6V0U"/>
<dbReference type="PDBsum" id="6V1K"/>
<dbReference type="PDBsum" id="6V1L"/>
<dbReference type="PDBsum" id="6V1U"/>
<dbReference type="PDBsum" id="6VIW"/>
<dbReference type="PDBsum" id="6VIX"/>
<dbReference type="PDBsum" id="6VIZ"/>
<dbReference type="PDBsum" id="6VUB"/>
<dbReference type="PDBsum" id="6VUC"/>
<dbReference type="PDBsum" id="6VUF"/>
<dbReference type="PDBsum" id="6VUJ"/>
<dbReference type="PDBsum" id="6WGX"/>
<dbReference type="PDBsum" id="6WVX"/>
<dbReference type="PDBsum" id="6WW8"/>
<dbReference type="PDBsum" id="6X7B"/>
<dbReference type="PDBsum" id="6X7C"/>
<dbReference type="PDBsum" id="6X7D"/>
<dbReference type="PDBsum" id="6XUZ"/>
<dbReference type="PDBsum" id="6XV3"/>
<dbReference type="PDBsum" id="6XV7"/>
<dbReference type="PDBsum" id="6XVC"/>
<dbReference type="PDBsum" id="6YIN"/>
<dbReference type="PDBsum" id="6YQN"/>
<dbReference type="PDBsum" id="6YQO"/>
<dbReference type="PDBsum" id="6YQP"/>
<dbReference type="PDBsum" id="6YQZ"/>
<dbReference type="PDBsum" id="6Z7G"/>
<dbReference type="PDBsum" id="6Z7L"/>
<dbReference type="PDBsum" id="6Z7M"/>
<dbReference type="PDBsum" id="6ZB3"/>
<dbReference type="PDBsum" id="6ZCI"/>
<dbReference type="PDBsum" id="6ZED"/>
<dbReference type="PDBsum" id="6ZEL"/>
<dbReference type="PDBsum" id="6ZF9"/>
<dbReference type="PDBsum" id="7A9U"/>
<dbReference type="PDBsum" id="7AJN"/>
<dbReference type="PDBsum" id="7AQT"/>
<dbReference type="PDBsum" id="7AXR"/>
<dbReference type="PDBsum" id="7B1T"/>
<dbReference type="PDBsum" id="7C2Z"/>
<dbReference type="PDBsum" id="7C6P"/>
<dbReference type="PDBsum" id="7DHS"/>
<dbReference type="PDBsum" id="7EHW"/>
<dbReference type="PDBsum" id="7EHY"/>
<dbReference type="PDBsum" id="7EIG"/>
<dbReference type="PDBsum" id="7EIK"/>
<dbReference type="PDBsum" id="7EIL"/>
<dbReference type="PDBsum" id="7FH2"/>
<dbReference type="PDBsum" id="7JKW"/>
<dbReference type="PDBsum" id="7JKX"/>
<dbReference type="PDBsum" id="7JKY"/>
<dbReference type="PDBsum" id="7JKZ"/>
<dbReference type="PDBsum" id="7K6G"/>
<dbReference type="PDBsum" id="7K6H"/>
<dbReference type="PDBsum" id="7KHH"/>
<dbReference type="PDBsum" id="7KHL"/>
<dbReference type="PDBsum" id="7KO0"/>
<dbReference type="PDBsum" id="7L9M"/>
<dbReference type="PDBsum" id="7LA9"/>
<dbReference type="PDBsum" id="7LH8"/>
<dbReference type="PDBsum" id="7M16"/>
<dbReference type="PDBsum" id="7MCE"/>
<dbReference type="PDBsum" id="7MCF"/>
<dbReference type="PDBsum" id="7MLQ"/>
<dbReference type="PDBsum" id="7MLR"/>
<dbReference type="PDBsum" id="7MLS"/>
<dbReference type="PDBsum" id="7MR5"/>
<dbReference type="PDBsum" id="7MR6"/>
<dbReference type="PDBsum" id="7MR7"/>
<dbReference type="PDBsum" id="7MR8"/>
<dbReference type="PDBsum" id="7MR9"/>
<dbReference type="PDBsum" id="7MRA"/>
<dbReference type="PDBsum" id="7MRB"/>
<dbReference type="PDBsum" id="7O18"/>
<dbReference type="PDBsum" id="7OEO"/>
<dbReference type="PDBsum" id="7P6V"/>
<dbReference type="PDBsum" id="7P6W"/>
<dbReference type="PDBsum" id="7P6Y"/>
<dbReference type="PDBsum" id="7Q3F"/>
<dbReference type="PDBsum" id="7QDL"/>
<dbReference type="PDBsum" id="7R5B"/>
<dbReference type="PDBsum" id="7R9C"/>
<dbReference type="PDBsum" id="7REK"/>
<dbReference type="PDBsum" id="7REL"/>
<dbReference type="PDBsum" id="7REM"/>
<dbReference type="PDBsum" id="7RJO"/>
<dbReference type="PDBsum" id="7RJP"/>
<dbReference type="PDBsum" id="7RJQ"/>
<dbReference type="PDBsum" id="7RJR"/>
<dbReference type="PDBsum" id="7RMD"/>
<dbReference type="PDBsum" id="7RN2"/>
<dbReference type="PDBsum" id="7RUH"/>
<dbReference type="PDBsum" id="7RUI"/>
<dbReference type="PDBsum" id="7RXR"/>
<dbReference type="PDBsum" id="7RXS"/>
<dbReference type="PDBsum" id="7RXT"/>
<dbReference type="PDBsum" id="7T3F"/>
<dbReference type="PDBsum" id="7TUQ"/>
<dbReference type="PDBsum" id="7TV0"/>
<dbReference type="PDBsum" id="7UGF"/>
<dbReference type="PDBsum" id="7USJ"/>
<dbReference type="PDBsum" id="7USK"/>
<dbReference type="PDBsum" id="7UTY"/>
<dbReference type="PDBsum" id="7UZN"/>
<dbReference type="PDBsum" id="7V1U"/>
<dbReference type="PDBsum" id="7V2J"/>
<dbReference type="PDBsum" id="7W3D"/>
<dbReference type="PDBsum" id="7WJS"/>
<dbReference type="PDBsum" id="7WKY"/>
<dbReference type="PDBsum" id="7WL4"/>
<dbReference type="PDBsum" id="7WWZ"/>
<dbReference type="PDBsum" id="7X6T"/>
<dbReference type="PDBsum" id="7YL2"/>
<dbReference type="PDBsum" id="7YMG"/>
<dbReference type="PDBsum" id="7YQ9"/>
<dbReference type="PDBsum" id="7Z9W"/>
<dbReference type="PDBsum" id="7Z9Y"/>
<dbReference type="PDBsum" id="7ZA6"/>
<dbReference type="PDBsum" id="7ZA7"/>
<dbReference type="PDBsum" id="7ZA8"/>
<dbReference type="PDBsum" id="7ZA9"/>
<dbReference type="PDBsum" id="7ZAA"/>
<dbReference type="PDBsum" id="7ZAD"/>
<dbReference type="PDBsum" id="7ZAE"/>
<dbReference type="PDBsum" id="7ZAJ"/>
<dbReference type="PDBsum" id="7ZAQ"/>
<dbReference type="PDBsum" id="7ZAR"/>
<dbReference type="PDBsum" id="7ZAT"/>
<dbReference type="PDBsum" id="7ZE6"/>
<dbReference type="PDBsum" id="7ZE7"/>
<dbReference type="PDBsum" id="7ZEF"/>
<dbReference type="PDBsum" id="7ZEN"/>
<dbReference type="PDBsum" id="7ZFN"/>
<dbReference type="PDBsum" id="7ZFO"/>
<dbReference type="PDBsum" id="7ZFS"/>
<dbReference type="PDBsum" id="7ZFT"/>
<dbReference type="PDBsum" id="7ZFU"/>
<dbReference type="PDBsum" id="7ZFV"/>
<dbReference type="PDBsum" id="7ZFY"/>
<dbReference type="PDBsum" id="7ZFZ"/>
<dbReference type="PDBsum" id="7ZG1"/>
<dbReference type="PDBsum" id="7ZG2"/>
<dbReference type="PDBsum" id="7ZNT"/>
<dbReference type="PDBsum" id="8B5B"/>
<dbReference type="PDBsum" id="8B5C"/>
<dbReference type="PDBsum" id="8B96"/>
<dbReference type="PDBsum" id="8B98"/>
<dbReference type="PDBsum" id="8BDS"/>
<dbReference type="PDBsum" id="8BDT"/>
<dbReference type="PDBsum" id="8BDX"/>
<dbReference type="PDBsum" id="8BEB"/>
<dbReference type="PDBsum" id="8C11"/>
<dbReference type="PDBsum" id="8CKF"/>
<dbReference type="PDBsum" id="8CV4"/>
<dbReference type="PDBsum" id="8CV6"/>
<dbReference type="PDBsum" id="8DYR"/>
<dbReference type="PDBsum" id="8E17"/>
<dbReference type="PDBsum" id="8E3W"/>
<dbReference type="PDBsum" id="8EAD"/>
<dbReference type="PDBsum" id="8EWV"/>
<dbReference type="PDBsum" id="8FVK"/>
<dbReference type="PDBsum" id="8G46"/>
<dbReference type="PDBsum" id="8GPZ"/>
<dbReference type="PDBsum" id="8GQ0"/>
<dbReference type="PDBsum" id="8IBQ"/>
<dbReference type="PDBsum" id="8IDH"/>
<dbReference type="PDBsum" id="8K14"/>
<dbReference type="PDBsum" id="8OV6"/>
<dbReference type="PDBsum" id="8P9F"/>
<dbReference type="PDBsum" id="8P9G"/>
<dbReference type="PDBsum" id="8P9H"/>
<dbReference type="PDBsum" id="8P9I"/>
<dbReference type="PDBsum" id="8P9J"/>
<dbReference type="PDBsum" id="8P9K"/>
<dbReference type="PDBsum" id="8P9L"/>
<dbReference type="PDBsum" id="8PIQ"/>
<dbReference type="PDBsum" id="8PXA"/>
<dbReference type="PDBsum" id="8PXM"/>
<dbReference type="PDBsum" id="8PXN"/>
<dbReference type="PDBsum" id="8Q34"/>
<dbReference type="PDBsum" id="8QAL"/>
<dbReference type="PDBsum" id="8QAN"/>
<dbReference type="PDBsum" id="8QAP"/>
<dbReference type="PDBsum" id="8QAR"/>
<dbReference type="PDBsum" id="8R5H"/>
<dbReference type="PDBsum" id="8RQ9"/>
<dbReference type="PDBsum" id="8RWZ"/>
<dbReference type="PDBsum" id="8RX0"/>
<dbReference type="PDBsum" id="8V9F"/>
<dbReference type="PDBsum" id="8WIU"/>
<dbReference type="PDBsum" id="8WQO"/>
<dbReference type="PDBsum" id="8WXY"/>
<dbReference type="PDBsum" id="8WY3"/>
<dbReference type="PDBsum" id="8WY7"/>
<dbReference type="PDBsum" id="8WYP"/>
<dbReference type="PDBsum" id="8YMB"/>
<dbReference type="PDBsum" id="8YME"/>
<dbReference type="PDBsum" id="8YMF"/>
<dbReference type="PDBsum" id="8YMG"/>
<dbReference type="PDBsum" id="8YMH"/>
<dbReference type="PDBsum" id="8YMI"/>
<dbReference type="PDBsum" id="8ZM8"/>
<dbReference type="PDBsum" id="8ZMB"/>
<dbReference type="PDBsum" id="8ZMQ"/>
<dbReference type="PDBsum" id="9F1J"/>
<dbReference type="PDBsum" id="9F1K"/>
<dbReference type="PDBsum" id="9F1L"/>
<dbReference type="PDBsum" id="9F1M"/>
<dbReference type="PDBsum" id="9F1N"/>
<dbReference type="PDBsum" id="9FBY"/>
<dbReference type="PDBsum" id="9FWX"/>
<dbReference type="PDBsum" id="9FXP"/>
<dbReference type="BMRB" id="O60885"/>
<dbReference type="EMDB" id="EMD-17172"/>
<dbReference type="EMDB" id="EMD-18915"/>
<dbReference type="EMDB" id="EMD-29714"/>
<dbReference type="SASBDB" id="O60885"/>
<dbReference type="SMR" id="O60885"/>
<dbReference type="BioGRID" id="117036">
    <property type="interactions" value="1616"/>
</dbReference>
<dbReference type="CORUM" id="O60885"/>
<dbReference type="DIP" id="DIP-39776N"/>
<dbReference type="FunCoup" id="O60885">
    <property type="interactions" value="3624"/>
</dbReference>
<dbReference type="IntAct" id="O60885">
    <property type="interactions" value="91"/>
</dbReference>
<dbReference type="MINT" id="O60885"/>
<dbReference type="STRING" id="9606.ENSP00000263377"/>
<dbReference type="BindingDB" id="O60885"/>
<dbReference type="ChEMBL" id="CHEMBL1163125"/>
<dbReference type="DrugBank" id="DB19199">
    <property type="generic name" value="ABBV-744"/>
</dbReference>
<dbReference type="DrugBank" id="DB17018">
    <property type="generic name" value="AZD-5153"/>
</dbReference>
<dbReference type="DrugBank" id="DB15189">
    <property type="generic name" value="Birabresib"/>
</dbReference>
<dbReference type="DrugBank" id="DB17021">
    <property type="generic name" value="JQ1"/>
</dbReference>
<dbReference type="DrugBank" id="DB16239">
    <property type="generic name" value="Molibresib"/>
</dbReference>
<dbReference type="DrugBank" id="DB17129">
    <property type="generic name" value="Pelabresib anhydrous"/>
</dbReference>
<dbReference type="DrugCentral" id="O60885"/>
<dbReference type="GuidetoPHARMACOLOGY" id="1945"/>
<dbReference type="GlyCosmos" id="O60885">
    <property type="glycosylation" value="8 sites, 2 glycans"/>
</dbReference>
<dbReference type="GlyGen" id="O60885">
    <property type="glycosylation" value="11 sites, 2 O-linked glycans (11 sites)"/>
</dbReference>
<dbReference type="iPTMnet" id="O60885"/>
<dbReference type="MetOSite" id="O60885"/>
<dbReference type="PhosphoSitePlus" id="O60885"/>
<dbReference type="SwissPalm" id="O60885"/>
<dbReference type="BioMuta" id="BRD4"/>
<dbReference type="jPOST" id="O60885"/>
<dbReference type="MassIVE" id="O60885"/>
<dbReference type="PaxDb" id="9606-ENSP00000263377"/>
<dbReference type="PeptideAtlas" id="O60885"/>
<dbReference type="ProteomicsDB" id="49651">
    <molecule id="O60885-1"/>
</dbReference>
<dbReference type="ProteomicsDB" id="49652">
    <molecule id="O60885-2"/>
</dbReference>
<dbReference type="ProteomicsDB" id="62139"/>
<dbReference type="Pumba" id="O60885"/>
<dbReference type="ABCD" id="O60885">
    <property type="antibodies" value="4 sequenced antibodies"/>
</dbReference>
<dbReference type="Antibodypedia" id="13956">
    <property type="antibodies" value="486 antibodies from 39 providers"/>
</dbReference>
<dbReference type="DNASU" id="23476"/>
<dbReference type="Ensembl" id="ENST00000263377.6">
    <molecule id="O60885-1"/>
    <property type="protein sequence ID" value="ENSP00000263377.1"/>
    <property type="gene ID" value="ENSG00000141867.19"/>
</dbReference>
<dbReference type="Ensembl" id="ENST00000360016.9">
    <molecule id="O60885-3"/>
    <property type="protein sequence ID" value="ENSP00000353112.4"/>
    <property type="gene ID" value="ENSG00000141867.19"/>
</dbReference>
<dbReference type="Ensembl" id="ENST00000371835.8">
    <molecule id="O60885-2"/>
    <property type="protein sequence ID" value="ENSP00000360901.3"/>
    <property type="gene ID" value="ENSG00000141867.19"/>
</dbReference>
<dbReference type="Ensembl" id="ENST00000679869.1">
    <molecule id="O60885-1"/>
    <property type="protein sequence ID" value="ENSP00000506350.1"/>
    <property type="gene ID" value="ENSG00000141867.19"/>
</dbReference>
<dbReference type="GeneID" id="23476"/>
<dbReference type="KEGG" id="hsa:23476"/>
<dbReference type="MANE-Select" id="ENST00000679869.1">
    <property type="protein sequence ID" value="ENSP00000506350.1"/>
    <property type="RefSeq nucleotide sequence ID" value="NM_001379291.1"/>
    <property type="RefSeq protein sequence ID" value="NP_001366220.1"/>
</dbReference>
<dbReference type="UCSC" id="uc002nar.4">
    <molecule id="O60885-1"/>
    <property type="organism name" value="human"/>
</dbReference>
<dbReference type="AGR" id="HGNC:13575"/>
<dbReference type="CTD" id="23476"/>
<dbReference type="DisGeNET" id="23476"/>
<dbReference type="GeneCards" id="BRD4"/>
<dbReference type="GeneReviews" id="BRD4"/>
<dbReference type="HGNC" id="HGNC:13575">
    <property type="gene designation" value="BRD4"/>
</dbReference>
<dbReference type="HPA" id="ENSG00000141867">
    <property type="expression patterns" value="Low tissue specificity"/>
</dbReference>
<dbReference type="MalaCards" id="BRD4"/>
<dbReference type="MIM" id="608749">
    <property type="type" value="gene"/>
</dbReference>
<dbReference type="MIM" id="620568">
    <property type="type" value="phenotype"/>
</dbReference>
<dbReference type="neXtProt" id="NX_O60885"/>
<dbReference type="OpenTargets" id="ENSG00000141867"/>
<dbReference type="Orphanet" id="199">
    <property type="disease" value="Cornelia de Lange syndrome"/>
</dbReference>
<dbReference type="Orphanet" id="443167">
    <property type="disease" value="NUT midline carcinoma"/>
</dbReference>
<dbReference type="PharmGKB" id="PA25416"/>
<dbReference type="VEuPathDB" id="HostDB:ENSG00000141867"/>
<dbReference type="eggNOG" id="KOG1474">
    <property type="taxonomic scope" value="Eukaryota"/>
</dbReference>
<dbReference type="GeneTree" id="ENSGT00940000154549"/>
<dbReference type="HOGENOM" id="CLU_001499_0_3_1"/>
<dbReference type="InParanoid" id="O60885"/>
<dbReference type="OMA" id="VAMECPT"/>
<dbReference type="OrthoDB" id="21449at2759"/>
<dbReference type="PAN-GO" id="O60885">
    <property type="GO annotations" value="5 GO annotations based on evolutionary models"/>
</dbReference>
<dbReference type="PhylomeDB" id="O60885"/>
<dbReference type="TreeFam" id="TF317345"/>
<dbReference type="PathwayCommons" id="O60885"/>
<dbReference type="Reactome" id="R-HSA-9679191">
    <property type="pathway name" value="Potential therapeutics for SARS"/>
</dbReference>
<dbReference type="SignaLink" id="O60885"/>
<dbReference type="SIGNOR" id="O60885"/>
<dbReference type="BioGRID-ORCS" id="23476">
    <property type="hits" value="721 hits in 1217 CRISPR screens"/>
</dbReference>
<dbReference type="CD-CODE" id="38EC0B30">
    <property type="entry name" value="Transcriptional condensate"/>
</dbReference>
<dbReference type="CD-CODE" id="462A97B5">
    <property type="entry name" value="Leucocyte nuclear body"/>
</dbReference>
<dbReference type="CD-CODE" id="634C353E">
    <property type="entry name" value="BRD4 condensate"/>
</dbReference>
<dbReference type="CD-CODE" id="67BDE49F">
    <property type="entry name" value="Synthetic Condensate 000353"/>
</dbReference>
<dbReference type="CD-CODE" id="6BD4AB7A">
    <property type="entry name" value="Synthetic Condensate 000182"/>
</dbReference>
<dbReference type="CD-CODE" id="804901D1">
    <property type="entry name" value="Nuclear speckle"/>
</dbReference>
<dbReference type="CD-CODE" id="9355EE84">
    <property type="entry name" value="Synthetic Condensate 000292"/>
</dbReference>
<dbReference type="CD-CODE" id="DBAF6C49">
    <property type="entry name" value="Synthetic Condensate 000170"/>
</dbReference>
<dbReference type="ChiTaRS" id="BRD4">
    <property type="organism name" value="human"/>
</dbReference>
<dbReference type="EvolutionaryTrace" id="O60885"/>
<dbReference type="GeneWiki" id="BRD4"/>
<dbReference type="GenomeRNAi" id="23476"/>
<dbReference type="Pharos" id="O60885">
    <property type="development level" value="Tchem"/>
</dbReference>
<dbReference type="PRO" id="PR:O60885"/>
<dbReference type="Proteomes" id="UP000005640">
    <property type="component" value="Chromosome 19"/>
</dbReference>
<dbReference type="RNAct" id="O60885">
    <property type="molecule type" value="protein"/>
</dbReference>
<dbReference type="Bgee" id="ENSG00000141867">
    <property type="expression patterns" value="Expressed in buccal mucosa cell and 213 other cell types or tissues"/>
</dbReference>
<dbReference type="ExpressionAtlas" id="O60885">
    <property type="expression patterns" value="baseline and differential"/>
</dbReference>
<dbReference type="GO" id="GO:0000785">
    <property type="term" value="C:chromatin"/>
    <property type="evidence" value="ECO:0000318"/>
    <property type="project" value="GO_Central"/>
</dbReference>
<dbReference type="GO" id="GO:0005694">
    <property type="term" value="C:chromosome"/>
    <property type="evidence" value="ECO:0000314"/>
    <property type="project" value="UniProtKB"/>
</dbReference>
<dbReference type="GO" id="GO:0000794">
    <property type="term" value="C:condensed nuclear chromosome"/>
    <property type="evidence" value="ECO:0000314"/>
    <property type="project" value="MGI"/>
</dbReference>
<dbReference type="GO" id="GO:0005654">
    <property type="term" value="C:nucleoplasm"/>
    <property type="evidence" value="ECO:0000314"/>
    <property type="project" value="HPA"/>
</dbReference>
<dbReference type="GO" id="GO:0005634">
    <property type="term" value="C:nucleus"/>
    <property type="evidence" value="ECO:0000314"/>
    <property type="project" value="UniProtKB"/>
</dbReference>
<dbReference type="GO" id="GO:0003682">
    <property type="term" value="F:chromatin binding"/>
    <property type="evidence" value="ECO:0000314"/>
    <property type="project" value="UniProtKB"/>
</dbReference>
<dbReference type="GO" id="GO:0019899">
    <property type="term" value="F:enzyme binding"/>
    <property type="evidence" value="ECO:0000353"/>
    <property type="project" value="UniProtKB"/>
</dbReference>
<dbReference type="GO" id="GO:0042393">
    <property type="term" value="F:histone binding"/>
    <property type="evidence" value="ECO:0000318"/>
    <property type="project" value="GO_Central"/>
</dbReference>
<dbReference type="GO" id="GO:0140008">
    <property type="term" value="F:histone H4 reader activity"/>
    <property type="evidence" value="ECO:0000314"/>
    <property type="project" value="UniProtKB"/>
</dbReference>
<dbReference type="GO" id="GO:0070577">
    <property type="term" value="F:lysine-acetylated histone binding"/>
    <property type="evidence" value="ECO:0000314"/>
    <property type="project" value="UniProtKB"/>
</dbReference>
<dbReference type="GO" id="GO:0106140">
    <property type="term" value="F:P-TEFb complex binding"/>
    <property type="evidence" value="ECO:0000314"/>
    <property type="project" value="FlyBase"/>
</dbReference>
<dbReference type="GO" id="GO:0002039">
    <property type="term" value="F:p53 binding"/>
    <property type="evidence" value="ECO:0000314"/>
    <property type="project" value="UniProtKB"/>
</dbReference>
<dbReference type="GO" id="GO:0004674">
    <property type="term" value="F:protein serine/threonine kinase activity"/>
    <property type="evidence" value="ECO:0000318"/>
    <property type="project" value="GO_Central"/>
</dbReference>
<dbReference type="GO" id="GO:0099122">
    <property type="term" value="F:RNA polymerase II C-terminal domain binding"/>
    <property type="evidence" value="ECO:0000314"/>
    <property type="project" value="MGI"/>
</dbReference>
<dbReference type="GO" id="GO:0008353">
    <property type="term" value="F:RNA polymerase II CTD heptapeptide repeat kinase activity"/>
    <property type="evidence" value="ECO:0000315"/>
    <property type="project" value="MGI"/>
</dbReference>
<dbReference type="GO" id="GO:0000976">
    <property type="term" value="F:transcription cis-regulatory region binding"/>
    <property type="evidence" value="ECO:0000314"/>
    <property type="project" value="UniProtKB"/>
</dbReference>
<dbReference type="GO" id="GO:0003713">
    <property type="term" value="F:transcription coactivator activity"/>
    <property type="evidence" value="ECO:0000315"/>
    <property type="project" value="UniProtKB"/>
</dbReference>
<dbReference type="GO" id="GO:0003712">
    <property type="term" value="F:transcription coregulator activity"/>
    <property type="evidence" value="ECO:0000315"/>
    <property type="project" value="UniProtKB"/>
</dbReference>
<dbReference type="GO" id="GO:0006338">
    <property type="term" value="P:chromatin remodeling"/>
    <property type="evidence" value="ECO:0000314"/>
    <property type="project" value="UniProtKB"/>
</dbReference>
<dbReference type="GO" id="GO:0006974">
    <property type="term" value="P:DNA damage response"/>
    <property type="evidence" value="ECO:0000315"/>
    <property type="project" value="UniProtKB"/>
</dbReference>
<dbReference type="GO" id="GO:0043922">
    <property type="term" value="P:negative regulation by host of viral transcription"/>
    <property type="evidence" value="ECO:0000314"/>
    <property type="project" value="FlyBase"/>
</dbReference>
<dbReference type="GO" id="GO:2000002">
    <property type="term" value="P:negative regulation of DNA damage checkpoint"/>
    <property type="evidence" value="ECO:0000315"/>
    <property type="project" value="UniProtKB"/>
</dbReference>
<dbReference type="GO" id="GO:0043123">
    <property type="term" value="P:positive regulation of canonical NF-kappaB signal transduction"/>
    <property type="evidence" value="ECO:0000314"/>
    <property type="project" value="UniProtKB"/>
</dbReference>
<dbReference type="GO" id="GO:0045893">
    <property type="term" value="P:positive regulation of DNA-templated transcription"/>
    <property type="evidence" value="ECO:0000315"/>
    <property type="project" value="UniProtKB"/>
</dbReference>
<dbReference type="GO" id="GO:0010971">
    <property type="term" value="P:positive regulation of G2/M transition of mitotic cell cycle"/>
    <property type="evidence" value="ECO:0000315"/>
    <property type="project" value="MGI"/>
</dbReference>
<dbReference type="GO" id="GO:2000330">
    <property type="term" value="P:positive regulation of T-helper 17 cell lineage commitment"/>
    <property type="evidence" value="ECO:0000250"/>
    <property type="project" value="UniProtKB"/>
</dbReference>
<dbReference type="GO" id="GO:0045944">
    <property type="term" value="P:positive regulation of transcription by RNA polymerase II"/>
    <property type="evidence" value="ECO:0000314"/>
    <property type="project" value="UniProtKB"/>
</dbReference>
<dbReference type="GO" id="GO:0032968">
    <property type="term" value="P:positive regulation of transcription elongation by RNA polymerase II"/>
    <property type="evidence" value="ECO:0000314"/>
    <property type="project" value="UniProtKB"/>
</dbReference>
<dbReference type="GO" id="GO:0050727">
    <property type="term" value="P:regulation of inflammatory response"/>
    <property type="evidence" value="ECO:0000314"/>
    <property type="project" value="UniProtKB"/>
</dbReference>
<dbReference type="GO" id="GO:0006357">
    <property type="term" value="P:regulation of transcription by RNA polymerase II"/>
    <property type="evidence" value="ECO:0000315"/>
    <property type="project" value="MGI"/>
</dbReference>
<dbReference type="CDD" id="cd05497">
    <property type="entry name" value="Bromo_Brdt_I_like"/>
    <property type="match status" value="1"/>
</dbReference>
<dbReference type="CDD" id="cd05498">
    <property type="entry name" value="Bromo_Brdt_II_like"/>
    <property type="match status" value="1"/>
</dbReference>
<dbReference type="FunFam" id="1.20.920.10:FF:000003">
    <property type="entry name" value="Bromodomain-containing protein 2"/>
    <property type="match status" value="1"/>
</dbReference>
<dbReference type="FunFam" id="1.20.1270.220:FF:000001">
    <property type="entry name" value="bromodomain-containing protein 2 isoform X1"/>
    <property type="match status" value="1"/>
</dbReference>
<dbReference type="FunFam" id="1.20.920.10:FF:000002">
    <property type="entry name" value="Bromodomain-containing protein 4"/>
    <property type="match status" value="1"/>
</dbReference>
<dbReference type="Gene3D" id="1.20.1270.220">
    <property type="match status" value="1"/>
</dbReference>
<dbReference type="Gene3D" id="1.20.920.10">
    <property type="entry name" value="Bromodomain-like"/>
    <property type="match status" value="2"/>
</dbReference>
<dbReference type="IDEAL" id="IID00111"/>
<dbReference type="InterPro" id="IPR031354">
    <property type="entry name" value="BRD4_CDT"/>
</dbReference>
<dbReference type="InterPro" id="IPR043508">
    <property type="entry name" value="Bromo_Brdt_I"/>
</dbReference>
<dbReference type="InterPro" id="IPR043509">
    <property type="entry name" value="Bromo_Brdt_II"/>
</dbReference>
<dbReference type="InterPro" id="IPR050935">
    <property type="entry name" value="Bromo_chromatin_reader"/>
</dbReference>
<dbReference type="InterPro" id="IPR001487">
    <property type="entry name" value="Bromodomain"/>
</dbReference>
<dbReference type="InterPro" id="IPR036427">
    <property type="entry name" value="Bromodomain-like_sf"/>
</dbReference>
<dbReference type="InterPro" id="IPR018359">
    <property type="entry name" value="Bromodomain_CS"/>
</dbReference>
<dbReference type="InterPro" id="IPR027353">
    <property type="entry name" value="NET_dom"/>
</dbReference>
<dbReference type="InterPro" id="IPR038336">
    <property type="entry name" value="NET_sf"/>
</dbReference>
<dbReference type="PANTHER" id="PTHR22880:SF143">
    <property type="entry name" value="BROMODOMAIN-CONTAINING PROTEIN 4"/>
    <property type="match status" value="1"/>
</dbReference>
<dbReference type="PANTHER" id="PTHR22880">
    <property type="entry name" value="FALZ-RELATED BROMODOMAIN-CONTAINING PROTEINS"/>
    <property type="match status" value="1"/>
</dbReference>
<dbReference type="Pfam" id="PF17035">
    <property type="entry name" value="BET"/>
    <property type="match status" value="1"/>
</dbReference>
<dbReference type="Pfam" id="PF17105">
    <property type="entry name" value="BRD4_CDT"/>
    <property type="match status" value="1"/>
</dbReference>
<dbReference type="Pfam" id="PF00439">
    <property type="entry name" value="Bromodomain"/>
    <property type="match status" value="2"/>
</dbReference>
<dbReference type="PRINTS" id="PR00503">
    <property type="entry name" value="BROMODOMAIN"/>
</dbReference>
<dbReference type="SMART" id="SM00297">
    <property type="entry name" value="BROMO"/>
    <property type="match status" value="2"/>
</dbReference>
<dbReference type="SUPFAM" id="SSF47370">
    <property type="entry name" value="Bromodomain"/>
    <property type="match status" value="2"/>
</dbReference>
<dbReference type="PROSITE" id="PS00633">
    <property type="entry name" value="BROMODOMAIN_1"/>
    <property type="match status" value="1"/>
</dbReference>
<dbReference type="PROSITE" id="PS50014">
    <property type="entry name" value="BROMODOMAIN_2"/>
    <property type="match status" value="2"/>
</dbReference>
<dbReference type="PROSITE" id="PS51525">
    <property type="entry name" value="NET"/>
    <property type="match status" value="1"/>
</dbReference>
<proteinExistence type="evidence at protein level"/>
<accession>O60885</accession>
<accession>O60433</accession>
<accession>Q4G0X8</accession>
<accession>Q86YS8</accession>
<accession>Q96PD3</accession>
<name>BRD4_HUMAN</name>
<protein>
    <recommendedName>
        <fullName>Bromodomain-containing protein 4</fullName>
    </recommendedName>
    <alternativeName>
        <fullName>Protein HUNK1</fullName>
    </alternativeName>
</protein>
<reference key="1">
    <citation type="journal article" date="2001" name="Am. J. Pathol.">
        <title>BRD4 bromodomain gene rearrangement in aggressive carcinoma with translocation t(15;19).</title>
        <authorList>
            <person name="French C.A."/>
            <person name="Miyoshi I."/>
            <person name="Aster J.C."/>
            <person name="Kubonishi I."/>
            <person name="Kroll T.G."/>
            <person name="Dal Cin P."/>
            <person name="Vargas S.O."/>
            <person name="Perez-Atayde A.R."/>
            <person name="Fletcher J.A."/>
        </authorList>
    </citation>
    <scope>NUCLEOTIDE SEQUENCE [MRNA] (ISOFORM A)</scope>
    <scope>DISEASE</scope>
    <scope>CHROMOSOMAL TRANSLOCATION WITH NUT</scope>
</reference>
<reference key="2">
    <citation type="submission" date="1997-03" db="EMBL/GenBank/DDBJ databases">
        <authorList>
            <person name="Weber B."/>
        </authorList>
    </citation>
    <scope>NUCLEOTIDE SEQUENCE [MRNA] (ISOFORM C)</scope>
    <source>
        <tissue>Placenta</tissue>
    </source>
</reference>
<reference key="3">
    <citation type="journal article" date="2004" name="Nature">
        <title>The DNA sequence and biology of human chromosome 19.</title>
        <authorList>
            <person name="Grimwood J."/>
            <person name="Gordon L.A."/>
            <person name="Olsen A.S."/>
            <person name="Terry A."/>
            <person name="Schmutz J."/>
            <person name="Lamerdin J.E."/>
            <person name="Hellsten U."/>
            <person name="Goodstein D."/>
            <person name="Couronne O."/>
            <person name="Tran-Gyamfi M."/>
            <person name="Aerts A."/>
            <person name="Altherr M."/>
            <person name="Ashworth L."/>
            <person name="Bajorek E."/>
            <person name="Black S."/>
            <person name="Branscomb E."/>
            <person name="Caenepeel S."/>
            <person name="Carrano A.V."/>
            <person name="Caoile C."/>
            <person name="Chan Y.M."/>
            <person name="Christensen M."/>
            <person name="Cleland C.A."/>
            <person name="Copeland A."/>
            <person name="Dalin E."/>
            <person name="Dehal P."/>
            <person name="Denys M."/>
            <person name="Detter J.C."/>
            <person name="Escobar J."/>
            <person name="Flowers D."/>
            <person name="Fotopulos D."/>
            <person name="Garcia C."/>
            <person name="Georgescu A.M."/>
            <person name="Glavina T."/>
            <person name="Gomez M."/>
            <person name="Gonzales E."/>
            <person name="Groza M."/>
            <person name="Hammon N."/>
            <person name="Hawkins T."/>
            <person name="Haydu L."/>
            <person name="Ho I."/>
            <person name="Huang W."/>
            <person name="Israni S."/>
            <person name="Jett J."/>
            <person name="Kadner K."/>
            <person name="Kimball H."/>
            <person name="Kobayashi A."/>
            <person name="Larionov V."/>
            <person name="Leem S.-H."/>
            <person name="Lopez F."/>
            <person name="Lou Y."/>
            <person name="Lowry S."/>
            <person name="Malfatti S."/>
            <person name="Martinez D."/>
            <person name="McCready P.M."/>
            <person name="Medina C."/>
            <person name="Morgan J."/>
            <person name="Nelson K."/>
            <person name="Nolan M."/>
            <person name="Ovcharenko I."/>
            <person name="Pitluck S."/>
            <person name="Pollard M."/>
            <person name="Popkie A.P."/>
            <person name="Predki P."/>
            <person name="Quan G."/>
            <person name="Ramirez L."/>
            <person name="Rash S."/>
            <person name="Retterer J."/>
            <person name="Rodriguez A."/>
            <person name="Rogers S."/>
            <person name="Salamov A."/>
            <person name="Salazar A."/>
            <person name="She X."/>
            <person name="Smith D."/>
            <person name="Slezak T."/>
            <person name="Solovyev V."/>
            <person name="Thayer N."/>
            <person name="Tice H."/>
            <person name="Tsai M."/>
            <person name="Ustaszewska A."/>
            <person name="Vo N."/>
            <person name="Wagner M."/>
            <person name="Wheeler J."/>
            <person name="Wu K."/>
            <person name="Xie G."/>
            <person name="Yang J."/>
            <person name="Dubchak I."/>
            <person name="Furey T.S."/>
            <person name="DeJong P."/>
            <person name="Dickson M."/>
            <person name="Gordon D."/>
            <person name="Eichler E.E."/>
            <person name="Pennacchio L.A."/>
            <person name="Richardson P."/>
            <person name="Stubbs L."/>
            <person name="Rokhsar D.S."/>
            <person name="Myers R.M."/>
            <person name="Rubin E.M."/>
            <person name="Lucas S.M."/>
        </authorList>
    </citation>
    <scope>NUCLEOTIDE SEQUENCE [LARGE SCALE GENOMIC DNA]</scope>
</reference>
<reference key="4">
    <citation type="submission" date="2005-07" db="EMBL/GenBank/DDBJ databases">
        <authorList>
            <person name="Mural R.J."/>
            <person name="Istrail S."/>
            <person name="Sutton G.G."/>
            <person name="Florea L."/>
            <person name="Halpern A.L."/>
            <person name="Mobarry C.M."/>
            <person name="Lippert R."/>
            <person name="Walenz B."/>
            <person name="Shatkay H."/>
            <person name="Dew I."/>
            <person name="Miller J.R."/>
            <person name="Flanigan M.J."/>
            <person name="Edwards N.J."/>
            <person name="Bolanos R."/>
            <person name="Fasulo D."/>
            <person name="Halldorsson B.V."/>
            <person name="Hannenhalli S."/>
            <person name="Turner R."/>
            <person name="Yooseph S."/>
            <person name="Lu F."/>
            <person name="Nusskern D.R."/>
            <person name="Shue B.C."/>
            <person name="Zheng X.H."/>
            <person name="Zhong F."/>
            <person name="Delcher A.L."/>
            <person name="Huson D.H."/>
            <person name="Kravitz S.A."/>
            <person name="Mouchard L."/>
            <person name="Reinert K."/>
            <person name="Remington K.A."/>
            <person name="Clark A.G."/>
            <person name="Waterman M.S."/>
            <person name="Eichler E.E."/>
            <person name="Adams M.D."/>
            <person name="Hunkapiller M.W."/>
            <person name="Myers E.W."/>
            <person name="Venter J.C."/>
        </authorList>
    </citation>
    <scope>NUCLEOTIDE SEQUENCE [LARGE SCALE GENOMIC DNA]</scope>
</reference>
<reference key="5">
    <citation type="journal article" date="2004" name="Genome Res.">
        <title>The status, quality, and expansion of the NIH full-length cDNA project: the Mammalian Gene Collection (MGC).</title>
        <authorList>
            <consortium name="The MGC Project Team"/>
        </authorList>
    </citation>
    <scope>NUCLEOTIDE SEQUENCE [LARGE SCALE MRNA] (ISOFORM B)</scope>
    <source>
        <tissue>Testis</tissue>
    </source>
</reference>
<reference key="6">
    <citation type="journal article" date="2003" name="Cancer Res.">
        <title>BRD4-NUT fusion oncogene: a novel mechanism in aggressive carcinoma.</title>
        <authorList>
            <person name="French C.A."/>
            <person name="Miyoshi I."/>
            <person name="Kubonishi I."/>
            <person name="Grier H.E."/>
            <person name="Perez-Atayde A.R."/>
            <person name="Fletcher J.A."/>
        </authorList>
    </citation>
    <scope>NUCLEOTIDE SEQUENCE [MRNA] OF 1-719</scope>
    <scope>DISEASE</scope>
    <scope>CHROMOSOMAL TRANSLOCATION WITH NUT</scope>
    <scope>TISSUE SPECIFICITY</scope>
    <source>
        <tissue>Carcinoma</tissue>
    </source>
</reference>
<reference key="7">
    <citation type="journal article" date="2005" name="Mol. Cell">
        <title>The bromodomain protein Brd4 is a positive regulatory component of P-TEFb and stimulates RNA polymerase II-dependent transcription.</title>
        <authorList>
            <person name="Jang M.K."/>
            <person name="Mochizuki K."/>
            <person name="Zhou M."/>
            <person name="Jeong H.S."/>
            <person name="Brady J.N."/>
            <person name="Ozato K."/>
        </authorList>
    </citation>
    <scope>FUNCTION</scope>
    <scope>INTERACTION WITH CDK9 AND CCNT1</scope>
    <scope>IDENTIFICATION IN THE P-TEFB COMPLEX</scope>
    <scope>SUBCELLULAR LOCATION</scope>
</reference>
<reference key="8">
    <citation type="journal article" date="2005" name="Mol. Cell">
        <title>Recruitment of P-TEFb for stimulation of transcriptional elongation by the bromodomain protein Brd4.</title>
        <authorList>
            <person name="Yang Z."/>
            <person name="Yik J.H."/>
            <person name="Chen R."/>
            <person name="He N."/>
            <person name="Jang M.K."/>
            <person name="Ozato K."/>
            <person name="Zhou Q."/>
        </authorList>
    </citation>
    <scope>FUNCTION</scope>
    <scope>INTERACTION WITH CDK9 AND CCNT1</scope>
    <scope>IDENTIFICATION IN THE P-TEFB COMPLEX</scope>
</reference>
<reference key="9">
    <citation type="journal article" date="2006" name="Cell">
        <title>Global, in vivo, and site-specific phosphorylation dynamics in signaling networks.</title>
        <authorList>
            <person name="Olsen J.V."/>
            <person name="Blagoev B."/>
            <person name="Gnad F."/>
            <person name="Macek B."/>
            <person name="Kumar C."/>
            <person name="Mortensen P."/>
            <person name="Mann M."/>
        </authorList>
    </citation>
    <scope>PHOSPHORYLATION [LARGE SCALE ANALYSIS] AT SER-1117</scope>
    <scope>IDENTIFICATION BY MASS SPECTROMETRY [LARGE SCALE ANALYSIS]</scope>
    <source>
        <tissue>Cervix carcinoma</tissue>
    </source>
</reference>
<reference key="10">
    <citation type="journal article" date="2006" name="J. Virol.">
        <title>Kaposi's sarcoma-associated herpesvirus latency-associated nuclear antigen interacts with bromodomain protein Brd4 on host mitotic chromosomes.</title>
        <authorList>
            <person name="You J."/>
            <person name="Srinivasan V."/>
            <person name="Denis G.V."/>
            <person name="Harrington W.J. Jr."/>
            <person name="Ballestas M.E."/>
            <person name="Kaye K.M."/>
            <person name="Howley P.M."/>
        </authorList>
    </citation>
    <scope>INTERACTION WITH KSHV PROTEIN LANA (MICROBIAL INFECTION)</scope>
</reference>
<reference key="11">
    <citation type="journal article" date="2006" name="Mol. Cell">
        <title>ChlR1 is required for loading papillomavirus E2 onto mitotic chromosomes and viral genome maintenance.</title>
        <authorList>
            <person name="Parish J.L."/>
            <person name="Bean A.M."/>
            <person name="Park R.B."/>
            <person name="Androphy E.J."/>
        </authorList>
    </citation>
    <scope>INTERACTION WITH BOVINE PAPILLOMAVIRUS TYPE 1 REGULATORY PROTEIN E2</scope>
</reference>
<reference key="12">
    <citation type="journal article" date="2008" name="J. Virol.">
        <title>The EBNA1 protein of Epstein-Barr virus functionally interacts with Brd4.</title>
        <authorList>
            <person name="Lin A."/>
            <person name="Wang S."/>
            <person name="Nguyen T."/>
            <person name="Shire K."/>
            <person name="Frappier L."/>
        </authorList>
    </citation>
    <scope>INTERACTION WITH EPSTEIN-BARR VIRUS PROTEIN EBNA1</scope>
</reference>
<reference key="13">
    <citation type="journal article" date="2008" name="Proc. Natl. Acad. Sci. U.S.A.">
        <title>A quantitative atlas of mitotic phosphorylation.</title>
        <authorList>
            <person name="Dephoure N."/>
            <person name="Zhou C."/>
            <person name="Villen J."/>
            <person name="Beausoleil S.A."/>
            <person name="Bakalarski C.E."/>
            <person name="Elledge S.J."/>
            <person name="Gygi S.P."/>
        </authorList>
    </citation>
    <scope>PHOSPHORYLATION [LARGE SCALE ANALYSIS] AT SER-470</scope>
    <scope>IDENTIFICATION BY MASS SPECTROMETRY [LARGE SCALE ANALYSIS]</scope>
    <source>
        <tissue>Cervix carcinoma</tissue>
    </source>
</reference>
<reference key="14">
    <citation type="journal article" date="2009" name="Anal. Chem.">
        <title>Lys-N and trypsin cover complementary parts of the phosphoproteome in a refined SCX-based approach.</title>
        <authorList>
            <person name="Gauci S."/>
            <person name="Helbig A.O."/>
            <person name="Slijper M."/>
            <person name="Krijgsveld J."/>
            <person name="Heck A.J."/>
            <person name="Mohammed S."/>
        </authorList>
    </citation>
    <scope>IDENTIFICATION BY MASS SPECTROMETRY [LARGE SCALE ANALYSIS]</scope>
</reference>
<reference key="15">
    <citation type="journal article" date="2009" name="Cell">
        <title>Control of inducible gene expression by signal-dependent transcriptional elongation.</title>
        <authorList>
            <person name="Hargreaves D.C."/>
            <person name="Horng T."/>
            <person name="Medzhitov R."/>
        </authorList>
    </citation>
    <scope>FUNCTION</scope>
</reference>
<reference key="16">
    <citation type="journal article" date="2009" name="Mol. Cell. Biol.">
        <title>Brd4 coactivates transcriptional activation of NF-kappaB via specific binding to acetylated RelA.</title>
        <authorList>
            <person name="Huang B."/>
            <person name="Yang X.D."/>
            <person name="Zhou M.M."/>
            <person name="Ozato K."/>
            <person name="Chen L.F."/>
        </authorList>
    </citation>
    <scope>FUNCTION</scope>
    <scope>INTERACTION WITH RELA</scope>
</reference>
<reference key="17">
    <citation type="journal article" date="2009" name="Science">
        <title>Lysine acetylation targets protein complexes and co-regulates major cellular functions.</title>
        <authorList>
            <person name="Choudhary C."/>
            <person name="Kumar C."/>
            <person name="Gnad F."/>
            <person name="Nielsen M.L."/>
            <person name="Rehman M."/>
            <person name="Walther T.C."/>
            <person name="Olsen J.V."/>
            <person name="Mann M."/>
        </authorList>
    </citation>
    <scope>ACETYLATION [LARGE SCALE ANALYSIS] AT LYS-1111</scope>
    <scope>IDENTIFICATION BY MASS SPECTROMETRY [LARGE SCALE ANALYSIS]</scope>
</reference>
<reference key="18">
    <citation type="journal article" date="2010" name="Sci. Signal.">
        <title>Quantitative phosphoproteomics reveals widespread full phosphorylation site occupancy during mitosis.</title>
        <authorList>
            <person name="Olsen J.V."/>
            <person name="Vermeulen M."/>
            <person name="Santamaria A."/>
            <person name="Kumar C."/>
            <person name="Miller M.L."/>
            <person name="Jensen L.J."/>
            <person name="Gnad F."/>
            <person name="Cox J."/>
            <person name="Jensen T.S."/>
            <person name="Nigg E.A."/>
            <person name="Brunak S."/>
            <person name="Mann M."/>
        </authorList>
    </citation>
    <scope>PHOSPHORYLATION [LARGE SCALE ANALYSIS] AT SER-601 AND SER-1117</scope>
    <scope>IDENTIFICATION BY MASS SPECTROMETRY [LARGE SCALE ANALYSIS]</scope>
    <source>
        <tissue>Cervix carcinoma</tissue>
    </source>
</reference>
<reference key="19">
    <citation type="journal article" date="2011" name="BMC Syst. Biol.">
        <title>Initial characterization of the human central proteome.</title>
        <authorList>
            <person name="Burkard T.R."/>
            <person name="Planyavsky M."/>
            <person name="Kaupe I."/>
            <person name="Breitwieser F.P."/>
            <person name="Buerckstuemmer T."/>
            <person name="Bennett K.L."/>
            <person name="Superti-Furga G."/>
            <person name="Colinge J."/>
        </authorList>
    </citation>
    <scope>IDENTIFICATION BY MASS SPECTROMETRY [LARGE SCALE ANALYSIS]</scope>
</reference>
<reference key="20">
    <citation type="journal article" date="2011" name="Mol. Cell. Biol.">
        <title>The Brd4 extraterminal domain confers transcription activation independent of pTEFb by recruiting multiple proteins, including NSD3.</title>
        <authorList>
            <person name="Rahman S."/>
            <person name="Sowa M.E."/>
            <person name="Ottinger M."/>
            <person name="Smith J.A."/>
            <person name="Shi Y."/>
            <person name="Harper J.W."/>
            <person name="Howley P.M."/>
        </authorList>
    </citation>
    <scope>INTERACTION WITH NSD3; JMJD6; CHD4; BICRA AND ATAD5</scope>
</reference>
<reference key="21">
    <citation type="journal article" date="2011" name="Nucleic Acids Res.">
        <title>Signal-induced Brd4 release from chromatin is essential for its role transition from chromatin targeting to transcriptional regulation.</title>
        <authorList>
            <person name="Ai N."/>
            <person name="Hu X."/>
            <person name="Ding F."/>
            <person name="Yu B."/>
            <person name="Wang H."/>
            <person name="Lu X."/>
            <person name="Zhang K."/>
            <person name="Li Y."/>
            <person name="Han A."/>
            <person name="Lin W."/>
            <person name="Liu R."/>
            <person name="Chen R."/>
        </authorList>
    </citation>
    <scope>SUBCELLULAR LOCATION</scope>
</reference>
<reference key="22">
    <citation type="journal article" date="2011" name="Sci. Signal.">
        <title>System-wide temporal characterization of the proteome and phosphoproteome of human embryonic stem cell differentiation.</title>
        <authorList>
            <person name="Rigbolt K.T."/>
            <person name="Prokhorova T.A."/>
            <person name="Akimov V."/>
            <person name="Henningsen J."/>
            <person name="Johansen P.T."/>
            <person name="Kratchmarova I."/>
            <person name="Kassem M."/>
            <person name="Mann M."/>
            <person name="Olsen J.V."/>
            <person name="Blagoev B."/>
        </authorList>
    </citation>
    <scope>PHOSPHORYLATION [LARGE SCALE ANALYSIS] AT SER-601 AND SER-1117</scope>
    <scope>IDENTIFICATION BY MASS SPECTROMETRY [LARGE SCALE ANALYSIS]</scope>
</reference>
<reference key="23">
    <citation type="journal article" date="2012" name="J. Biol. Chem.">
        <title>Bromodomain protein Brd4 associated with acetylated chromatin is important for maintenance of higher-order chromatin structure.</title>
        <authorList>
            <person name="Wang R."/>
            <person name="Li Q."/>
            <person name="Helfer C.M."/>
            <person name="Jiao J."/>
            <person name="You J."/>
        </authorList>
    </citation>
    <scope>FUNCTION</scope>
</reference>
<reference key="24">
    <citation type="journal article" date="2012" name="J. Biol. Chem.">
        <title>Bromodomain-containing protein 4 (BRD4) regulates RNA polymerase II serine 2 phosphorylation in human CD4+ T cells.</title>
        <authorList>
            <person name="Zhang W."/>
            <person name="Prakash C."/>
            <person name="Sum C."/>
            <person name="Gong Y."/>
            <person name="Li Y."/>
            <person name="Kwok J.J."/>
            <person name="Thiessen N."/>
            <person name="Pettersson S."/>
            <person name="Jones S.J."/>
            <person name="Knapp S."/>
            <person name="Yang H."/>
            <person name="Chin K.C."/>
        </authorList>
    </citation>
    <scope>FUNCTION</scope>
</reference>
<reference key="25">
    <citation type="journal article" date="2012" name="Proc. Natl. Acad. Sci. U.S.A.">
        <title>BRD4 is an atypical kinase that phosphorylates serine2 of the RNA polymerase II carboxy-terminal domain.</title>
        <authorList>
            <person name="Devaiah B.N."/>
            <person name="Lewis B.A."/>
            <person name="Cherman N."/>
            <person name="Hewitt M.C."/>
            <person name="Albrecht B.K."/>
            <person name="Robey P.G."/>
            <person name="Ozato K."/>
            <person name="Sims R.J. III"/>
            <person name="Singer D.S."/>
        </authorList>
    </citation>
    <scope>FUNCTION</scope>
</reference>
<reference key="26">
    <citation type="journal article" date="2013" name="Cell">
        <title>Brd4 and JMJD6-associated anti-pause enhancers in regulation of transcriptional pause release.</title>
        <authorList>
            <person name="Liu W."/>
            <person name="Ma Q."/>
            <person name="Wong K."/>
            <person name="Li W."/>
            <person name="Ohgi K."/>
            <person name="Zhang J."/>
            <person name="Aggarwal A."/>
            <person name="Rosenfeld M.G."/>
        </authorList>
    </citation>
    <scope>FUNCTION</scope>
    <scope>INTERACTION WITH JMJD6; CDK9 AND CCNT1</scope>
</reference>
<reference key="27">
    <citation type="journal article" date="2013" name="J. Proteome Res.">
        <title>Toward a comprehensive characterization of a human cancer cell phosphoproteome.</title>
        <authorList>
            <person name="Zhou H."/>
            <person name="Di Palma S."/>
            <person name="Preisinger C."/>
            <person name="Peng M."/>
            <person name="Polat A.N."/>
            <person name="Heck A.J."/>
            <person name="Mohammed S."/>
        </authorList>
    </citation>
    <scope>PHOSPHORYLATION [LARGE SCALE ANALYSIS] AT SER-601; SER-1126; SER-1201 AND SER-1204</scope>
    <scope>IDENTIFICATION BY MASS SPECTROMETRY [LARGE SCALE ANALYSIS]</scope>
    <source>
        <tissue>Cervix carcinoma</tissue>
        <tissue>Erythroleukemia</tissue>
    </source>
</reference>
<reference key="28">
    <citation type="journal article" date="2013" name="Mol. Cell">
        <title>Phospho switch triggers Brd4 chromatin binding and activator recruitment for gene-specific targeting.</title>
        <authorList>
            <person name="Wu S.Y."/>
            <person name="Lee A.Y."/>
            <person name="Lai H.T."/>
            <person name="Zhang H."/>
            <person name="Chiang C.M."/>
        </authorList>
    </citation>
    <scope>FUNCTION</scope>
    <scope>INTERACTION WITH TP53</scope>
    <scope>PHOSPHORYLATION AT SER-484; SER-488; SER-492; SER-494; SER-498; SER-499 AND SER-503</scope>
    <scope>MUTAGENESIS OF 492-SER--SER-494; 498-SER--THR-500 AND SER-503</scope>
</reference>
<reference key="29">
    <citation type="journal article" date="2013" name="Mol. Cell. Biol.">
        <title>BRD4 coordinates recruitment of pause release factor P-TEFb and the pausing complex NELF/DSIF to regulate transcription elongation of interferon-stimulated genes.</title>
        <authorList>
            <person name="Patel M.C."/>
            <person name="Debrosse M."/>
            <person name="Smith M."/>
            <person name="Dey A."/>
            <person name="Huynh W."/>
            <person name="Sarai N."/>
            <person name="Heightman T.D."/>
            <person name="Tamura T."/>
            <person name="Ozato K."/>
        </authorList>
    </citation>
    <scope>FUNCTION</scope>
</reference>
<reference key="30">
    <citation type="journal article" date="2013" name="Nature">
        <title>The bromodomain protein Brd4 insulates chromatin from DNA damage signalling.</title>
        <authorList>
            <person name="Floyd S.R."/>
            <person name="Pacold M.E."/>
            <person name="Huang Q."/>
            <person name="Clarke S.M."/>
            <person name="Lam F.C."/>
            <person name="Cannell I.G."/>
            <person name="Bryson B.D."/>
            <person name="Rameseder J."/>
            <person name="Lee M.J."/>
            <person name="Blake E.J."/>
            <person name="Fydrych A."/>
            <person name="Ho R."/>
            <person name="Greenberger B.A."/>
            <person name="Chen G.C."/>
            <person name="Maffa A."/>
            <person name="Del Rosario A.M."/>
            <person name="Root D.E."/>
            <person name="Carpenter A.E."/>
            <person name="Hahn W.C."/>
            <person name="Sabatini D.M."/>
            <person name="Chen C.C."/>
            <person name="White F.M."/>
            <person name="Bradner J.E."/>
            <person name="Yaffe M.B."/>
        </authorList>
    </citation>
    <scope>FUNCTION (ISOFORM B)</scope>
    <scope>SUBCELLULAR LOCATION (ISOFORM B)</scope>
    <scope>INTERACTION WITH NCAPD3 AND SMC2</scope>
    <scope>MUTAGENESIS OF ASN-140</scope>
</reference>
<reference key="31">
    <citation type="journal article" date="2014" name="J. Proteomics">
        <title>An enzyme assisted RP-RPLC approach for in-depth analysis of human liver phosphoproteome.</title>
        <authorList>
            <person name="Bian Y."/>
            <person name="Song C."/>
            <person name="Cheng K."/>
            <person name="Dong M."/>
            <person name="Wang F."/>
            <person name="Huang J."/>
            <person name="Sun D."/>
            <person name="Wang L."/>
            <person name="Ye M."/>
            <person name="Zou H."/>
        </authorList>
    </citation>
    <scope>PHOSPHORYLATION [LARGE SCALE ANALYSIS] AT SER-470 AND SER-1117</scope>
    <scope>IDENTIFICATION BY MASS SPECTROMETRY [LARGE SCALE ANALYSIS]</scope>
    <source>
        <tissue>Liver</tissue>
    </source>
</reference>
<reference key="32">
    <citation type="journal article" date="2014" name="Nat. Struct. Mol. Biol.">
        <title>Uncovering global SUMOylation signaling networks in a site-specific manner.</title>
        <authorList>
            <person name="Hendriks I.A."/>
            <person name="D'Souza R.C."/>
            <person name="Yang B."/>
            <person name="Verlaan-de Vries M."/>
            <person name="Mann M."/>
            <person name="Vertegaal A.C."/>
        </authorList>
    </citation>
    <scope>SUMOYLATION [LARGE SCALE ANALYSIS] AT LYS-694 AND LYS-1111</scope>
    <scope>IDENTIFICATION BY MASS SPECTROMETRY [LARGE SCALE ANALYSIS]</scope>
</reference>
<reference key="33">
    <citation type="journal article" date="2014" name="Proc. Natl. Acad. Sci. U.S.A.">
        <title>Mapping of SUMO sites and analysis of SUMOylation changes induced by external stimuli.</title>
        <authorList>
            <person name="Impens F."/>
            <person name="Radoshevich L."/>
            <person name="Cossart P."/>
            <person name="Ribet D."/>
        </authorList>
    </citation>
    <scope>SUMOYLATION [LARGE SCALE ANALYSIS] AT LYS-1111</scope>
    <scope>IDENTIFICATION BY MASS SPECTROMETRY [LARGE SCALE ANALYSIS]</scope>
</reference>
<reference key="34">
    <citation type="journal article" date="2015" name="Cell Rep.">
        <title>SUMO-2 orchestrates chromatin modifiers in response to DNA damage.</title>
        <authorList>
            <person name="Hendriks I.A."/>
            <person name="Treffers L.W."/>
            <person name="Verlaan-de Vries M."/>
            <person name="Olsen J.V."/>
            <person name="Vertegaal A.C."/>
        </authorList>
    </citation>
    <scope>SUMOYLATION [LARGE SCALE ANALYSIS] AT LYS-1111</scope>
    <scope>IDENTIFICATION BY MASS SPECTROMETRY [LARGE SCALE ANALYSIS]</scope>
</reference>
<reference key="35">
    <citation type="journal article" date="2015" name="Genes Dev.">
        <title>Screen identifies bromodomain protein ZMYND8 in chromatin recognition of transcription-associated DNA damage that promotes homologous recombination.</title>
        <authorList>
            <person name="Gong F."/>
            <person name="Chiu L.Y."/>
            <person name="Cox B."/>
            <person name="Aymard F."/>
            <person name="Clouaire T."/>
            <person name="Leung J.W."/>
            <person name="Cammarata M."/>
            <person name="Perez M."/>
            <person name="Agarwal P."/>
            <person name="Brodbelt J.S."/>
            <person name="Legube G."/>
            <person name="Miller K.M."/>
        </authorList>
    </citation>
    <scope>SUBCELLULAR LOCATION</scope>
</reference>
<reference key="36">
    <citation type="journal article" date="2015" name="Mol. Cell. Proteomics">
        <title>System-wide analysis of SUMOylation dynamics in response to replication stress reveals novel small ubiquitin-like modified target proteins and acceptor lysines relevant for genome stability.</title>
        <authorList>
            <person name="Xiao Z."/>
            <person name="Chang J.G."/>
            <person name="Hendriks I.A."/>
            <person name="Sigurdsson J.O."/>
            <person name="Olsen J.V."/>
            <person name="Vertegaal A.C."/>
        </authorList>
    </citation>
    <scope>SUMOYLATION [LARGE SCALE ANALYSIS] AT LYS-1111</scope>
    <scope>IDENTIFICATION BY MASS SPECTROMETRY [LARGE SCALE ANALYSIS]</scope>
</reference>
<reference key="37">
    <citation type="journal article" date="2017" name="Nat. Struct. Mol. Biol.">
        <title>Site-specific mapping of the human SUMO proteome reveals co-modification with phosphorylation.</title>
        <authorList>
            <person name="Hendriks I.A."/>
            <person name="Lyon D."/>
            <person name="Young C."/>
            <person name="Jensen L.J."/>
            <person name="Vertegaal A.C."/>
            <person name="Nielsen M.L."/>
        </authorList>
    </citation>
    <scope>SUMOYLATION [LARGE SCALE ANALYSIS] AT LYS-99; LYS-585; LYS-645; LYS-694; LYS-1050; LYS-1111 AND LYS-1197</scope>
    <scope>IDENTIFICATION BY MASS SPECTROMETRY [LARGE SCALE ANALYSIS]</scope>
</reference>
<reference key="38">
    <citation type="journal article" date="2018" name="J. Biol. Chem.">
        <title>Glioma tumor suppressor candidate region gene 1 (GLTSCR1) and its paralog GLTSCR1-like form SWI/SNF chromatin remodeling subcomplexes.</title>
        <authorList>
            <person name="Alpsoy A."/>
            <person name="Dykhuizen E.C."/>
        </authorList>
    </citation>
    <scope>INTERACTION WITH BICRA</scope>
</reference>
<reference key="39">
    <citation type="journal article" date="2020" name="Nature">
        <title>Selective inhibition of the BD2 bromodomain of BET proteins in prostate cancer.</title>
        <authorList>
            <person name="Faivre E.J."/>
            <person name="McDaniel K.F."/>
            <person name="Albert D.H."/>
            <person name="Mantena S.R."/>
            <person name="Plotnik J.P."/>
            <person name="Wilcox D."/>
            <person name="Zhang L."/>
            <person name="Bui M.H."/>
            <person name="Sheppard G.S."/>
            <person name="Wang L."/>
            <person name="Sehgal V."/>
            <person name="Lin X."/>
            <person name="Huang X."/>
            <person name="Lu X."/>
            <person name="Uziel T."/>
            <person name="Hessler P."/>
            <person name="Lam L.T."/>
            <person name="Bellin R.J."/>
            <person name="Mehta G."/>
            <person name="Fidanze S."/>
            <person name="Pratt J.K."/>
            <person name="Liu D."/>
            <person name="Hasvold L.A."/>
            <person name="Sun C."/>
            <person name="Panchal S.C."/>
            <person name="Nicolette J.J."/>
            <person name="Fossey S.L."/>
            <person name="Park C.H."/>
            <person name="Longenecker K."/>
            <person name="Bigelow L."/>
            <person name="Torrent M."/>
            <person name="Rosenberg S.H."/>
            <person name="Kati W.M."/>
            <person name="Shen Y."/>
        </authorList>
    </citation>
    <scope>ACTIVITY REGULATION</scope>
</reference>
<reference key="40">
    <citation type="journal article" date="2007" name="Nature">
        <title>Patterns of somatic mutation in human cancer genomes.</title>
        <authorList>
            <person name="Greenman C."/>
            <person name="Stephens P."/>
            <person name="Smith R."/>
            <person name="Dalgliesh G.L."/>
            <person name="Hunter C."/>
            <person name="Bignell G."/>
            <person name="Davies H."/>
            <person name="Teague J."/>
            <person name="Butler A."/>
            <person name="Stevens C."/>
            <person name="Edkins S."/>
            <person name="O'Meara S."/>
            <person name="Vastrik I."/>
            <person name="Schmidt E.E."/>
            <person name="Avis T."/>
            <person name="Barthorpe S."/>
            <person name="Bhamra G."/>
            <person name="Buck G."/>
            <person name="Choudhury B."/>
            <person name="Clements J."/>
            <person name="Cole J."/>
            <person name="Dicks E."/>
            <person name="Forbes S."/>
            <person name="Gray K."/>
            <person name="Halliday K."/>
            <person name="Harrison R."/>
            <person name="Hills K."/>
            <person name="Hinton J."/>
            <person name="Jenkinson A."/>
            <person name="Jones D."/>
            <person name="Menzies A."/>
            <person name="Mironenko T."/>
            <person name="Perry J."/>
            <person name="Raine K."/>
            <person name="Richardson D."/>
            <person name="Shepherd R."/>
            <person name="Small A."/>
            <person name="Tofts C."/>
            <person name="Varian J."/>
            <person name="Webb T."/>
            <person name="West S."/>
            <person name="Widaa S."/>
            <person name="Yates A."/>
            <person name="Cahill D.P."/>
            <person name="Louis D.N."/>
            <person name="Goldstraw P."/>
            <person name="Nicholson A.G."/>
            <person name="Brasseur F."/>
            <person name="Looijenga L."/>
            <person name="Weber B.L."/>
            <person name="Chiew Y.-E."/>
            <person name="DeFazio A."/>
            <person name="Greaves M.F."/>
            <person name="Green A.R."/>
            <person name="Campbell P."/>
            <person name="Birney E."/>
            <person name="Easton D.F."/>
            <person name="Chenevix-Trench G."/>
            <person name="Tan M.-H."/>
            <person name="Khoo S.K."/>
            <person name="Teh B.T."/>
            <person name="Yuen S.T."/>
            <person name="Leung S.Y."/>
            <person name="Wooster R."/>
            <person name="Futreal P.A."/>
            <person name="Stratton M.R."/>
        </authorList>
    </citation>
    <scope>VARIANTS [LARGE SCALE ANALYSIS] SER-37; GLY-371; ASN-563; SER-598 AND HIS-669</scope>
</reference>
<reference key="41">
    <citation type="journal article" date="2008" name="Biochemistry">
        <title>Structural basis and binding properties of the second bromodomain of Brd4 with acetylated histone tails.</title>
        <authorList>
            <person name="Liu Y."/>
            <person name="Wang X."/>
            <person name="Zhang J."/>
            <person name="Huang H."/>
            <person name="Ding B."/>
            <person name="Wu J."/>
            <person name="Shi Y."/>
        </authorList>
    </citation>
    <scope>STRUCTURE BY NMR OF 352-457</scope>
</reference>
<reference key="42">
    <citation type="journal article" date="2010" name="Nature">
        <title>Selective inhibition of BET bromodomains.</title>
        <authorList>
            <person name="Filippakopoulos P."/>
            <person name="Qi J."/>
            <person name="Picaud S."/>
            <person name="Shen Y."/>
            <person name="Smith W.B."/>
            <person name="Fedorov O."/>
            <person name="Morse E.M."/>
            <person name="Keates T."/>
            <person name="Hickman T.T."/>
            <person name="Felletar I."/>
            <person name="Philpott M."/>
            <person name="Munro S."/>
            <person name="McKeown M.R."/>
            <person name="Wang Y."/>
            <person name="Christie A.L."/>
            <person name="West N."/>
            <person name="Cameron M.J."/>
            <person name="Schwartz B."/>
            <person name="Heightman T.D."/>
            <person name="La Thangue N."/>
            <person name="French C.A."/>
            <person name="Wiest O."/>
            <person name="Kung A.L."/>
            <person name="Knapp S."/>
            <person name="Bradner J.E."/>
        </authorList>
    </citation>
    <scope>X-RAY CRYSTALLOGRAPHY (1.6 ANGSTROMS) OF 44-168 IN COMPLEX WITH JQ1 INHIBITOR</scope>
    <scope>FUNCTION</scope>
    <scope>ACTIVITY REGULATION</scope>
    <scope>SUBCELLULAR LOCATION</scope>
</reference>
<reference key="43">
    <citation type="journal article" date="2010" name="Nature">
        <title>Suppression of inflammation by a synthetic histone mimic.</title>
        <authorList>
            <person name="Nicodeme E."/>
            <person name="Jeffrey K.L."/>
            <person name="Schaefer U."/>
            <person name="Beinke S."/>
            <person name="Dewell S."/>
            <person name="Chung C.W."/>
            <person name="Chandwani R."/>
            <person name="Marazzi I."/>
            <person name="Wilson P."/>
            <person name="Coste H."/>
            <person name="White J."/>
            <person name="Kirilovsky J."/>
            <person name="Rice C.M."/>
            <person name="Lora J.M."/>
            <person name="Prinjha R.K."/>
            <person name="Lee K."/>
            <person name="Tarakhovsky A."/>
        </authorList>
    </citation>
    <scope>X-RAY CRYSTALLOGRAPHY (1.6 ANGSTROMS) OF 44-168 IN COMPLEX WITH I-BET INHIBITOR</scope>
</reference>
<reference key="44">
    <citation type="journal article" date="2011" name="J. Med. Chem.">
        <title>Discovery and characterization of small molecule inhibitors of the BET family bromodomains.</title>
        <authorList>
            <person name="Chung C.W."/>
            <person name="Coste H."/>
            <person name="White J.H."/>
            <person name="Mirguet O."/>
            <person name="Wilde J."/>
            <person name="Gosmini R.L."/>
            <person name="Delves C."/>
            <person name="Magny S.M."/>
            <person name="Woodward R."/>
            <person name="Hughes S.A."/>
            <person name="Boursier E.V."/>
            <person name="Flynn H."/>
            <person name="Bouillot A.M."/>
            <person name="Bamborough P."/>
            <person name="Brusq J.M."/>
            <person name="Gellibert F.J."/>
            <person name="Jones E.J."/>
            <person name="Riou A.M."/>
            <person name="Homes P."/>
            <person name="Martin S.L."/>
            <person name="Uings I.J."/>
            <person name="Toum J."/>
            <person name="Clement C.A."/>
            <person name="Boullay A.B."/>
            <person name="Grimley R.L."/>
            <person name="Blandel F.M."/>
            <person name="Prinjha R.K."/>
            <person name="Lee K."/>
            <person name="Kirilovsky J."/>
            <person name="Nicodeme E."/>
        </authorList>
    </citation>
    <scope>X-RAY CRYSTALLOGRAPHY (1.65 ANGSTROMS) OF 44-168</scope>
    <scope>X-RAY CRYSTALLOGRAPHY (2.3 ANGSTROMS) OF 333-460</scope>
</reference>
<reference key="45">
    <citation type="journal article" date="2011" name="Nature">
        <title>Inhibition of BET recruitment to chromatin as an effective treatment for MLL-fusion leukaemia.</title>
        <authorList>
            <person name="Dawson M.A."/>
            <person name="Prinjha R.K."/>
            <person name="Dittmann A."/>
            <person name="Giotopoulos G."/>
            <person name="Bantscheff M."/>
            <person name="Chan W.I."/>
            <person name="Robson S.C."/>
            <person name="Chung C.W."/>
            <person name="Hopf C."/>
            <person name="Savitski M.M."/>
            <person name="Huthmacher C."/>
            <person name="Gudgin E."/>
            <person name="Lugo D."/>
            <person name="Beinke S."/>
            <person name="Chapman T.D."/>
            <person name="Roberts E.J."/>
            <person name="Soden P.E."/>
            <person name="Auger K.R."/>
            <person name="Mirguet O."/>
            <person name="Doehner K."/>
            <person name="Delwel R."/>
            <person name="Burnett A.K."/>
            <person name="Jeffrey P."/>
            <person name="Drewes G."/>
            <person name="Lee K."/>
            <person name="Huntly B.J."/>
            <person name="Kouzarides T."/>
        </authorList>
    </citation>
    <scope>X-RAY CRYSTALLOGRAPHY (1.5 ANGSTROMS) OF 44-168 IN COMPLEX WITH JQ1 INHIBITOR</scope>
</reference>
<reference key="46">
    <citation type="journal article" date="2012" name="Bioorg. Med. Chem.">
        <title>Benzodiazepines and benzotriazepines as protein interaction inhibitors targeting bromodomains of the BET family.</title>
        <authorList>
            <person name="Filippakopoulos P."/>
            <person name="Picaud S."/>
            <person name="Fedorov O."/>
            <person name="Keller M."/>
            <person name="Wrobel M."/>
            <person name="Morgenstern O."/>
            <person name="Bracher F."/>
            <person name="Knapp S."/>
        </authorList>
    </citation>
    <scope>X-RAY CRYSTALLOGRAPHY (1.6 ANGSTROMS) OF 44-168 IN COMPLEX WITH BENZODIAZEPINES AND BENZOTRIAZEPINES INHIBITORS</scope>
</reference>
<reference key="47">
    <citation type="journal article" date="2012" name="J. Biol. Chem.">
        <title>Down-regulation of NF-kappaB transcriptional activity in HIV-associated kidney disease by BRD4 inhibition.</title>
        <authorList>
            <person name="Zhang G."/>
            <person name="Liu R."/>
            <person name="Zhong Y."/>
            <person name="Plotnikov A.N."/>
            <person name="Zhang W."/>
            <person name="Zeng L."/>
            <person name="Rusinova E."/>
            <person name="Gerona-Nevarro G."/>
            <person name="Moshkina N."/>
            <person name="Joshua J."/>
            <person name="Chuang P.Y."/>
            <person name="Ohlmeyer M."/>
            <person name="He J.C."/>
            <person name="Zhou M.M."/>
        </authorList>
    </citation>
    <scope>X-RAY CRYSTALLOGRAPHY (1.4 ANGSTROMS) OF 44-168</scope>
    <scope>STRUCTURE BY NMR OF 333-460</scope>
</reference>
<reference key="48">
    <citation type="journal article" date="2012" name="J. Med. Chem.">
        <title>Fragment-based discovery of bromodomain inhibitors part 1: inhibitor binding modes and implications for lead discovery.</title>
        <authorList>
            <person name="Chung C.W."/>
            <person name="Dean A.W."/>
            <person name="Woolven J.M."/>
            <person name="Bamborough P."/>
        </authorList>
    </citation>
    <scope>X-RAY CRYSTALLOGRAPHY (1.6 ANGSTROMS) OF 44-168 IN COMPLEX WITH BENZODIAZEPINES INHIBITORS</scope>
</reference>
<reference key="49">
    <citation type="journal article" date="2012" name="J. Med. Chem.">
        <title>Identification of a chemical probe for bromo and extra C-terminal bromodomain inhibition through optimization of a fragment-derived hit.</title>
        <authorList>
            <person name="Fish P.V."/>
            <person name="Filippakopoulos P."/>
            <person name="Bish G."/>
            <person name="Brennan P.E."/>
            <person name="Bunnage M.E."/>
            <person name="Cook A.S."/>
            <person name="Federov O."/>
            <person name="Gerstenberger B.S."/>
            <person name="Jones H."/>
            <person name="Knapp S."/>
            <person name="Marsden B."/>
            <person name="Nocka K."/>
            <person name="Owen D.R."/>
            <person name="Philpott M."/>
            <person name="Picaud S."/>
            <person name="Primiano M.J."/>
            <person name="Ralph M.J."/>
            <person name="Sciammetta N."/>
            <person name="Trzupek J.D."/>
        </authorList>
    </citation>
    <scope>X-RAY CRYSTALLOGRAPHY (1.92 ANGSTROMS) OF 44-168</scope>
</reference>
<reference key="50">
    <citation type="journal article" date="2012" name="Cell">
        <title>Histone recognition and large-scale structural analysis of the human bromodomain family.</title>
        <authorList>
            <person name="Filippakopoulos P."/>
            <person name="Picaud S."/>
            <person name="Mangos M."/>
            <person name="Keates T."/>
            <person name="Lambert J.P."/>
            <person name="Barsyte-Lovejoy D."/>
            <person name="Felletar I."/>
            <person name="Volkmer R."/>
            <person name="Muller S."/>
            <person name="Pawson T."/>
            <person name="Gingras A.C."/>
            <person name="Arrowsmith C.H."/>
            <person name="Knapp S."/>
        </authorList>
    </citation>
    <scope>X-RAY CRYSTALLOGRAPHY (1.35 ANGSTROMS) OF 44-168; 333-460 AND 1343-1362 IN COMPLEX WITH ACETYLATED HISTONE</scope>
    <scope>MUTAGENESIS OF ASN-140 AND ASN-433</scope>
</reference>
<reference key="51">
    <citation type="journal article" date="2013" name="J. Med. Chem.">
        <title>Optimization of 3,5-dimethylisoxazole derivatives as potent bromodomain ligands.</title>
        <authorList>
            <person name="Hewings D.S."/>
            <person name="Fedorov O."/>
            <person name="Filippakopoulos P."/>
            <person name="Martin S."/>
            <person name="Picaud S."/>
            <person name="Tumber A."/>
            <person name="Wells C."/>
            <person name="Olcina M.M."/>
            <person name="Freeman K."/>
            <person name="Gill A."/>
            <person name="Ritchie A.J."/>
            <person name="Sheppard D.W."/>
            <person name="Russell A.J."/>
            <person name="Hammond E.M."/>
            <person name="Knapp S."/>
            <person name="Brennan P.E."/>
            <person name="Conway S.J."/>
        </authorList>
    </citation>
    <scope>X-RAY CRYSTALLOGRAPHY (1.72 ANGSTROMS) OF 44-168 IN COMPLEX WITH 3,5-DIMETHYLISOXAZOLE INHIBITOR</scope>
</reference>
<reference key="52">
    <citation type="journal article" date="2013" name="J. Med. Chem.">
        <title>Fragment-based drug discovery of 2-thiazolidinones as inhibitors of the histone reader BRD4 bromodomain.</title>
        <authorList>
            <person name="Zhao L."/>
            <person name="Cao D."/>
            <person name="Chen T."/>
            <person name="Wang Y."/>
            <person name="Miao Z."/>
            <person name="Xu Y."/>
            <person name="Chen W."/>
            <person name="Wang X."/>
            <person name="Li Y."/>
            <person name="Du Z."/>
            <person name="Xiong B."/>
            <person name="Li J."/>
            <person name="Xu C."/>
            <person name="Zhang N."/>
            <person name="He J."/>
            <person name="Shen J."/>
        </authorList>
    </citation>
    <scope>X-RAY CRYSTALLOGRAPHY (1.43 ANGSTROMS) OF 44-167 IN COMPLEX WITH 2-THIAZOLIDINONE INHIBITOR</scope>
</reference>
<reference evidence="44" key="53">
    <citation type="journal article" date="2017" name="Sci. Rep.">
        <title>Structural Mechanism of the Oxygenase JMJD6 Recognition by the Extraterminal (ET) Domain of BRD4.</title>
        <authorList>
            <person name="Konuma T."/>
            <person name="Yu D."/>
            <person name="Zhao C."/>
            <person name="Ju Y."/>
            <person name="Sharma R."/>
            <person name="Ren C."/>
            <person name="Zhang Q."/>
            <person name="Zhou M.M."/>
            <person name="Zeng L."/>
        </authorList>
    </citation>
    <scope>STRUCTURE BY NMR OF 601-683 IN COMPLEX WITH JMJD6</scope>
    <scope>FUNCTION</scope>
    <scope>INTERACTION WITH JMJD6 AND NSD3</scope>
    <scope>MUTAGENESIS OF 651-GLU--GLU-653</scope>
</reference>
<reference evidence="45 46" key="54">
    <citation type="journal article" date="2020" name="Science">
        <title>Selective targeting of BD1 and BD2 of the BET proteins in cancer and immunoinflammation.</title>
        <authorList>
            <person name="Gilan O."/>
            <person name="Rioja I."/>
            <person name="Knezevic K."/>
            <person name="Bell M.J."/>
            <person name="Yeung M.M."/>
            <person name="Harker N.R."/>
            <person name="Lam E.Y.N."/>
            <person name="Chung C.W."/>
            <person name="Bamborough P."/>
            <person name="Petretich M."/>
            <person name="Urh M."/>
            <person name="Atkinson S.J."/>
            <person name="Bassil A.K."/>
            <person name="Roberts E.J."/>
            <person name="Vassiliadis D."/>
            <person name="Burr M.L."/>
            <person name="Preston A.G.S."/>
            <person name="Wellaway C."/>
            <person name="Werner T."/>
            <person name="Gray J.R."/>
            <person name="Michon A.M."/>
            <person name="Gobbetti T."/>
            <person name="Kumar V."/>
            <person name="Soden P.E."/>
            <person name="Haynes A."/>
            <person name="Vappiani J."/>
            <person name="Tough D.F."/>
            <person name="Taylor S."/>
            <person name="Dawson S.J."/>
            <person name="Bantscheff M."/>
            <person name="Lindon M."/>
            <person name="Drewes G."/>
            <person name="Demont E.H."/>
            <person name="Daniels D.L."/>
            <person name="Grandi P."/>
            <person name="Prinjha R.K."/>
            <person name="Dawson M.A."/>
        </authorList>
    </citation>
    <scope>X-RAY CRYSTALLOGRAPHY (1.28 ANGSTROMS) OF 44-168 IN COMPLEX WITH GSK778 AND GSK046</scope>
</reference>
<reference key="55">
    <citation type="journal article" date="2018" name="Nat. Genet.">
        <title>BRD4 interacts with NIPBL and BRD4 is mutated in a Cornelia de Lange-like syndrome.</title>
        <authorList>
            <consortium name="Deciphering Developmental Disorders Study"/>
            <person name="Olley G."/>
            <person name="Ansari M."/>
            <person name="Bengani H."/>
            <person name="Grimes G.R."/>
            <person name="Rhodes J."/>
            <person name="von Kriegsheim A."/>
            <person name="Blatnik A."/>
            <person name="Stewart F.J."/>
            <person name="Wakeling E."/>
            <person name="Carroll N."/>
            <person name="Ross A."/>
            <person name="Park S.M."/>
            <person name="Bickmore W.A."/>
            <person name="Pradeepa M.M."/>
            <person name="FitzPatrick D.R."/>
        </authorList>
    </citation>
    <scope>VARIANT CDLS6 CYS-430</scope>
    <scope>CHARACTERIZATION OF VARIANT CDLS6 CYS-430</scope>
    <scope>INVOLVEMENT IN CDLS6</scope>
    <scope>FUNCTION</scope>
</reference>
<reference key="56">
    <citation type="journal article" date="2018" name="Nat. Genet.">
        <authorList>
            <consortium name="Deciphering Developmental Disorders Study"/>
            <person name="Olley G."/>
            <person name="Ansari M."/>
            <person name="Bengani H."/>
            <person name="Grimes G.R."/>
            <person name="Rhodes J."/>
            <person name="von Kriegsheim A."/>
            <person name="Blatnik A."/>
            <person name="Stewart F.J."/>
            <person name="Wakeling E."/>
            <person name="Carroll N."/>
            <person name="Ross A."/>
            <person name="Park S.M."/>
            <person name="Bickmore W.A."/>
            <person name="Pradeepa M.M."/>
            <person name="FitzPatrick D.R."/>
        </authorList>
    </citation>
    <scope>ERRATUM OF PUBMED:29379197</scope>
</reference>
<reference key="57">
    <citation type="journal article" date="2019" name="Nat. Genet.">
        <authorList>
            <consortium name="Deciphering Developmental Disorders Study"/>
            <person name="Olley G."/>
            <person name="Ansari M."/>
            <person name="Bengani H."/>
            <person name="Grimes G.R."/>
            <person name="Rhodes J."/>
            <person name="von Kriegsheim A."/>
            <person name="Blatnik A."/>
            <person name="Stewart F.J."/>
            <person name="Wakeling E."/>
            <person name="Carroll N."/>
            <person name="Ross A."/>
            <person name="Park S.M."/>
            <person name="Bickmore W.A."/>
            <person name="Pradeepa M.M."/>
            <person name="FitzPatrick D.R."/>
        </authorList>
    </citation>
    <scope>ERRATUM OF PUBMED:29379197</scope>
</reference>
<reference key="58">
    <citation type="journal article" date="2022" name="Clin. Genet.">
        <title>Understanding the new BRD4-related syndrome: Clinical and genomic delineation with an international cohort study.</title>
        <authorList>
            <person name="Jouret G."/>
            <person name="Heide S."/>
            <person name="Sorlin A."/>
            <person name="Faivre L."/>
            <person name="Chantot-Bastaraud S."/>
            <person name="Beneteau C."/>
            <person name="Denis-Musquer M."/>
            <person name="Turnpenny P.D."/>
            <person name="Coutton C."/>
            <person name="Vieville G."/>
            <person name="Thevenon J."/>
            <person name="Larson A."/>
            <person name="Petit F."/>
            <person name="Boudry E."/>
            <person name="Smol T."/>
            <person name="Delobel B."/>
            <person name="Duban-Bedu B."/>
            <person name="Fallerini C."/>
            <person name="Mari F."/>
            <person name="Lo Rizzo C."/>
            <person name="Renieri A."/>
            <person name="Caberg J.H."/>
            <person name="Denomme-Pichon A.S."/>
            <person name="Tran Mau-Them F."/>
            <person name="Maystadt I."/>
            <person name="Courtin T."/>
            <person name="Keren B."/>
            <person name="Mouthon L."/>
            <person name="Charles P."/>
            <person name="Cuinat S."/>
            <person name="Isidor B."/>
            <person name="Theis P."/>
            <person name="Mueller C."/>
            <person name="Kulisic M."/>
            <person name="Tuerkmen S."/>
            <person name="Stieber D."/>
            <person name="Bourgeois D."/>
            <person name="Scalais E."/>
            <person name="Klink B."/>
        </authorList>
    </citation>
    <scope>VARIANTS GLY-145; 235-GLN--PHE-1362 DEL; PRO-295 AND CYS-390</scope>
    <scope>VARIANT CDLS6 CYS-430</scope>
    <scope>INVOLVEMENT IN CDLS6</scope>
</reference>
<organism>
    <name type="scientific">Homo sapiens</name>
    <name type="common">Human</name>
    <dbReference type="NCBI Taxonomy" id="9606"/>
    <lineage>
        <taxon>Eukaryota</taxon>
        <taxon>Metazoa</taxon>
        <taxon>Chordata</taxon>
        <taxon>Craniata</taxon>
        <taxon>Vertebrata</taxon>
        <taxon>Euteleostomi</taxon>
        <taxon>Mammalia</taxon>
        <taxon>Eutheria</taxon>
        <taxon>Euarchontoglires</taxon>
        <taxon>Primates</taxon>
        <taxon>Haplorrhini</taxon>
        <taxon>Catarrhini</taxon>
        <taxon>Hominidae</taxon>
        <taxon>Homo</taxon>
    </lineage>
</organism>
<evidence type="ECO:0000250" key="1">
    <source>
        <dbReference type="UniProtKB" id="Q9ESU6"/>
    </source>
</evidence>
<evidence type="ECO:0000255" key="2">
    <source>
        <dbReference type="PROSITE-ProRule" id="PRU00035"/>
    </source>
</evidence>
<evidence type="ECO:0000255" key="3">
    <source>
        <dbReference type="PROSITE-ProRule" id="PRU00857"/>
    </source>
</evidence>
<evidence type="ECO:0000256" key="4">
    <source>
        <dbReference type="SAM" id="MobiDB-lite"/>
    </source>
</evidence>
<evidence type="ECO:0000269" key="5">
    <source>
    </source>
</evidence>
<evidence type="ECO:0000269" key="6">
    <source>
    </source>
</evidence>
<evidence type="ECO:0000269" key="7">
    <source>
    </source>
</evidence>
<evidence type="ECO:0000269" key="8">
    <source>
    </source>
</evidence>
<evidence type="ECO:0000269" key="9">
    <source>
    </source>
</evidence>
<evidence type="ECO:0000269" key="10">
    <source>
    </source>
</evidence>
<evidence type="ECO:0000269" key="11">
    <source>
    </source>
</evidence>
<evidence type="ECO:0000269" key="12">
    <source>
    </source>
</evidence>
<evidence type="ECO:0000269" key="13">
    <source>
    </source>
</evidence>
<evidence type="ECO:0000269" key="14">
    <source>
    </source>
</evidence>
<evidence type="ECO:0000269" key="15">
    <source>
    </source>
</evidence>
<evidence type="ECO:0000269" key="16">
    <source>
    </source>
</evidence>
<evidence type="ECO:0000269" key="17">
    <source>
    </source>
</evidence>
<evidence type="ECO:0000269" key="18">
    <source>
    </source>
</evidence>
<evidence type="ECO:0000269" key="19">
    <source>
    </source>
</evidence>
<evidence type="ECO:0000269" key="20">
    <source>
    </source>
</evidence>
<evidence type="ECO:0000269" key="21">
    <source>
    </source>
</evidence>
<evidence type="ECO:0000269" key="22">
    <source>
    </source>
</evidence>
<evidence type="ECO:0000269" key="23">
    <source>
    </source>
</evidence>
<evidence type="ECO:0000269" key="24">
    <source>
    </source>
</evidence>
<evidence type="ECO:0000269" key="25">
    <source>
    </source>
</evidence>
<evidence type="ECO:0000269" key="26">
    <source>
    </source>
</evidence>
<evidence type="ECO:0000269" key="27">
    <source>
    </source>
</evidence>
<evidence type="ECO:0000269" key="28">
    <source>
    </source>
</evidence>
<evidence type="ECO:0000269" key="29">
    <source>
    </source>
</evidence>
<evidence type="ECO:0000269" key="30">
    <source>
    </source>
</evidence>
<evidence type="ECO:0000269" key="31">
    <source>
    </source>
</evidence>
<evidence type="ECO:0000269" key="32">
    <source>
    </source>
</evidence>
<evidence type="ECO:0000269" key="33">
    <source>
    </source>
</evidence>
<evidence type="ECO:0000269" key="34">
    <source>
    </source>
</evidence>
<evidence type="ECO:0000269" key="35">
    <source>
    </source>
</evidence>
<evidence type="ECO:0000269" key="36">
    <source>
    </source>
</evidence>
<evidence type="ECO:0000303" key="37">
    <source>
    </source>
</evidence>
<evidence type="ECO:0000303" key="38">
    <source ref="2"/>
</evidence>
<evidence type="ECO:0000305" key="39"/>
<evidence type="ECO:0000305" key="40">
    <source>
    </source>
</evidence>
<evidence type="ECO:0000305" key="41">
    <source>
    </source>
</evidence>
<evidence type="ECO:0000305" key="42">
    <source>
    </source>
</evidence>
<evidence type="ECO:0000305" key="43">
    <source>
    </source>
</evidence>
<evidence type="ECO:0007744" key="44">
    <source>
        <dbReference type="PDB" id="6BNH"/>
    </source>
</evidence>
<evidence type="ECO:0007744" key="45">
    <source>
        <dbReference type="PDB" id="6SWN"/>
    </source>
</evidence>
<evidence type="ECO:0007744" key="46">
    <source>
        <dbReference type="PDB" id="6SWQ"/>
    </source>
</evidence>
<evidence type="ECO:0007744" key="47">
    <source>
    </source>
</evidence>
<evidence type="ECO:0007744" key="48">
    <source>
    </source>
</evidence>
<evidence type="ECO:0007744" key="49">
    <source>
    </source>
</evidence>
<evidence type="ECO:0007744" key="50">
    <source>
    </source>
</evidence>
<evidence type="ECO:0007744" key="51">
    <source>
    </source>
</evidence>
<evidence type="ECO:0007744" key="52">
    <source>
    </source>
</evidence>
<evidence type="ECO:0007744" key="53">
    <source>
    </source>
</evidence>
<evidence type="ECO:0007744" key="54">
    <source>
    </source>
</evidence>
<evidence type="ECO:0007744" key="55">
    <source>
    </source>
</evidence>
<evidence type="ECO:0007744" key="56">
    <source>
    </source>
</evidence>
<evidence type="ECO:0007744" key="57">
    <source>
    </source>
</evidence>
<evidence type="ECO:0007744" key="58">
    <source>
    </source>
</evidence>
<evidence type="ECO:0007829" key="59">
    <source>
        <dbReference type="PDB" id="2I8N"/>
    </source>
</evidence>
<evidence type="ECO:0007829" key="60">
    <source>
        <dbReference type="PDB" id="2LSP"/>
    </source>
</evidence>
<evidence type="ECO:0007829" key="61">
    <source>
        <dbReference type="PDB" id="2MJV"/>
    </source>
</evidence>
<evidence type="ECO:0007829" key="62">
    <source>
        <dbReference type="PDB" id="2N3K"/>
    </source>
</evidence>
<evidence type="ECO:0007829" key="63">
    <source>
        <dbReference type="PDB" id="2NCZ"/>
    </source>
</evidence>
<evidence type="ECO:0007829" key="64">
    <source>
        <dbReference type="PDB" id="2NNU"/>
    </source>
</evidence>
<evidence type="ECO:0007829" key="65">
    <source>
        <dbReference type="PDB" id="4QB3"/>
    </source>
</evidence>
<evidence type="ECO:0007829" key="66">
    <source>
        <dbReference type="PDB" id="4WHW"/>
    </source>
</evidence>
<evidence type="ECO:0007829" key="67">
    <source>
        <dbReference type="PDB" id="4Z93"/>
    </source>
</evidence>
<evidence type="ECO:0007829" key="68">
    <source>
        <dbReference type="PDB" id="5Z1S"/>
    </source>
</evidence>
<evidence type="ECO:0007829" key="69">
    <source>
        <dbReference type="PDB" id="6BNH"/>
    </source>
</evidence>
<evidence type="ECO:0007829" key="70">
    <source>
        <dbReference type="PDB" id="6X7B"/>
    </source>
</evidence>
<evidence type="ECO:0007829" key="71">
    <source>
        <dbReference type="PDB" id="6X7D"/>
    </source>
</evidence>
<evidence type="ECO:0007829" key="72">
    <source>
        <dbReference type="PDB" id="7TUQ"/>
    </source>
</evidence>
<evidence type="ECO:0007829" key="73">
    <source>
        <dbReference type="PDB" id="7USK"/>
    </source>
</evidence>
<sequence>MSAESGPGTRLRNLPVMGDGLETSQMSTTQAQAQPQPANAASTNPPPPETSNPNKPKRQTNQLQYLLRVVLKTLWKHQFAWPFQQPVDAVKLNLPDYYKIIKTPMDMGTIKKRLENNYYWNAQECIQDFNTMFTNCYIYNKPGDDIVLMAEALEKLFLQKINELPTEETEIMIVQAKGRGRGRKETGTAKPGVSTVPNTTQASTPPQTQTPQPNPPPVQATPHPFPAVTPDLIVQTPVMTVVPPQPLQTPPPVPPQPQPPPAPAPQPVQSHPPIIAATPQPVKTKKGVKRKADTTTPTTIDPIHEPPSLPPEPKTTKLGQRRESSRPVKPPKKDVPDSQQHPAPEKSSKVSEQLKCCSGILKEMFAKKHAAYAWPFYKPVDVEALGLHDYCDIIKHPMDMSTIKSKLEAREYRDAQEFGADVRLMFSNCYKYNPPDHEVVAMARKLQDVFEMRFAKMPDEPEEPVVAVSSPAVPPPTKVVAPPSSSDSSSDSSSDSDSSTDDSEEERAQRLAELQEQLKAVHEQLAALSQPQQNKPKKKEKDKKEKKKEKHKRKEEVEENKKSKAKEPPPKKTKKNNSSNSNVSKKEPAPMKSKPPPTYESEEEDKCKPMSYEEKRQLSLDINKLPGEKLGRVVHIIQSREPSLKNSNPDEIEIDFETLKPSTLRELERYVTSCLRKKRKPQAEKVDVIAGSSKMKGFSSSESESSSESSSSDSEDSETEMAPKSKKKGHPGREQKKHHHHHHQQMQQAPAPVPQQPPPPPQQPPPPPPPQQQQQPPPPPPPPSMPQQAAPAMKSSPPPFIATQVPVLEPQLPGSVFDPIGHFTQPILHLPQPELPPHLPQPPEHSTPPHLNQHAVVSPPALHNALPQQPSRPSNRAAALPPKPARPPAVSPALTQTPLLPQPPMAQPPQVLLEDEEPPAPPLTSMQMQLYLQQLQKVQPPTPLLPSVKVQSQPPPPLPPPPHPSVQQQLQQQPPPPPPPQPQPPPQQQHQPPPRPVHLQPMQFSTHIQQPPPPQGQQPPHPPPGQQPPPPQPAKPQQVIQHHHSPRHHKSDPYSTGHLREAPSPLMIHSPQMSQFQSLTHQSPPQQNVQPKKQELRAASVVQPQPLVVVKEEKIHSPIIRSEPFSPSLRPEPPKHPESIKAPVHLPQRPEMKPVDVGRPVIRPPEQNAPPPGAPDKDKQKQEPKTPVAPKKDLKIKNMGSWASLVQKHPTTPSSTAKSSSDSFEQFRRAAREKEEREKALKAQAEHAEKEKERLRQERMRSREDEDALEQARRAHEEARRRQEQQQQQRQEQQQQQQQQAAAVAAAATPQAQSSQPQSMLDQQRELARKREQERRRREAMAATIDMNFQSDLLSIFEENLF</sequence>
<gene>
    <name type="primary">BRD4</name>
    <name type="synonym">HUNK1</name>
</gene>
<keyword id="KW-0002">3D-structure</keyword>
<keyword id="KW-0007">Acetylation</keyword>
<keyword id="KW-0025">Alternative splicing</keyword>
<keyword id="KW-0103">Bromodomain</keyword>
<keyword id="KW-0156">Chromatin regulator</keyword>
<keyword id="KW-0160">Chromosomal rearrangement</keyword>
<keyword id="KW-0158">Chromosome</keyword>
<keyword id="KW-0225">Disease variant</keyword>
<keyword id="KW-0227">DNA damage</keyword>
<keyword id="KW-0945">Host-virus interaction</keyword>
<keyword id="KW-0991">Intellectual disability</keyword>
<keyword id="KW-1017">Isopeptide bond</keyword>
<keyword id="KW-0539">Nucleus</keyword>
<keyword id="KW-0597">Phosphoprotein</keyword>
<keyword id="KW-1267">Proteomics identification</keyword>
<keyword id="KW-1185">Reference proteome</keyword>
<keyword id="KW-0677">Repeat</keyword>
<keyword id="KW-0804">Transcription</keyword>
<keyword id="KW-0805">Transcription regulation</keyword>
<keyword id="KW-0832">Ubl conjugation</keyword>
<feature type="chain" id="PRO_0000211183" description="Bromodomain-containing protein 4">
    <location>
        <begin position="1"/>
        <end position="1362"/>
    </location>
</feature>
<feature type="domain" description="Bromo 1" evidence="2">
    <location>
        <begin position="58"/>
        <end position="164"/>
    </location>
</feature>
<feature type="domain" description="Bromo 2" evidence="2">
    <location>
        <begin position="348"/>
        <end position="457"/>
    </location>
</feature>
<feature type="domain" description="NET" evidence="3">
    <location>
        <begin position="600"/>
        <end position="682"/>
    </location>
</feature>
<feature type="region of interest" description="Disordered" evidence="4">
    <location>
        <begin position="1"/>
        <end position="58"/>
    </location>
</feature>
<feature type="region of interest" description="Disordered" evidence="4">
    <location>
        <begin position="174"/>
        <end position="229"/>
    </location>
</feature>
<feature type="region of interest" description="Disordered" evidence="4">
    <location>
        <begin position="242"/>
        <end position="352"/>
    </location>
</feature>
<feature type="region of interest" description="Disordered" evidence="4">
    <location>
        <begin position="463"/>
        <end position="615"/>
    </location>
</feature>
<feature type="region of interest" description="NPS region">
    <location>
        <begin position="484"/>
        <end position="503"/>
    </location>
</feature>
<feature type="region of interest" description="BID region">
    <location>
        <begin position="524"/>
        <end position="579"/>
    </location>
</feature>
<feature type="region of interest" description="Disordered" evidence="4">
    <location>
        <begin position="674"/>
        <end position="1100"/>
    </location>
</feature>
<feature type="region of interest" description="C-terminal (CTD) region">
    <location>
        <begin position="1047"/>
        <end position="1362"/>
    </location>
</feature>
<feature type="region of interest" description="Disordered" evidence="4">
    <location>
        <begin position="1116"/>
        <end position="1339"/>
    </location>
</feature>
<feature type="compositionally biased region" description="Low complexity" evidence="4">
    <location>
        <begin position="23"/>
        <end position="43"/>
    </location>
</feature>
<feature type="compositionally biased region" description="Low complexity" evidence="4">
    <location>
        <begin position="197"/>
        <end position="211"/>
    </location>
</feature>
<feature type="compositionally biased region" description="Pro residues" evidence="4">
    <location>
        <begin position="212"/>
        <end position="227"/>
    </location>
</feature>
<feature type="compositionally biased region" description="Pro residues" evidence="4">
    <location>
        <begin position="243"/>
        <end position="266"/>
    </location>
</feature>
<feature type="compositionally biased region" description="Basic and acidic residues" evidence="4">
    <location>
        <begin position="320"/>
        <end position="336"/>
    </location>
</feature>
<feature type="compositionally biased region" description="Low complexity" evidence="4">
    <location>
        <begin position="478"/>
        <end position="497"/>
    </location>
</feature>
<feature type="compositionally biased region" description="Basic residues" evidence="4">
    <location>
        <begin position="535"/>
        <end position="553"/>
    </location>
</feature>
<feature type="compositionally biased region" description="Basic and acidic residues" evidence="4">
    <location>
        <begin position="554"/>
        <end position="570"/>
    </location>
</feature>
<feature type="compositionally biased region" description="Basic and acidic residues" evidence="4">
    <location>
        <begin position="605"/>
        <end position="615"/>
    </location>
</feature>
<feature type="compositionally biased region" description="Low complexity" evidence="4">
    <location>
        <begin position="699"/>
        <end position="712"/>
    </location>
</feature>
<feature type="compositionally biased region" description="Basic residues" evidence="4">
    <location>
        <begin position="724"/>
        <end position="744"/>
    </location>
</feature>
<feature type="compositionally biased region" description="Pro residues" evidence="4">
    <location>
        <begin position="751"/>
        <end position="785"/>
    </location>
</feature>
<feature type="compositionally biased region" description="Pro residues" evidence="4">
    <location>
        <begin position="833"/>
        <end position="846"/>
    </location>
</feature>
<feature type="compositionally biased region" description="Pro residues" evidence="4">
    <location>
        <begin position="881"/>
        <end position="890"/>
    </location>
</feature>
<feature type="compositionally biased region" description="Low complexity" evidence="4">
    <location>
        <begin position="926"/>
        <end position="936"/>
    </location>
</feature>
<feature type="compositionally biased region" description="Pro residues" evidence="4">
    <location>
        <begin position="953"/>
        <end position="964"/>
    </location>
</feature>
<feature type="compositionally biased region" description="Pro residues" evidence="4">
    <location>
        <begin position="973"/>
        <end position="996"/>
    </location>
</feature>
<feature type="compositionally biased region" description="Pro residues" evidence="4">
    <location>
        <begin position="1010"/>
        <end position="1034"/>
    </location>
</feature>
<feature type="compositionally biased region" description="Basic residues" evidence="4">
    <location>
        <begin position="1041"/>
        <end position="1050"/>
    </location>
</feature>
<feature type="compositionally biased region" description="Polar residues" evidence="4">
    <location>
        <begin position="1071"/>
        <end position="1091"/>
    </location>
</feature>
<feature type="compositionally biased region" description="Basic and acidic residues" evidence="4">
    <location>
        <begin position="1175"/>
        <end position="1196"/>
    </location>
</feature>
<feature type="compositionally biased region" description="Low complexity" evidence="4">
    <location>
        <begin position="1211"/>
        <end position="1223"/>
    </location>
</feature>
<feature type="compositionally biased region" description="Basic and acidic residues" evidence="4">
    <location>
        <begin position="1225"/>
        <end position="1284"/>
    </location>
</feature>
<feature type="compositionally biased region" description="Low complexity" evidence="4">
    <location>
        <begin position="1285"/>
        <end position="1313"/>
    </location>
</feature>
<feature type="compositionally biased region" description="Basic and acidic residues" evidence="4">
    <location>
        <begin position="1323"/>
        <end position="1339"/>
    </location>
</feature>
<feature type="site" description="Acetylated histone binding" evidence="21">
    <location>
        <position position="140"/>
    </location>
</feature>
<feature type="site" description="Acetylated histone binding" evidence="21">
    <location>
        <position position="433"/>
    </location>
</feature>
<feature type="site" description="Breakpoint for translocation to form BDR4-NUTM1 fusion protein">
    <location>
        <begin position="719"/>
        <end position="720"/>
    </location>
</feature>
<feature type="modified residue" description="Phosphoserine" evidence="48 53">
    <location>
        <position position="470"/>
    </location>
</feature>
<feature type="modified residue" description="Phosphoserine; by CK2" evidence="24">
    <location>
        <position position="484"/>
    </location>
</feature>
<feature type="modified residue" description="Phosphoserine; by CK2" evidence="24">
    <location>
        <position position="488"/>
    </location>
</feature>
<feature type="modified residue" description="Phosphoserine; by CK2" evidence="24">
    <location>
        <position position="492"/>
    </location>
</feature>
<feature type="modified residue" description="Phosphoserine; by CK2" evidence="24">
    <location>
        <position position="494"/>
    </location>
</feature>
<feature type="modified residue" description="Phosphoserine; by CK2" evidence="24">
    <location>
        <position position="498"/>
    </location>
</feature>
<feature type="modified residue" description="Phosphoserine; by CK2" evidence="24">
    <location>
        <position position="499"/>
    </location>
</feature>
<feature type="modified residue" description="Phosphoserine; by CK2" evidence="24">
    <location>
        <position position="503"/>
    </location>
</feature>
<feature type="modified residue" description="Phosphoserine" evidence="50 51 52">
    <location>
        <position position="601"/>
    </location>
</feature>
<feature type="modified residue" description="N6-acetyllysine; alternate" evidence="49">
    <location>
        <position position="1111"/>
    </location>
</feature>
<feature type="modified residue" description="Phosphoserine" evidence="47 50 51 53">
    <location>
        <position position="1117"/>
    </location>
</feature>
<feature type="modified residue" description="Phosphoserine" evidence="52">
    <location>
        <position position="1126"/>
    </location>
</feature>
<feature type="modified residue" description="Phosphoserine" evidence="52">
    <location>
        <position position="1201"/>
    </location>
</feature>
<feature type="modified residue" description="Phosphoserine" evidence="52">
    <location>
        <position position="1204"/>
    </location>
</feature>
<feature type="cross-link" description="Glycyl lysine isopeptide (Lys-Gly) (interchain with G-Cter in SUMO2)" evidence="58">
    <location>
        <position position="99"/>
    </location>
</feature>
<feature type="cross-link" description="Glycyl lysine isopeptide (Lys-Gly) (interchain with G-Cter in SUMO2)" evidence="58">
    <location>
        <position position="585"/>
    </location>
</feature>
<feature type="cross-link" description="Glycyl lysine isopeptide (Lys-Gly) (interchain with G-Cter in SUMO2)" evidence="58">
    <location>
        <position position="645"/>
    </location>
</feature>
<feature type="cross-link" description="Glycyl lysine isopeptide (Lys-Gly) (interchain with G-Cter in SUMO2)" evidence="55 58">
    <location>
        <position position="694"/>
    </location>
</feature>
<feature type="cross-link" description="Glycyl lysine isopeptide (Lys-Gly) (interchain with G-Cter in SUMO2)" evidence="58">
    <location>
        <position position="1050"/>
    </location>
</feature>
<feature type="cross-link" description="Glycyl lysine isopeptide (Lys-Gly) (interchain with G-Cter in SUMO1); alternate" evidence="54">
    <location>
        <position position="1111"/>
    </location>
</feature>
<feature type="cross-link" description="Glycyl lysine isopeptide (Lys-Gly) (interchain with G-Cter in SUMO2); alternate" evidence="54 55 56 57 58">
    <location>
        <position position="1111"/>
    </location>
</feature>
<feature type="cross-link" description="Glycyl lysine isopeptide (Lys-Gly) (interchain with G-Cter in SUMO2)" evidence="58">
    <location>
        <position position="1197"/>
    </location>
</feature>
<feature type="splice variant" id="VSP_047671" description="In isoform B." evidence="37">
    <original>EMAPKSKKKGHPGREQKKHHHHHHQQMQQAPAPVPQQPPPPPQQPPPPPPPQQQQQPPPPPPPPSMPQQAAPAMKSSPPPFIATQVPVLEPQLPGSVFDPIGHFTQPILHLPQPELPPHLPQPPEHSTPPHLNQHAVVSPPALHNALPQQPSRPSNRAAALPPKPARPPAVSPALTQTPLLPQPPMAQPPQVLLEDEEPPAPPLTSMQMQLYLQQLQKVQPPTPLLPSVKVQSQPPPPLPPPPHPSVQQQLQQQPPPPPPPQPQPPPQQQHQPPPRPVHLQPMQFSTHIQQPPPPQGQQPPHPPPGQQPPPPQPAKPQQVIQHHHSPRHHKSDPYSTGHLREAPSPLMIHSPQMSQFQSLTHQSPPQQNVQPKKQELRAASVVQPQPLVVVKEEKIHSPIIRSEPFSPSLRPEPPKHPESIKAPVHLPQRPEMKPVDVGRPVIRPPEQNAPPPGAPDKDKQKQEPKTPVAPKKDLKIKNMGSWASLVQKHPTTPSSTAKSSSDSFEQFRRAAREKEEREKALKAQAEHAEKEKERLRQERMRSREDEDALEQARRAHEEARRRQEQQQQQRQEQQQQQQQQAAAVAAAATPQAQSSQPQSMLDQQRELARKREQERRRREAMAATIDMNFQSDLLSIFEENLF</original>
    <variation>AFCTSGDFVSPGPSPYHSHVQCGRFREMLRWFLVDVEQTAAGQPHRQSAAGPAITWAPAIAYPSPECARCCVGCS</variation>
    <location>
        <begin position="720"/>
        <end position="1362"/>
    </location>
</feature>
<feature type="splice variant" id="VSP_010902" description="In isoform C." evidence="38">
    <original>EMA</original>
    <variation>GPA</variation>
    <location>
        <begin position="720"/>
        <end position="722"/>
    </location>
</feature>
<feature type="splice variant" id="VSP_010903" description="In isoform C." evidence="38">
    <location>
        <begin position="723"/>
        <end position="1362"/>
    </location>
</feature>
<feature type="sequence variant" id="VAR_041919" description="In dbSNP:rs35177876." evidence="11">
    <original>P</original>
    <variation>S</variation>
    <location>
        <position position="37"/>
    </location>
</feature>
<feature type="sequence variant" id="VAR_089189" description="Found in a patient with a neurodevelopmental syndrome; uncertain significance." evidence="36">
    <original>D</original>
    <variation>G</variation>
    <location>
        <position position="145"/>
    </location>
</feature>
<feature type="sequence variant" id="VAR_089190" description="Found in a patient with a neurodevelopmental syndrome; likely pathogenic." evidence="36">
    <location>
        <begin position="235"/>
        <end position="1362"/>
    </location>
</feature>
<feature type="sequence variant" id="VAR_089191" description="Found in a patient with a neurodevelopmental syndrome; uncertain significance." evidence="36">
    <original>T</original>
    <variation>P</variation>
    <location>
        <position position="295"/>
    </location>
</feature>
<feature type="sequence variant" id="VAR_041920" description="In dbSNP:rs55805532." evidence="11">
    <original>A</original>
    <variation>G</variation>
    <location>
        <position position="371"/>
    </location>
</feature>
<feature type="sequence variant" id="VAR_089192" description="Found in a patient with a neurodevelopmental syndrome; uncertain significance." evidence="36">
    <original>Y</original>
    <variation>C</variation>
    <location>
        <position position="390"/>
    </location>
</feature>
<feature type="sequence variant" id="VAR_089193" description="In CDLS6; likely pathogenic; reduced acetylated histone binding." evidence="33 36">
    <original>Y</original>
    <variation>C</variation>
    <location>
        <position position="430"/>
    </location>
</feature>
<feature type="sequence variant" id="VAR_041921" description="In dbSNP:rs55970906." evidence="11">
    <original>S</original>
    <variation>N</variation>
    <location>
        <position position="563"/>
    </location>
</feature>
<feature type="sequence variant" id="VAR_041922" description="In dbSNP:rs34362023." evidence="11">
    <original>T</original>
    <variation>S</variation>
    <location>
        <position position="598"/>
    </location>
</feature>
<feature type="sequence variant" id="VAR_041923" description="In dbSNP:rs35824241." evidence="11">
    <original>R</original>
    <variation>H</variation>
    <location>
        <position position="669"/>
    </location>
</feature>
<feature type="sequence variant" id="VAR_048427" description="In dbSNP:rs35676845.">
    <original>R</original>
    <variation>H</variation>
    <location>
        <position position="1097"/>
    </location>
</feature>
<feature type="mutagenesis site" description="Abolishes binding to acetylated histones." evidence="21 28">
    <original>N</original>
    <variation>A</variation>
    <location>
        <position position="140"/>
    </location>
</feature>
<feature type="mutagenesis site" description="Abolishes binding to acetylated histones." evidence="21">
    <original>N</original>
    <variation>A</variation>
    <location>
        <position position="433"/>
    </location>
</feature>
<feature type="mutagenesis site" description="Impaired phosphorylation by CK2 and binding to acetylated histones." evidence="24">
    <original>SSS</original>
    <variation>ASA</variation>
    <location>
        <begin position="492"/>
        <end position="494"/>
    </location>
</feature>
<feature type="mutagenesis site" description="Impaired phosphorylation by CK2 and binding to acetylated histones." evidence="24">
    <original>SST</original>
    <variation>AAA</variation>
    <location>
        <begin position="498"/>
        <end position="500"/>
    </location>
</feature>
<feature type="mutagenesis site" description="Impaired phosphorylation by CK2 and binding to acetylated histones." evidence="24">
    <original>S</original>
    <variation>A</variation>
    <location>
        <position position="503"/>
    </location>
</feature>
<feature type="mutagenesis site" description="Decreases interaction with JMJD6 and NSD3. No effect on interaction with histone 4 acetylated." evidence="31">
    <original>EIE</original>
    <variation>AIA</variation>
    <location>
        <begin position="651"/>
        <end position="653"/>
    </location>
</feature>
<feature type="strand" evidence="66">
    <location>
        <begin position="53"/>
        <end position="55"/>
    </location>
</feature>
<feature type="strand" evidence="70">
    <location>
        <begin position="57"/>
        <end position="60"/>
    </location>
</feature>
<feature type="helix" evidence="65">
    <location>
        <begin position="61"/>
        <end position="68"/>
    </location>
</feature>
<feature type="helix" evidence="65">
    <location>
        <begin position="70"/>
        <end position="75"/>
    </location>
</feature>
<feature type="helix" evidence="72">
    <location>
        <begin position="78"/>
        <end position="80"/>
    </location>
</feature>
<feature type="helix" evidence="65">
    <location>
        <begin position="81"/>
        <end position="83"/>
    </location>
</feature>
<feature type="strand" evidence="68">
    <location>
        <begin position="84"/>
        <end position="86"/>
    </location>
</feature>
<feature type="turn" evidence="65">
    <location>
        <begin position="89"/>
        <end position="93"/>
    </location>
</feature>
<feature type="helix" evidence="65">
    <location>
        <begin position="97"/>
        <end position="100"/>
    </location>
</feature>
<feature type="helix" evidence="65">
    <location>
        <begin position="107"/>
        <end position="115"/>
    </location>
</feature>
<feature type="strand" evidence="71">
    <location>
        <begin position="119"/>
        <end position="121"/>
    </location>
</feature>
<feature type="helix" evidence="65">
    <location>
        <begin position="122"/>
        <end position="139"/>
    </location>
</feature>
<feature type="helix" evidence="65">
    <location>
        <begin position="145"/>
        <end position="161"/>
    </location>
</feature>
<feature type="strand" evidence="70">
    <location>
        <begin position="170"/>
        <end position="174"/>
    </location>
</feature>
<feature type="strand" evidence="60">
    <location>
        <begin position="342"/>
        <end position="346"/>
    </location>
</feature>
<feature type="helix" evidence="73">
    <location>
        <begin position="352"/>
        <end position="364"/>
    </location>
</feature>
<feature type="helix" evidence="73">
    <location>
        <begin position="367"/>
        <end position="369"/>
    </location>
</feature>
<feature type="helix" evidence="73">
    <location>
        <begin position="370"/>
        <end position="373"/>
    </location>
</feature>
<feature type="helix" evidence="73">
    <location>
        <begin position="374"/>
        <end position="376"/>
    </location>
</feature>
<feature type="helix" evidence="67">
    <location>
        <begin position="382"/>
        <end position="385"/>
    </location>
</feature>
<feature type="helix" evidence="73">
    <location>
        <begin position="390"/>
        <end position="393"/>
    </location>
</feature>
<feature type="helix" evidence="73">
    <location>
        <begin position="400"/>
        <end position="408"/>
    </location>
</feature>
<feature type="strand" evidence="61">
    <location>
        <begin position="412"/>
        <end position="414"/>
    </location>
</feature>
<feature type="helix" evidence="73">
    <location>
        <begin position="415"/>
        <end position="432"/>
    </location>
</feature>
<feature type="strand" evidence="59">
    <location>
        <begin position="435"/>
        <end position="437"/>
    </location>
</feature>
<feature type="helix" evidence="73">
    <location>
        <begin position="438"/>
        <end position="455"/>
    </location>
</feature>
<feature type="helix" evidence="63">
    <location>
        <begin position="602"/>
        <end position="605"/>
    </location>
</feature>
<feature type="helix" evidence="62">
    <location>
        <begin position="612"/>
        <end position="624"/>
    </location>
</feature>
<feature type="helix" evidence="62">
    <location>
        <begin position="627"/>
        <end position="640"/>
    </location>
</feature>
<feature type="helix" evidence="63">
    <location>
        <begin position="642"/>
        <end position="644"/>
    </location>
</feature>
<feature type="strand" evidence="62">
    <location>
        <begin position="651"/>
        <end position="655"/>
    </location>
</feature>
<feature type="turn" evidence="62">
    <location>
        <begin position="656"/>
        <end position="658"/>
    </location>
</feature>
<feature type="helix" evidence="62">
    <location>
        <begin position="661"/>
        <end position="675"/>
    </location>
</feature>
<feature type="turn" evidence="69">
    <location>
        <begin position="676"/>
        <end position="678"/>
    </location>
</feature>
<feature type="helix" evidence="64">
    <location>
        <begin position="1345"/>
        <end position="1354"/>
    </location>
</feature>
<feature type="turn" evidence="64">
    <location>
        <begin position="1355"/>
        <end position="1357"/>
    </location>
</feature>
<comment type="function">
    <text evidence="1 7 8 13 14 20 22 23 24 27 29 31">Chromatin reader protein that recognizes and binds acetylated histones and plays a key role in transmission of epigenetic memory across cell divisions and transcription regulation (PubMed:20871596, PubMed:23086925, PubMed:23317504, PubMed:29176719, PubMed:29379197). Remains associated with acetylated chromatin throughout the entire cell cycle and provides epigenetic memory for postmitotic G1 gene transcription by preserving acetylated chromatin status and maintaining high-order chromatin structure (PubMed:22334664, PubMed:23317504, PubMed:23589332). During interphase, plays a key role in regulating the transcription of signal-inducible genes by associating with the P-TEFb complex and recruiting it to promoters (PubMed:16109376, PubMed:16109377, PubMed:19596240, PubMed:23589332, PubMed:24360279). Also recruits P-TEFb complex to distal enhancers, so called anti-pause enhancers in collaboration with JMJD6 (PubMed:16109376, PubMed:16109377, PubMed:19596240, PubMed:23589332, PubMed:24360279). BRD4 and JMJD6 are required to form the transcriptionally active P-TEFb complex by displacing negative regulators such as HEXIM1 and 7SKsnRNA complex from P-TEFb, thereby transforming it into an active form that can then phosphorylate the C-terminal domain (CTD) of RNA polymerase II (PubMed:16109376, PubMed:16109377, PubMed:19596240, PubMed:23589332, PubMed:24360279). Regulates differentiation of naive CD4(+) T-cells into T-helper Th17 by promoting recruitment of P-TEFb to promoters (By similarity). Promotes phosphorylation of 'Ser-2' of the C-terminal domain (CTD) of RNA polymerase II (PubMed:23086925). According to a report, directly acts as an atypical protein kinase and mediates phosphorylation of 'Ser-2' of the C-terminal domain (CTD) of RNA polymerase II; these data however need additional evidences in vivo (PubMed:22509028). In addition to acetylated histones, also recognizes and binds acetylated RELA, leading to further recruitment of the P-TEFb complex and subsequent activation of NF-kappa-B (PubMed:19103749). Also acts as a regulator of p53/TP53-mediated transcription: following phosphorylation by CK2, recruited to p53/TP53 specific target promoters (PubMed:23317504).</text>
</comment>
<comment type="function">
    <molecule>Isoform B</molecule>
    <text evidence="28">Acts as a chromatin insulator in the DNA damage response pathway. Inhibits DNA damage response signaling by recruiting the condensin-2 complex to acetylated histones, leading to chromatin structure remodeling, insulating the region from DNA damage response by limiting spreading of histone H2AX/H2A.x phosphorylation.</text>
</comment>
<comment type="activity regulation">
    <text evidence="15 34 35">Inhibited by JQ1, a thieno-triazolo-1,4-diazepine derivative, which specifically inhibits members of the BET family (BRD2, BRD3 and BRD4) (PubMed:20871596). The first bromo domain is inhibited by GSK778 (iBET-BD1), which specifically inhibits the first bromo domain of members of the BET family (BRD2, BRD3 and BRD4) (PubMed:32193360). The second bromo domain is inhibited by ABBV-744, which specifically inhibits the second bromo domain of members of the BET family (BRD2, BRD3 and BRD4) (PubMed:31969702). The second bromo domain is inhibited by GSK046 (iBET-BD2), which specifically inhibits the second bromo domain of members of the BET family (BRD2, BRD3 and BRD4) (PubMed:32193360).</text>
</comment>
<comment type="subunit">
    <text evidence="1 7 8 13 16 24 29 32">Interacts with p53/TP53; the interaction is direct (PubMed:23317504). Interacts (via CTD region) with CDK9 and CCNT1, acting as an associated component of P-TEFb complex (PubMed:16109376, PubMed:16109377, PubMed:23317504, PubMed:24360279). Interacts with RELA (when acetylated at 'Lys-310') (PubMed:19103749). Interacts (via NET domain) with NSD3, CHD4, BICRA and ATAD5 (PubMed:21555454, PubMed:29176719). The interaction with BICRA bridges BRD4 to the GBAF complex (PubMed:16109376, PubMed:16109377, PubMed:19103749, PubMed:21555454, PubMed:23317504, PubMed:29374058). Interacts (via NET domain) with JMJD6 (via JmjC and N-terminal domains); the interaction is stronger in presence of ssRNA and recruits JMJD6 on distal enhancers (PubMed:21555454, PubMed:24360279, PubMed:29176719). Interacts with NSD3 (PubMed:29176719). Interacts with NIPBL (By similarity).</text>
</comment>
<comment type="subunit">
    <molecule>Isoform B</molecule>
    <text evidence="28">Interacts with SMC2 (PubMed:23728299). Interacts with NCAPD3 (PubMed:23728299).</text>
</comment>
<comment type="subunit">
    <text evidence="10">(Microbial infection) Interacts with bovine papillomavirus type 1 regulatory protein E2. This interactions may serve for the tethering of viral genomes to host mitotic chromosomes allowing successful partitioning of the viral genome during cell division.</text>
</comment>
<comment type="subunit">
    <text evidence="12">(Microbial infection) Interacts with Epstein-Barr virus (EBV) protein EBNA1; this interaction facilitates transcriptional activation by EBNA1.</text>
</comment>
<comment type="subunit">
    <text evidence="9">(Microbial infection) Interacts with human herpes virus-8 (HHV-8) protein LANA.</text>
</comment>
<comment type="interaction">
    <interactant intactId="EBI-723869">
        <id>O60885</id>
    </interactant>
    <interactant intactId="EBI-6658203">
        <id>Q86YD7</id>
        <label>FAM90A1</label>
    </interactant>
    <organismsDiffer>false</organismsDiffer>
    <experiments>7</experiments>
</comment>
<comment type="interaction">
    <interactant intactId="EBI-723869">
        <id>O60885</id>
    </interactant>
    <interactant intactId="EBI-401755">
        <id>P62993</id>
        <label>GRB2</label>
    </interactant>
    <organismsDiffer>false</organismsDiffer>
    <experiments>2</experiments>
</comment>
<comment type="interaction">
    <interactant intactId="EBI-723869">
        <id>O60885</id>
    </interactant>
    <interactant intactId="EBI-8464037">
        <id>Q6NYC1</id>
        <label>JMJD6</label>
    </interactant>
    <organismsDiffer>false</organismsDiffer>
    <experiments>11</experiments>
</comment>
<comment type="interaction">
    <interactant intactId="EBI-723869">
        <id>O60885</id>
    </interactant>
    <interactant intactId="EBI-389883">
        <id>P16333</id>
        <label>NCK1</label>
    </interactant>
    <organismsDiffer>false</organismsDiffer>
    <experiments>2</experiments>
</comment>
<comment type="interaction">
    <interactant intactId="EBI-723869">
        <id>O60885</id>
    </interactant>
    <interactant intactId="EBI-73886">
        <id>Q04206</id>
        <label>RELA</label>
    </interactant>
    <organismsDiffer>false</organismsDiffer>
    <experiments>8</experiments>
</comment>
<comment type="interaction">
    <interactant intactId="EBI-723869">
        <id>O60885</id>
    </interactant>
    <interactant intactId="EBI-12047907">
        <id>A6NLX3</id>
        <label>SPDYE4</label>
    </interactant>
    <organismsDiffer>false</organismsDiffer>
    <experiments>4</experiments>
</comment>
<comment type="interaction">
    <interactant intactId="EBI-723869">
        <id>O60885</id>
    </interactant>
    <interactant intactId="EBI-1797287">
        <id>Q15672</id>
        <label>TWIST1</label>
    </interactant>
    <organismsDiffer>false</organismsDiffer>
    <experiments>7</experiments>
</comment>
<comment type="interaction">
    <interactant intactId="EBI-723869">
        <id>O60885</id>
    </interactant>
    <interactant intactId="EBI-1779322">
        <id>P03120</id>
        <label>E2</label>
    </interactant>
    <organismsDiffer>true</organismsDiffer>
    <experiments>4</experiments>
</comment>
<comment type="interaction">
    <interactant intactId="EBI-723869">
        <id>O60885</id>
    </interactant>
    <interactant intactId="EBI-7010556">
        <id>P04015</id>
        <label>E2</label>
    </interactant>
    <organismsDiffer>true</organismsDiffer>
    <experiments>3</experiments>
</comment>
<comment type="interaction">
    <interactant intactId="EBI-723869">
        <id>O60885</id>
    </interactant>
    <interactant intactId="EBI-7010629">
        <id>P06790</id>
        <label>E2</label>
    </interactant>
    <organismsDiffer>true</organismsDiffer>
    <experiments>2</experiments>
</comment>
<comment type="interaction">
    <interactant intactId="EBI-723869">
        <id>O60885</id>
    </interactant>
    <interactant intactId="EBI-7010529">
        <id>P17383</id>
        <label>E2</label>
    </interactant>
    <organismsDiffer>true</organismsDiffer>
    <experiments>2</experiments>
</comment>
<comment type="interaction">
    <interactant intactId="EBI-9345088">
        <id>O60885-1</id>
    </interactant>
    <interactant intactId="EBI-608057">
        <id>P10275</id>
        <label>AR</label>
    </interactant>
    <organismsDiffer>false</organismsDiffer>
    <experiments>6</experiments>
</comment>
<comment type="interaction">
    <interactant intactId="EBI-9345088">
        <id>O60885-1</id>
    </interactant>
    <interactant intactId="EBI-2479671">
        <id>O60563</id>
        <label>CCNT1</label>
    </interactant>
    <organismsDiffer>false</organismsDiffer>
    <experiments>6</experiments>
</comment>
<comment type="interaction">
    <interactant intactId="EBI-9345088">
        <id>O60885-1</id>
    </interactant>
    <interactant intactId="EBI-1383449">
        <id>P50750</id>
        <label>CDK9</label>
    </interactant>
    <organismsDiffer>false</organismsDiffer>
    <experiments>9</experiments>
</comment>
<comment type="interaction">
    <interactant intactId="EBI-9345088">
        <id>O60885-1</id>
    </interactant>
    <interactant intactId="EBI-302023">
        <id>P62805</id>
        <label>H4C9</label>
    </interactant>
    <organismsDiffer>false</organismsDiffer>
    <experiments>10</experiments>
</comment>
<comment type="interaction">
    <interactant intactId="EBI-9345088">
        <id>O60885-1</id>
    </interactant>
    <interactant intactId="EBI-1797287">
        <id>Q15672</id>
        <label>TWIST1</label>
    </interactant>
    <organismsDiffer>false</organismsDiffer>
    <experiments>9</experiments>
</comment>
<comment type="interaction">
    <interactant intactId="EBI-9345088">
        <id>O60885-1</id>
    </interactant>
    <interactant intactId="EBI-1779322">
        <id>P03120</id>
        <label>E2</label>
    </interactant>
    <organismsDiffer>true</organismsDiffer>
    <experiments>2</experiments>
</comment>
<comment type="interaction">
    <interactant intactId="EBI-9345088">
        <id>O60885-1</id>
    </interactant>
    <interactant intactId="EBI-7028618">
        <id>P03122</id>
        <label>E2</label>
    </interactant>
    <organismsDiffer>true</organismsDiffer>
    <experiments>2</experiments>
</comment>
<comment type="subcellular location">
    <subcellularLocation>
        <location evidence="7 30">Nucleus</location>
    </subcellularLocation>
    <subcellularLocation>
        <location evidence="7 17">Chromosome</location>
    </subcellularLocation>
    <text evidence="7 17">Associates with acetylated chromatin (PubMed:16109376, PubMed:21890894). Released from chromatin upon deacetylation of histones that can be triggered by different signals such as activation of the JNK pathway or nocodazole treatment (PubMed:16109376, PubMed:21890894). Preferentially localizes to mitotic chromosomes, while it does not localize to meiotic chromosomes (PubMed:16109376, PubMed:21890894).</text>
</comment>
<comment type="subcellular location">
    <molecule>Isoform B</molecule>
    <subcellularLocation>
        <location evidence="28">Chromosome</location>
    </subcellularLocation>
</comment>
<comment type="alternative products">
    <event type="alternative splicing"/>
    <isoform>
        <id>O60885-1</id>
        <name>A</name>
        <name>Brd4L</name>
        <name>Long</name>
        <sequence type="displayed"/>
    </isoform>
    <isoform>
        <id>O60885-2</id>
        <name>C</name>
        <name>Brd4S</name>
        <name>Short</name>
        <sequence type="described" ref="VSP_010902 VSP_010903"/>
    </isoform>
    <isoform>
        <id>O60885-3</id>
        <name>B</name>
        <sequence type="described" ref="VSP_047671"/>
    </isoform>
</comment>
<comment type="tissue specificity">
    <text evidence="6">Ubiquitously expressed.</text>
</comment>
<comment type="domain">
    <text evidence="16">The NET domain mediates interaction with a number of chromatin proteins involved in transcription regulation (NSD3, JMJD6, CHD4, GLTSCR1 and ATAD5).</text>
</comment>
<comment type="domain">
    <text evidence="7 8 20">The C-terminal (CTD) region mediates interaction and recruitment of CDK9 and CCNT1 subunits of the P-TEFb complex (PubMed:16109376, PubMed:16109377). It is also required for maintenance of higher-order chromatin structure (PubMed:22334664).</text>
</comment>
<comment type="domain">
    <text evidence="15 18 19 21 25 26">The 2 bromo domains mediate specific binding to acetylated histones via Asn-140 and Asn-433, respectively (PubMed:20871596). The exact combination of modified histone tails required to recruit BRD4 to target genes is still unclear. The first bromo domain has high affinity for acetylated histone H4 tail, whereas the second bromo domain recognizes multiply acetylated marks in histone H3 (PubMed:22464331). A number of specific inhibitors bind competitively to acetyl-lysine-binding residues Asn-140 and Asn-433, promoting removal from acetylated histones. Many of these inhibitors are benzodiazepine derivatives (PubMed:22136404, PubMed:22137933, PubMed:23517011, PubMed:23530754).</text>
</comment>
<comment type="domain">
    <molecule>Isoform B</molecule>
    <text evidence="43">Does not contain the C-terminal (CTD) region required to recruit the P-TEFb complex.</text>
</comment>
<comment type="PTM">
    <text evidence="24">Phosphorylation by CK2 disrupt the intramolecular binding between the bromo domain 2 and the NPS region and promotes binding between the NPS and the BID regions, leading to activate the protein and promote binding to acetylated histones. In absence of phosphorylation, BRD4 does not localize to p53/TP53 target gene promoters, phosphorylation promoting recruitment to p53/TP53 target promoters.</text>
</comment>
<comment type="disease" evidence="33 36">
    <disease id="DI-06806">
        <name>Cornelia de Lange syndrome 6</name>
        <acronym>CDLS6</acronym>
        <description>A form of Cornelia de Lange syndrome, a clinically heterogeneous developmental disorder associated with malformations affecting multiple systems. It is characterized by facial dysmorphisms, abnormal hands and feet, growth delay, cognitive retardation, hirsutism, gastroesophageal dysfunction and cardiac, ophthalmologic and genitourinary anomalies. CDLS6 inheritance is autosomal dominant.</description>
        <dbReference type="MIM" id="620568"/>
    </disease>
    <text>The disease is caused by variants affecting the gene represented in this entry.</text>
</comment>
<comment type="disease">
    <text evidence="5 6">A chromosomal aberration involving BRD4 is found in a rare, aggressive, and lethal carcinoma arising in midline organs of young people. Translocation t(15;19)(q14;p13) with NUTM1 which produces a BRD4-NUTM1 fusion protein.</text>
</comment>
<comment type="miscellaneous">
    <text evidence="35 40 41 42">Some specific inhibitors of BRD4 that prevent binding to acetylated histones by binding Asn-140 and Asn-433 are promising therapeutic molecules for the treatment of leukemias. JQ1, a thieno-triazolo-1,4-diazepine derivative, and I-BET, a benzodiazepine derivative, have been tested on tumors with success (Probable) (PubMed:20871596, PubMed:21068722, PubMed:21964340). Treatment with GSK1210151A (I-BET151, a I-BET derivative) has strong effets on mixed lineage leukemia and promotes myeloid differentiation and leukemia stem-cell depletion (Probable) (PubMed:21964340). The second bromo domain is inhibited by GSK046 (iBET-BD2), which specifically inhibits the second bromo domain of members of the BET family (BRD2, BRD3 and BRD4) (PubMed:32193360).</text>
</comment>
<comment type="similarity">
    <text evidence="39">Belongs to the BET family.</text>
</comment>
<comment type="sequence caution" evidence="39">
    <conflict type="erroneous initiation">
        <sequence resource="EMBL-CDS" id="AAC27978"/>
    </conflict>
    <text>Extended N-terminus.</text>
</comment>
<comment type="online information" name="Atlas of Genetics and Cytogenetics in Oncology and Haematology">
    <link uri="https://atlasgeneticsoncology.org/gene/837/brd4"/>
</comment>